<comment type="function">
    <text evidence="3 5 7 9 11 26 31 32 35 36 37 38 44 48 49 50 51">Serine/threonine kinase which acts as an essential component of the MAP kinase signal transduction pathway. MAPK14 is one of the four p38 MAPKs which play an important role in the cascades of cellular responses evoked by extracellular stimuli such as pro-inflammatory cytokines or physical stress leading to direct activation of transcription factors. Accordingly, p38 MAPKs phosphorylate a broad range of proteins and it has been estimated that they may have approximately 200 to 300 substrates each. Some of the targets are downstream kinases which are activated through phosphorylation and further phosphorylate additional targets. RPS6KA5/MSK1 and RPS6KA4/MSK2 can directly phosphorylate and activate transcription factors such as CREB1, ATF1, the NF-kappa-B isoform RELA/NFKB3, STAT1 and STAT3, but can also phosphorylate histone H3 and the nucleosomal protein HMGN1 (PubMed:9687510, PubMed:9792677). RPS6KA5/MSK1 and RPS6KA4/MSK2 play important roles in the rapid induction of immediate-early genes in response to stress or mitogenic stimuli, either by inducing chromatin remodeling or by recruiting the transcription machinery (PubMed:9687510, PubMed:9792677). On the other hand, two other kinase targets, MAPKAPK2/MK2 and MAPKAPK3/MK3, participate in the control of gene expression mostly at the post-transcriptional level, by phosphorylating ZFP36 (tristetraprolin) and ELAVL1, and by regulating EEF2K, which is important for the elongation of mRNA during translation. MKNK1/MNK1 and MKNK2/MNK2, two other kinases activated by p38 MAPKs, regulate protein synthesis by phosphorylating the initiation factor EIF4E2 (PubMed:11154262). MAPK14 also interacts with casein kinase II, leading to its activation through autophosphorylation and further phosphorylation of TP53/p53 (PubMed:10747897). In the cytoplasm, the p38 MAPK pathway is an important regulator of protein turnover. For example, CFLAR is an inhibitor of TNF-induced apoptosis whose proteasome-mediated degradation is regulated by p38 MAPK phosphorylation. In a similar way, MAPK14 phosphorylates the ubiquitin ligase SIAH2, regulating its activity towards EGLN3 (PubMed:17003045). MAPK14 may also inhibit the lysosomal degradation pathway of autophagy by interfering with the intracellular trafficking of the transmembrane protein ATG9 (PubMed:19893488). Another function of MAPK14 is to regulate the endocytosis of membrane receptors by different mechanisms that impinge on the small GTPase RAB5A. In addition, clathrin-mediated EGFR internalization induced by inflammatory cytokines and UV irradiation depends on MAPK14-mediated phosphorylation of EGFR itself as well as of RAB5A effectors (PubMed:16932740). Ectodomain shedding of transmembrane proteins is regulated by p38 MAPKs as well. In response to inflammatory stimuli, p38 MAPKs phosphorylate the membrane-associated metalloprotease ADAM17 (PubMed:20188673). Such phosphorylation is required for ADAM17-mediated ectodomain shedding of TGF-alpha family ligands, which results in the activation of EGFR signaling and cell proliferation. Another p38 MAPK substrate is FGFR1. FGFR1 can be translocated from the extracellular space into the cytosol and nucleus of target cells, and regulates processes such as rRNA synthesis and cell growth. FGFR1 translocation requires p38 MAPK activation. In the nucleus, many transcription factors are phosphorylated and activated by p38 MAPKs in response to different stimuli. Classical examples include ATF1, ATF2, ATF6, ELK1, PTPRH, DDIT3, TP53/p53 and MEF2C and MEF2A (PubMed:10330143, PubMed:9430721, PubMed:9858528). The p38 MAPKs are emerging as important modulators of gene expression by regulating chromatin modifiers and remodelers. The promoters of several genes involved in the inflammatory response, such as IL6, IL8 and IL12B, display a p38 MAPK-dependent enrichment of histone H3 phosphorylation on 'Ser-10' (H3S10ph) in LPS-stimulated myeloid cells. This phosphorylation enhances the accessibility of the cryptic NF-kappa-B-binding sites marking promoters for increased NF-kappa-B recruitment. Phosphorylates CDC25B and CDC25C which is required for binding to 14-3-3 proteins and leads to initiation of a G2 delay after ultraviolet radiation (PubMed:11333986). Phosphorylates TIAR following DNA damage, releasing TIAR from GADD45A mRNA and preventing mRNA degradation (PubMed:20932473). The p38 MAPKs may also have kinase-independent roles, which are thought to be due to the binding to targets in the absence of phosphorylation. Protein O-Glc-N-acylation catalyzed by the OGT is regulated by MAPK14, and, although OGT does not seem to be phosphorylated by MAPK14, their interaction increases upon MAPK14 activation induced by glucose deprivation. This interaction may regulate OGT activity by recruiting it to specific targets such as neurofilament H, stimulating its O-Glc-N-acylation. Required in mid-fetal development for the growth of embryo-derived blood vessels in the labyrinth layer of the placenta. Also plays an essential role in developmental and stress-induced erythropoiesis, through regulation of EPO gene expression (PubMed:10943842). Isoform MXI2 activation is stimulated by mitogens and oxidative stress and only poorly phosphorylates ELK1 and ATF2. Isoform EXIP may play a role in the early onset of apoptosis. Phosphorylates S100A9 at 'Thr-113' (PubMed:15905572). Phosphorylates NLRP1 downstream of MAP3K20/ZAK in response to UV-B irradiation and ribosome collisions, promoting activation of the NLRP1 inflammasome and pyroptosis (PubMed:35857590).</text>
</comment>
<comment type="function">
    <text evidence="42">(Microbial infection) Activated by phosphorylation by M.tuberculosis EsxA in T-cells leading to inhibition of IFN-gamma production; phosphorylation is apparent within 15 minutes and is inhibited by kinase-specific inhibitors SB203580 and siRNA (PubMed:21586573).</text>
</comment>
<comment type="catalytic activity">
    <reaction evidence="8 44">
        <text>L-seryl-[protein] + ATP = O-phospho-L-seryl-[protein] + ADP + H(+)</text>
        <dbReference type="Rhea" id="RHEA:17989"/>
        <dbReference type="Rhea" id="RHEA-COMP:9863"/>
        <dbReference type="Rhea" id="RHEA-COMP:11604"/>
        <dbReference type="ChEBI" id="CHEBI:15378"/>
        <dbReference type="ChEBI" id="CHEBI:29999"/>
        <dbReference type="ChEBI" id="CHEBI:30616"/>
        <dbReference type="ChEBI" id="CHEBI:83421"/>
        <dbReference type="ChEBI" id="CHEBI:456216"/>
        <dbReference type="EC" id="2.7.11.24"/>
    </reaction>
    <physiologicalReaction direction="left-to-right" evidence="8 44">
        <dbReference type="Rhea" id="RHEA:17990"/>
    </physiologicalReaction>
</comment>
<comment type="catalytic activity">
    <reaction evidence="8 44">
        <text>L-threonyl-[protein] + ATP = O-phospho-L-threonyl-[protein] + ADP + H(+)</text>
        <dbReference type="Rhea" id="RHEA:46608"/>
        <dbReference type="Rhea" id="RHEA-COMP:11060"/>
        <dbReference type="Rhea" id="RHEA-COMP:11605"/>
        <dbReference type="ChEBI" id="CHEBI:15378"/>
        <dbReference type="ChEBI" id="CHEBI:30013"/>
        <dbReference type="ChEBI" id="CHEBI:30616"/>
        <dbReference type="ChEBI" id="CHEBI:61977"/>
        <dbReference type="ChEBI" id="CHEBI:456216"/>
        <dbReference type="EC" id="2.7.11.24"/>
    </reaction>
    <physiologicalReaction direction="left-to-right" evidence="8 44">
        <dbReference type="Rhea" id="RHEA:46609"/>
    </physiologicalReaction>
</comment>
<comment type="cofactor">
    <cofactor evidence="6">
        <name>Mg(2+)</name>
        <dbReference type="ChEBI" id="CHEBI:18420"/>
    </cofactor>
</comment>
<comment type="activity regulation">
    <text evidence="4 6 10 12 13 14 15 16 19 20 23 24 25 27 32 46 47 48">Activated by cell stresses such as DNA damage, heat shock, osmotic shock, anisomycin and sodium arsenite, as well as pro-inflammatory stimuli such as bacterial lipopolysaccharide (LPS) and interleukin-1. Activation occurs through dual phosphorylation of Thr-180 and Tyr-182 by either of two dual specificity kinases, MAP2K3/MKK3 or MAP2K6/MKK6, and potentially also MAP2K4/MKK4, as well as by TAB1-mediated autophosphorylation. MAPK14 phosphorylated on both Thr-180 and Tyr-182 is 10-20-fold more active than MAPK14 phosphorylated only on Thr-180, whereas MAPK14 phosphorylated on Tyr-182 alone is inactive. whereas Thr-180 is necessary for catalysis, Tyr-182 may be required for auto-activation and substrate recognition. Phosphorylated at Tyr-323 by ZAP70 in an alternative activation pathway in response to TCR signaling in T-cells. This alternative pathway is inhibited by GADD45A. Inhibited by dual specificity phosphatases, such as DUSP1, DUSP10, and DUSP16. Specifically inhibited by the binding of pyridinyl-imidazole compounds, which are cytokine-suppressive anti-inflammatory drugs (CSAID). Isoform Mxi2 is 100-fold less sensitive to these agents than the other isoforms and is not inhibited by DUSP1. Isoform Exip is not activated by MAP2K6. SB203580 is an inhibitor of MAPK14.</text>
</comment>
<comment type="subunit">
    <text evidence="1 4 5 8 10 11 12 13 18 22 24 28 29 30 33 37 39 40 50">Component of a signaling complex containing at least AKAP13, PKN1, MAPK14, ZAK and MAP2K3. Within this complex, AKAP13 interacts directly with PKN1, which in turn recruits MAPK14, MAP2K3 and ZAK (PubMed:21224381). Binds to a kinase interaction motif within the protein tyrosine phosphatase, PTPRR (By similarity). This interaction retains MAPK14 in the cytoplasm and prevents nuclear accumulation (By similarity). Interacts with SPAG9 and GADD45A (By similarity). Interacts with CDC25B, CDC25C, DUSP1, DUSP10, DUSP16, NP60, SUPT20H and TAB1. Interacts with casein kinase II subunits CSNK2A1 and CSNK2B. Interacts with PPM1D. Interacts with CDK5RAP3; recruits PPM1D to MAPK14 and may regulate its dephosphorylation (PubMed:21283629). Interacts with DUSP2; this interaction does not lead to catalytic activation of DUSP2 and dephosphrylation of MAPK14 (By similarity).</text>
</comment>
<comment type="interaction">
    <interactant intactId="EBI-73946">
        <id>Q16539</id>
    </interactant>
    <interactant intactId="EBI-9087876">
        <id>P48730-2</id>
        <label>CSNK1D</label>
    </interactant>
    <organismsDiffer>false</organismsDiffer>
    <experiments>3</experiments>
</comment>
<comment type="interaction">
    <interactant intactId="EBI-73946">
        <id>Q16539</id>
    </interactant>
    <interactant intactId="EBI-975493">
        <id>P28562</id>
        <label>DUSP1</label>
    </interactant>
    <organismsDiffer>false</organismsDiffer>
    <experiments>4</experiments>
</comment>
<comment type="interaction">
    <interactant intactId="EBI-73946">
        <id>Q16539</id>
    </interactant>
    <interactant intactId="EBI-3443956">
        <id>Q9BY84</id>
        <label>DUSP16</label>
    </interactant>
    <organismsDiffer>false</organismsDiffer>
    <experiments>3</experiments>
</comment>
<comment type="interaction">
    <interactant intactId="EBI-73946">
        <id>Q16539</id>
    </interactant>
    <interactant intactId="EBI-1265847">
        <id>Q16829</id>
        <label>DUSP7</label>
    </interactant>
    <organismsDiffer>false</organismsDiffer>
    <experiments>2</experiments>
</comment>
<comment type="interaction">
    <interactant intactId="EBI-73946">
        <id>Q16539</id>
    </interactant>
    <interactant intactId="EBI-3906678">
        <id>Q99956</id>
        <label>DUSP9</label>
    </interactant>
    <organismsDiffer>false</organismsDiffer>
    <experiments>6</experiments>
</comment>
<comment type="interaction">
    <interactant intactId="EBI-73946">
        <id>Q16539</id>
    </interactant>
    <interactant intactId="EBI-352162">
        <id>P68104</id>
        <label>EEF1A1</label>
    </interactant>
    <organismsDiffer>false</organismsDiffer>
    <experiments>3</experiments>
</comment>
<comment type="interaction">
    <interactant intactId="EBI-73946">
        <id>Q16539</id>
    </interactant>
    <interactant intactId="EBI-602462">
        <id>P46734</id>
        <label>MAP2K3</label>
    </interactant>
    <organismsDiffer>false</organismsDiffer>
    <experiments>7</experiments>
</comment>
<comment type="interaction">
    <interactant intactId="EBI-73946">
        <id>Q16539</id>
    </interactant>
    <interactant intactId="EBI-448135">
        <id>P52564</id>
        <label>MAP2K6</label>
    </interactant>
    <organismsDiffer>false</organismsDiffer>
    <experiments>3</experiments>
</comment>
<comment type="interaction">
    <interactant intactId="EBI-73946">
        <id>Q16539</id>
    </interactant>
    <interactant intactId="EBI-73995">
        <id>P27361</id>
        <label>MAPK3</label>
    </interactant>
    <organismsDiffer>false</organismsDiffer>
    <experiments>5</experiments>
</comment>
<comment type="interaction">
    <interactant intactId="EBI-73946">
        <id>Q16539</id>
    </interactant>
    <interactant intactId="EBI-993299">
        <id>P49137</id>
        <label>MAPKAPK2</label>
    </interactant>
    <organismsDiffer>false</organismsDiffer>
    <experiments>15</experiments>
</comment>
<comment type="interaction">
    <interactant intactId="EBI-73946">
        <id>Q16539</id>
    </interactant>
    <interactant intactId="EBI-1384657">
        <id>Q16644</id>
        <label>MAPKAPK3</label>
    </interactant>
    <organismsDiffer>false</organismsDiffer>
    <experiments>15</experiments>
</comment>
<comment type="interaction">
    <interactant intactId="EBI-73946">
        <id>Q16539</id>
    </interactant>
    <interactant intactId="EBI-73837">
        <id>Q9BUB5</id>
        <label>MKNK1</label>
    </interactant>
    <organismsDiffer>false</organismsDiffer>
    <experiments>7</experiments>
</comment>
<comment type="interaction">
    <interactant intactId="EBI-73946">
        <id>Q16539</id>
    </interactant>
    <interactant intactId="EBI-2864341">
        <id>Q9HBH9</id>
        <label>MKNK2</label>
    </interactant>
    <organismsDiffer>false</organismsDiffer>
    <experiments>5</experiments>
</comment>
<comment type="interaction">
    <interactant intactId="EBI-73946">
        <id>Q16539</id>
    </interactant>
    <interactant intactId="EBI-989143">
        <id>P35813</id>
        <label>PPM1A</label>
    </interactant>
    <organismsDiffer>false</organismsDiffer>
    <experiments>2</experiments>
</comment>
<comment type="interaction">
    <interactant intactId="EBI-73946">
        <id>Q16539</id>
    </interactant>
    <interactant intactId="EBI-2265659">
        <id>Q15256</id>
        <label>PTPRR</label>
    </interactant>
    <organismsDiffer>false</organismsDiffer>
    <experiments>4</experiments>
</comment>
<comment type="interaction">
    <interactant intactId="EBI-73946">
        <id>Q16539</id>
    </interactant>
    <interactant intactId="EBI-491274">
        <id>P06400</id>
        <label>RB1</label>
    </interactant>
    <organismsDiffer>false</organismsDiffer>
    <experiments>4</experiments>
</comment>
<comment type="interaction">
    <interactant intactId="EBI-73946">
        <id>Q16539</id>
    </interactant>
    <interactant intactId="EBI-73933">
        <id>O75676</id>
        <label>RPS6KA4</label>
    </interactant>
    <organismsDiffer>false</organismsDiffer>
    <experiments>9</experiments>
</comment>
<comment type="interaction">
    <interactant intactId="EBI-73946">
        <id>Q16539</id>
    </interactant>
    <interactant intactId="EBI-73869">
        <id>O75582</id>
        <label>RPS6KA5</label>
    </interactant>
    <organismsDiffer>false</organismsDiffer>
    <experiments>3</experiments>
</comment>
<comment type="interaction">
    <interactant intactId="EBI-73946">
        <id>Q16539</id>
    </interactant>
    <interactant intactId="EBI-946984">
        <id>Q8NEM7</id>
        <label>SUPT20H</label>
    </interactant>
    <organismsDiffer>false</organismsDiffer>
    <experiments>5</experiments>
</comment>
<comment type="interaction">
    <interactant intactId="EBI-73946">
        <id>Q16539</id>
    </interactant>
    <interactant intactId="EBI-1047085">
        <id>Q92574</id>
        <label>TSC1</label>
    </interactant>
    <organismsDiffer>false</organismsDiffer>
    <experiments>2</experiments>
</comment>
<comment type="interaction">
    <interactant intactId="EBI-73946">
        <id>Q16539</id>
    </interactant>
    <interactant intactId="EBI-721823">
        <id>Q07352</id>
        <label>ZFP36L1</label>
    </interactant>
    <organismsDiffer>false</organismsDiffer>
    <experiments>2</experiments>
</comment>
<comment type="interaction">
    <interactant intactId="EBI-73946">
        <id>Q16539</id>
    </interactant>
    <interactant intactId="EBI-347522">
        <id>O43257</id>
        <label>ZNHIT1</label>
    </interactant>
    <organismsDiffer>false</organismsDiffer>
    <experiments>7</experiments>
</comment>
<comment type="interaction">
    <interactant intactId="EBI-15834191">
        <id>Q16539-1</id>
    </interactant>
    <interactant intactId="EBI-16085263">
        <id>P22736-1</id>
        <label>NR4A1</label>
    </interactant>
    <organismsDiffer>false</organismsDiffer>
    <experiments>5</experiments>
</comment>
<comment type="interaction">
    <interactant intactId="EBI-15834191">
        <id>Q16539-1</id>
    </interactant>
    <interactant intactId="EBI-16067395">
        <id>Q15256-1</id>
        <label>PTPRR</label>
    </interactant>
    <organismsDiffer>false</organismsDiffer>
    <experiments>6</experiments>
</comment>
<comment type="interaction">
    <interactant intactId="EBI-15834191">
        <id>Q16539-1</id>
    </interactant>
    <interactant intactId="EBI-16067443">
        <id>P54830-1</id>
        <label>Ptpn5</label>
    </interactant>
    <organismsDiffer>true</organismsDiffer>
    <experiments>6</experiments>
</comment>
<comment type="interaction">
    <interactant intactId="EBI-6932370">
        <id>Q16539-3</id>
    </interactant>
    <interactant intactId="EBI-959949">
        <id>P28482</id>
        <label>MAPK1</label>
    </interactant>
    <organismsDiffer>false</organismsDiffer>
    <experiments>5</experiments>
</comment>
<comment type="interaction">
    <interactant intactId="EBI-6932370">
        <id>Q16539-3</id>
    </interactant>
    <interactant intactId="EBI-286779">
        <id>P49790</id>
        <label>NUP153</label>
    </interactant>
    <organismsDiffer>false</organismsDiffer>
    <experiments>2</experiments>
</comment>
<comment type="subcellular location">
    <subcellularLocation>
        <location evidence="46">Cytoplasm</location>
    </subcellularLocation>
    <subcellularLocation>
        <location evidence="43 46">Nucleus</location>
    </subcellularLocation>
</comment>
<comment type="alternative products">
    <event type="alternative splicing"/>
    <isoform>
        <id>Q16539-1</id>
        <name>CSBP2</name>
        <sequence type="displayed"/>
    </isoform>
    <isoform>
        <id>Q16539-2</id>
        <name>CSBP1</name>
        <sequence type="described" ref="VSP_004842"/>
    </isoform>
    <isoform>
        <id>Q16539-3</id>
        <name>Mxi2</name>
        <sequence type="described" ref="VSP_004844"/>
    </isoform>
    <isoform>
        <id>Q16539-4</id>
        <name>Exip</name>
        <name>Exon skip</name>
        <sequence type="described" ref="VSP_004843 VSP_004845"/>
    </isoform>
    <isoform>
        <id>Q16539-5</id>
        <name>5</name>
        <sequence type="described" ref="VSP_057194"/>
    </isoform>
</comment>
<comment type="tissue specificity">
    <text>Brain, heart, placenta, pancreas and skeletal muscle. Expressed to a lesser extent in lung, liver and kidney.</text>
</comment>
<comment type="domain">
    <text>The TXY motif contains the threonine and tyrosine residues whose phosphorylation activates the MAP kinases.</text>
</comment>
<comment type="PTM">
    <text evidence="8 23 35 40 46 47">Dually phosphorylated on Thr-180 and Tyr-182 by the MAP2Ks MAP2K3/MKK3, MAP2K4/MKK4 and MAP2K6/MKK6 in response to inflammatory citokines, environmental stress or growth factors, which activates the enzyme. Dual phosphorylation can also be mediated by TAB1-mediated autophosphorylation. TCR engagement in T-cells also leads to Tyr-323 phosphorylation by ZAP70. Dephosphorylated and inactivated by DUPS1, DUSP10 and DUSP16. PPM1D also mediates dephosphorylation and inactivation of MAPK14 (PubMed:21283629).</text>
</comment>
<comment type="PTM">
    <text evidence="41">Acetylated at Lys-53 and Lys-152 by KAT2B and EP300. Acetylation at Lys-53 increases the affinity for ATP and enhances kinase activity. Lys-53 and Lys-152 are deacetylated by HDAC3.</text>
</comment>
<comment type="PTM">
    <text evidence="35">Ubiquitinated. Ubiquitination leads to degradation by the proteasome pathway.</text>
</comment>
<comment type="similarity">
    <text evidence="56">Belongs to the protein kinase superfamily. CMGC Ser/Thr protein kinase family. MAP kinase subfamily.</text>
</comment>
<comment type="online information" name="Wikipedia">
    <link uri="https://en.wikipedia.org/wiki/P38_mitogen-activated_protein_kinases"/>
    <text>P38 mitogen-activated protein kinases entry</text>
</comment>
<comment type="online information" name="Atlas of Genetics and Cytogenetics in Oncology and Haematology">
    <link uri="https://atlasgeneticsoncology.org/gene/41292/MAPK14"/>
</comment>
<proteinExistence type="evidence at protein level"/>
<feature type="initiator methionine" description="Removed" evidence="17 71">
    <location>
        <position position="1"/>
    </location>
</feature>
<feature type="chain" id="PRO_0000186291" description="Mitogen-activated protein kinase 14">
    <location>
        <begin position="2"/>
        <end position="360"/>
    </location>
</feature>
<feature type="domain" description="Protein kinase" evidence="2">
    <location>
        <begin position="24"/>
        <end position="308"/>
    </location>
</feature>
<feature type="short sequence motif" description="TXY">
    <location>
        <begin position="180"/>
        <end position="182"/>
    </location>
</feature>
<feature type="active site" description="Proton acceptor">
    <location>
        <position position="168"/>
    </location>
</feature>
<feature type="binding site">
    <location>
        <begin position="30"/>
        <end position="38"/>
    </location>
    <ligand>
        <name>ATP</name>
        <dbReference type="ChEBI" id="CHEBI:30616"/>
    </ligand>
</feature>
<feature type="binding site">
    <location>
        <position position="53"/>
    </location>
    <ligand>
        <name>ATP</name>
        <dbReference type="ChEBI" id="CHEBI:30616"/>
    </ligand>
</feature>
<feature type="modified residue" description="N-acetylserine" evidence="71">
    <location>
        <position position="2"/>
    </location>
</feature>
<feature type="modified residue" description="Phosphoserine" evidence="71 72">
    <location>
        <position position="2"/>
    </location>
</feature>
<feature type="modified residue" description="Phosphothreonine" evidence="69">
    <location>
        <position position="16"/>
    </location>
</feature>
<feature type="modified residue" description="N6-acetyllysine" evidence="41">
    <location>
        <position position="53"/>
    </location>
</feature>
<feature type="modified residue" description="N6-acetyllysine" evidence="41">
    <location>
        <position position="152"/>
    </location>
</feature>
<feature type="modified residue" description="Phosphothreonine; by MAP2K3, MAP2K4, MAP2K6 and autocatalysis" evidence="46 68 70 71 72">
    <location>
        <position position="180"/>
    </location>
</feature>
<feature type="modified residue" description="Phosphotyrosine; by MAP2K3, MAP2K4, MAP2K6 and autocatalysis" evidence="46 68 70 71 72">
    <location>
        <position position="182"/>
    </location>
</feature>
<feature type="modified residue" description="Phosphothreonine" evidence="67">
    <location>
        <position position="263"/>
    </location>
</feature>
<feature type="modified residue" description="Phosphotyrosine; by ZAP70" evidence="23">
    <location>
        <position position="323"/>
    </location>
</feature>
<feature type="splice variant" id="VSP_004842" description="In isoform CSBP1." evidence="55">
    <original>DQLKLILRLVGTPGAELLKKISSES</original>
    <variation>NQLQQIMRLTGTPPAYLINRMPSHE</variation>
    <location>
        <begin position="230"/>
        <end position="254"/>
    </location>
</feature>
<feature type="splice variant" id="VSP_057194" description="In isoform 5." evidence="53">
    <original>ARNYIQSLTQMPKMNFANVFIGANPLAVDLLEKMLVLDSDKRITAAQALAHAYFAQYHDPDDEPVADPYDQSFESRDLLIDEWKSLTYDEVISFVPPPLDQEEMES</original>
    <variation>VS</variation>
    <location>
        <begin position="255"/>
        <end position="360"/>
    </location>
</feature>
<feature type="splice variant" id="VSP_004843" description="In isoform Exip." evidence="52">
    <original>ARNYIQSLTQMPKMNFANVFIGANPLAVDLLEKMLVLDSDKRITAAQALAHAY</original>
    <variation>LSTCWRRCLYWTQIRELQRPKPLHMPTLLSTTILMMNQWPILMISPLKAGTSL</variation>
    <location>
        <begin position="255"/>
        <end position="307"/>
    </location>
</feature>
<feature type="splice variant" id="VSP_004844" description="In isoform Mxi2." evidence="54">
    <original>AVDLLEKMLVLDSDKRITAAQALAHAYFAQYHDPDDEPVADPYDQSFESRDLLIDEWKSLTYDEVISFVPPPLDQEEMES</original>
    <variation>GKLTIYPHLMDIELVMI</variation>
    <location>
        <begin position="281"/>
        <end position="360"/>
    </location>
</feature>
<feature type="splice variant" id="VSP_004845" description="In isoform Exip." evidence="52">
    <location>
        <begin position="308"/>
        <end position="360"/>
    </location>
</feature>
<feature type="sequence variant" id="VAR_042270" description="In a gastric adenocarcinoma sample; somatic mutation." evidence="34">
    <original>A</original>
    <variation>V</variation>
    <location>
        <position position="51"/>
    </location>
</feature>
<feature type="sequence variant" id="VAR_042271" description="In a lung adenocarcinoma sample; somatic mutation; dbSNP:rs1765837157." evidence="34">
    <original>P</original>
    <variation>R</variation>
    <location>
        <position position="322"/>
    </location>
</feature>
<feature type="sequence variant" id="VAR_042272" description="In dbSNP:rs45496794." evidence="34">
    <original>D</original>
    <variation>G</variation>
    <location>
        <position position="343"/>
    </location>
</feature>
<feature type="mutagenesis site" description="Lowered kinase activity." evidence="45">
    <original>A</original>
    <variation>V</variation>
    <location>
        <position position="34"/>
    </location>
</feature>
<feature type="mutagenesis site" description="Loss of kinase activity." evidence="45">
    <original>K</original>
    <variation>R</variation>
    <location>
        <position position="53"/>
    </location>
</feature>
<feature type="mutagenesis site" description="Impairs MAP2K6/MKK6-dependent autophosphorylation." evidence="8">
    <original>K</original>
    <variation>R</variation>
    <location>
        <position position="54"/>
    </location>
</feature>
<feature type="mutagenesis site" description="Lowered kinase activity." evidence="21">
    <original>Y</original>
    <variation>H</variation>
    <location>
        <position position="69"/>
    </location>
</feature>
<feature type="mutagenesis site" description="Loss of kinase activity." evidence="45">
    <original>D</original>
    <variation>A</variation>
    <location>
        <position position="168"/>
    </location>
</feature>
<feature type="mutagenesis site" description="No effect on either the kinase activity or tyrosine phosphorylation." evidence="45">
    <original>T</original>
    <variation>A</variation>
    <location>
        <position position="175"/>
    </location>
</feature>
<feature type="mutagenesis site" description="Emulation of the active state. Increase in activity; when associated with S-327 or L-327." evidence="21">
    <original>D</original>
    <variation>A</variation>
    <location>
        <position position="176"/>
    </location>
</feature>
<feature type="mutagenesis site" description="Loss of kinase activity." evidence="21">
    <original>D</original>
    <variation>A</variation>
    <location>
        <position position="177"/>
    </location>
</feature>
<feature type="mutagenesis site" description="Loss of kinase activity." evidence="45">
    <original>T</original>
    <variation>E</variation>
    <location>
        <position position="180"/>
    </location>
</feature>
<feature type="mutagenesis site" description="Loss of kinase activity." evidence="45">
    <original>Y</original>
    <variation>F</variation>
    <location>
        <position position="182"/>
    </location>
</feature>
<feature type="mutagenesis site" description="Lowered kinase activity." evidence="21">
    <original>A</original>
    <variation>T</variation>
    <location>
        <position position="320"/>
    </location>
</feature>
<feature type="mutagenesis site" description="Emulation of the active state. Increase in activity; when associated with A-176." evidence="21">
    <original>F</original>
    <variation>L</variation>
    <location>
        <position position="327"/>
    </location>
</feature>
<feature type="mutagenesis site" description="Emulation of the active state. Increase in activity; when associated with A-176." evidence="21">
    <original>F</original>
    <variation>S</variation>
    <location>
        <position position="327"/>
    </location>
</feature>
<feature type="mutagenesis site" description="Loss of kinase activity." evidence="21">
    <original>W</original>
    <variation>R</variation>
    <location>
        <position position="337"/>
    </location>
</feature>
<feature type="sequence conflict" description="In Ref. 7; BAF84398." evidence="56" ref="7">
    <original>R</original>
    <variation>G</variation>
    <location>
        <position position="67"/>
    </location>
</feature>
<feature type="strand" evidence="74">
    <location>
        <begin position="8"/>
        <end position="13"/>
    </location>
</feature>
<feature type="strand" evidence="74">
    <location>
        <begin position="16"/>
        <end position="21"/>
    </location>
</feature>
<feature type="strand" evidence="74">
    <location>
        <begin position="24"/>
        <end position="29"/>
    </location>
</feature>
<feature type="helix" evidence="82">
    <location>
        <begin position="31"/>
        <end position="33"/>
    </location>
</feature>
<feature type="turn" evidence="76">
    <location>
        <begin position="34"/>
        <end position="36"/>
    </location>
</feature>
<feature type="strand" evidence="74">
    <location>
        <begin position="38"/>
        <end position="43"/>
    </location>
</feature>
<feature type="turn" evidence="74">
    <location>
        <begin position="44"/>
        <end position="47"/>
    </location>
</feature>
<feature type="strand" evidence="74">
    <location>
        <begin position="48"/>
        <end position="54"/>
    </location>
</feature>
<feature type="helix" evidence="74">
    <location>
        <begin position="62"/>
        <end position="77"/>
    </location>
</feature>
<feature type="strand" evidence="74">
    <location>
        <begin position="87"/>
        <end position="90"/>
    </location>
</feature>
<feature type="helix" evidence="74">
    <location>
        <begin position="96"/>
        <end position="98"/>
    </location>
</feature>
<feature type="strand" evidence="74">
    <location>
        <begin position="103"/>
        <end position="107"/>
    </location>
</feature>
<feature type="strand" evidence="78">
    <location>
        <begin position="110"/>
        <end position="112"/>
    </location>
</feature>
<feature type="turn" evidence="80">
    <location>
        <begin position="113"/>
        <end position="115"/>
    </location>
</feature>
<feature type="turn" evidence="78">
    <location>
        <begin position="116"/>
        <end position="119"/>
    </location>
</feature>
<feature type="helix" evidence="74">
    <location>
        <begin position="124"/>
        <end position="143"/>
    </location>
</feature>
<feature type="helix" evidence="74">
    <location>
        <begin position="153"/>
        <end position="155"/>
    </location>
</feature>
<feature type="strand" evidence="74">
    <location>
        <begin position="156"/>
        <end position="158"/>
    </location>
</feature>
<feature type="turn" evidence="75">
    <location>
        <begin position="160"/>
        <end position="162"/>
    </location>
</feature>
<feature type="strand" evidence="74">
    <location>
        <begin position="164"/>
        <end position="166"/>
    </location>
</feature>
<feature type="strand" evidence="80">
    <location>
        <begin position="168"/>
        <end position="170"/>
    </location>
</feature>
<feature type="helix" evidence="73">
    <location>
        <begin position="173"/>
        <end position="175"/>
    </location>
</feature>
<feature type="turn" evidence="81">
    <location>
        <begin position="176"/>
        <end position="179"/>
    </location>
</feature>
<feature type="strand" evidence="77">
    <location>
        <begin position="180"/>
        <end position="182"/>
    </location>
</feature>
<feature type="turn" evidence="78">
    <location>
        <begin position="185"/>
        <end position="188"/>
    </location>
</feature>
<feature type="helix" evidence="74">
    <location>
        <begin position="191"/>
        <end position="194"/>
    </location>
</feature>
<feature type="strand" evidence="79">
    <location>
        <begin position="197"/>
        <end position="199"/>
    </location>
</feature>
<feature type="helix" evidence="74">
    <location>
        <begin position="204"/>
        <end position="218"/>
    </location>
</feature>
<feature type="helix" evidence="74">
    <location>
        <begin position="228"/>
        <end position="239"/>
    </location>
</feature>
<feature type="helix" evidence="74">
    <location>
        <begin position="244"/>
        <end position="247"/>
    </location>
</feature>
<feature type="helix" evidence="74">
    <location>
        <begin position="253"/>
        <end position="260"/>
    </location>
</feature>
<feature type="helix" evidence="74">
    <location>
        <begin position="270"/>
        <end position="273"/>
    </location>
</feature>
<feature type="turn" evidence="74">
    <location>
        <begin position="274"/>
        <end position="276"/>
    </location>
</feature>
<feature type="helix" evidence="74">
    <location>
        <begin position="279"/>
        <end position="288"/>
    </location>
</feature>
<feature type="helix" evidence="74">
    <location>
        <begin position="293"/>
        <end position="295"/>
    </location>
</feature>
<feature type="helix" evidence="74">
    <location>
        <begin position="299"/>
        <end position="303"/>
    </location>
</feature>
<feature type="helix" evidence="74">
    <location>
        <begin position="306"/>
        <end position="308"/>
    </location>
</feature>
<feature type="turn" evidence="74">
    <location>
        <begin position="309"/>
        <end position="311"/>
    </location>
</feature>
<feature type="helix" evidence="74">
    <location>
        <begin position="314"/>
        <end position="316"/>
    </location>
</feature>
<feature type="helix" evidence="74">
    <location>
        <begin position="325"/>
        <end position="327"/>
    </location>
</feature>
<feature type="helix" evidence="74">
    <location>
        <begin position="334"/>
        <end position="347"/>
    </location>
</feature>
<dbReference type="EC" id="2.7.11.24" evidence="8 21 44 45"/>
<dbReference type="EMBL" id="L35263">
    <property type="protein sequence ID" value="AAA57455.1"/>
    <property type="molecule type" value="mRNA"/>
</dbReference>
<dbReference type="EMBL" id="L35264">
    <property type="protein sequence ID" value="AAA57456.1"/>
    <property type="molecule type" value="mRNA"/>
</dbReference>
<dbReference type="EMBL" id="L35253">
    <property type="protein sequence ID" value="AAA74301.1"/>
    <property type="molecule type" value="mRNA"/>
</dbReference>
<dbReference type="EMBL" id="U19775">
    <property type="protein sequence ID" value="AAC50329.1"/>
    <property type="molecule type" value="mRNA"/>
</dbReference>
<dbReference type="EMBL" id="AF100544">
    <property type="protein sequence ID" value="AAF36770.1"/>
    <property type="molecule type" value="mRNA"/>
</dbReference>
<dbReference type="EMBL" id="AB074150">
    <property type="protein sequence ID" value="BAB85654.1"/>
    <property type="molecule type" value="mRNA"/>
</dbReference>
<dbReference type="EMBL" id="FJ032367">
    <property type="protein sequence ID" value="ACI00233.1"/>
    <property type="molecule type" value="mRNA"/>
</dbReference>
<dbReference type="EMBL" id="AK291709">
    <property type="protein sequence ID" value="BAF84398.1"/>
    <property type="molecule type" value="mRNA"/>
</dbReference>
<dbReference type="EMBL" id="BT006933">
    <property type="protein sequence ID" value="AAP35579.1"/>
    <property type="molecule type" value="mRNA"/>
</dbReference>
<dbReference type="EMBL" id="CR536505">
    <property type="protein sequence ID" value="CAG38743.1"/>
    <property type="molecule type" value="mRNA"/>
</dbReference>
<dbReference type="EMBL" id="EU332860">
    <property type="protein sequence ID" value="ABY87549.1"/>
    <property type="molecule type" value="Genomic_DNA"/>
</dbReference>
<dbReference type="EMBL" id="Z95152">
    <property type="status" value="NOT_ANNOTATED_CDS"/>
    <property type="molecule type" value="Genomic_DNA"/>
</dbReference>
<dbReference type="EMBL" id="CH471081">
    <property type="protein sequence ID" value="EAX03869.1"/>
    <property type="molecule type" value="Genomic_DNA"/>
</dbReference>
<dbReference type="EMBL" id="BC000092">
    <property type="protein sequence ID" value="AAH00092.1"/>
    <property type="molecule type" value="mRNA"/>
</dbReference>
<dbReference type="EMBL" id="BC031574">
    <property type="protein sequence ID" value="AAH31574.1"/>
    <property type="molecule type" value="mRNA"/>
</dbReference>
<dbReference type="CCDS" id="CCDS4815.1">
    <molecule id="Q16539-2"/>
</dbReference>
<dbReference type="CCDS" id="CCDS4816.1">
    <molecule id="Q16539-1"/>
</dbReference>
<dbReference type="CCDS" id="CCDS4817.1">
    <molecule id="Q16539-4"/>
</dbReference>
<dbReference type="PIR" id="S53536">
    <property type="entry name" value="S53536"/>
</dbReference>
<dbReference type="RefSeq" id="NP_001306.1">
    <molecule id="Q16539-2"/>
    <property type="nucleotide sequence ID" value="NM_001315.3"/>
</dbReference>
<dbReference type="RefSeq" id="NP_620581.1">
    <molecule id="Q16539-1"/>
    <property type="nucleotide sequence ID" value="NM_139012.3"/>
</dbReference>
<dbReference type="RefSeq" id="NP_620582.1">
    <molecule id="Q16539-3"/>
    <property type="nucleotide sequence ID" value="NM_139013.3"/>
</dbReference>
<dbReference type="RefSeq" id="NP_620583.1">
    <molecule id="Q16539-4"/>
    <property type="nucleotide sequence ID" value="NM_139014.3"/>
</dbReference>
<dbReference type="PDB" id="1A9U">
    <property type="method" value="X-ray"/>
    <property type="resolution" value="2.50 A"/>
    <property type="chains" value="A=1-360"/>
</dbReference>
<dbReference type="PDB" id="1BL6">
    <property type="method" value="X-ray"/>
    <property type="resolution" value="2.50 A"/>
    <property type="chains" value="A=1-360"/>
</dbReference>
<dbReference type="PDB" id="1BL7">
    <property type="method" value="X-ray"/>
    <property type="resolution" value="2.50 A"/>
    <property type="chains" value="A=1-360"/>
</dbReference>
<dbReference type="PDB" id="1BMK">
    <property type="method" value="X-ray"/>
    <property type="resolution" value="2.40 A"/>
    <property type="chains" value="A=1-360"/>
</dbReference>
<dbReference type="PDB" id="1DI9">
    <property type="method" value="X-ray"/>
    <property type="resolution" value="2.60 A"/>
    <property type="chains" value="A=1-360"/>
</dbReference>
<dbReference type="PDB" id="1IAN">
    <property type="method" value="X-ray"/>
    <property type="resolution" value="2.00 A"/>
    <property type="chains" value="A=2-360"/>
</dbReference>
<dbReference type="PDB" id="1KV1">
    <property type="method" value="X-ray"/>
    <property type="resolution" value="2.50 A"/>
    <property type="chains" value="A=1-360"/>
</dbReference>
<dbReference type="PDB" id="1KV2">
    <property type="method" value="X-ray"/>
    <property type="resolution" value="2.80 A"/>
    <property type="chains" value="A=1-360"/>
</dbReference>
<dbReference type="PDB" id="1M7Q">
    <property type="method" value="X-ray"/>
    <property type="resolution" value="2.40 A"/>
    <property type="chains" value="A=1-360"/>
</dbReference>
<dbReference type="PDB" id="1OUK">
    <property type="method" value="X-ray"/>
    <property type="resolution" value="2.50 A"/>
    <property type="chains" value="A=1-360"/>
</dbReference>
<dbReference type="PDB" id="1OUY">
    <property type="method" value="X-ray"/>
    <property type="resolution" value="2.50 A"/>
    <property type="chains" value="A=1-360"/>
</dbReference>
<dbReference type="PDB" id="1OVE">
    <property type="method" value="X-ray"/>
    <property type="resolution" value="2.10 A"/>
    <property type="chains" value="A=1-360"/>
</dbReference>
<dbReference type="PDB" id="1OZ1">
    <property type="method" value="X-ray"/>
    <property type="resolution" value="2.10 A"/>
    <property type="chains" value="A=1-360"/>
</dbReference>
<dbReference type="PDB" id="1R39">
    <property type="method" value="X-ray"/>
    <property type="resolution" value="2.30 A"/>
    <property type="chains" value="A=1-360"/>
</dbReference>
<dbReference type="PDB" id="1R3C">
    <property type="method" value="X-ray"/>
    <property type="resolution" value="2.00 A"/>
    <property type="chains" value="A=1-360"/>
</dbReference>
<dbReference type="PDB" id="1W7H">
    <property type="method" value="X-ray"/>
    <property type="resolution" value="2.21 A"/>
    <property type="chains" value="A=2-360"/>
</dbReference>
<dbReference type="PDB" id="1W82">
    <property type="method" value="X-ray"/>
    <property type="resolution" value="2.20 A"/>
    <property type="chains" value="A=2-360"/>
</dbReference>
<dbReference type="PDB" id="1W83">
    <property type="method" value="X-ray"/>
    <property type="resolution" value="2.50 A"/>
    <property type="chains" value="A=2-360"/>
</dbReference>
<dbReference type="PDB" id="1W84">
    <property type="method" value="X-ray"/>
    <property type="resolution" value="2.20 A"/>
    <property type="chains" value="A=2-360"/>
</dbReference>
<dbReference type="PDB" id="1WBN">
    <property type="method" value="X-ray"/>
    <property type="resolution" value="2.40 A"/>
    <property type="chains" value="A=2-360"/>
</dbReference>
<dbReference type="PDB" id="1WBO">
    <property type="method" value="X-ray"/>
    <property type="resolution" value="2.16 A"/>
    <property type="chains" value="A=2-360"/>
</dbReference>
<dbReference type="PDB" id="1WBS">
    <property type="method" value="X-ray"/>
    <property type="resolution" value="1.80 A"/>
    <property type="chains" value="A=2-360"/>
</dbReference>
<dbReference type="PDB" id="1WBT">
    <property type="method" value="X-ray"/>
    <property type="resolution" value="2.00 A"/>
    <property type="chains" value="A=2-360"/>
</dbReference>
<dbReference type="PDB" id="1WBV">
    <property type="method" value="X-ray"/>
    <property type="resolution" value="2.00 A"/>
    <property type="chains" value="A=2-360"/>
</dbReference>
<dbReference type="PDB" id="1WBW">
    <property type="method" value="X-ray"/>
    <property type="resolution" value="2.41 A"/>
    <property type="chains" value="A=2-360"/>
</dbReference>
<dbReference type="PDB" id="1WFC">
    <property type="method" value="X-ray"/>
    <property type="resolution" value="2.30 A"/>
    <property type="chains" value="A=1-360"/>
</dbReference>
<dbReference type="PDB" id="1YQJ">
    <property type="method" value="X-ray"/>
    <property type="resolution" value="2.00 A"/>
    <property type="chains" value="A=2-360"/>
</dbReference>
<dbReference type="PDB" id="1ZYJ">
    <property type="method" value="X-ray"/>
    <property type="resolution" value="2.00 A"/>
    <property type="chains" value="A=1-360"/>
</dbReference>
<dbReference type="PDB" id="1ZZ2">
    <property type="method" value="X-ray"/>
    <property type="resolution" value="2.00 A"/>
    <property type="chains" value="A=1-360"/>
</dbReference>
<dbReference type="PDB" id="1ZZL">
    <property type="method" value="X-ray"/>
    <property type="resolution" value="2.00 A"/>
    <property type="chains" value="A=4-354"/>
</dbReference>
<dbReference type="PDB" id="2BAJ">
    <property type="method" value="X-ray"/>
    <property type="resolution" value="2.25 A"/>
    <property type="chains" value="A=2-360"/>
</dbReference>
<dbReference type="PDB" id="2BAK">
    <property type="method" value="X-ray"/>
    <property type="resolution" value="2.20 A"/>
    <property type="chains" value="A=2-360"/>
</dbReference>
<dbReference type="PDB" id="2BAL">
    <property type="method" value="X-ray"/>
    <property type="resolution" value="2.10 A"/>
    <property type="chains" value="A=2-360"/>
</dbReference>
<dbReference type="PDB" id="2BAQ">
    <property type="method" value="X-ray"/>
    <property type="resolution" value="2.80 A"/>
    <property type="chains" value="A=2-360"/>
</dbReference>
<dbReference type="PDB" id="2FSL">
    <property type="method" value="X-ray"/>
    <property type="resolution" value="1.70 A"/>
    <property type="chains" value="X=2-360"/>
</dbReference>
<dbReference type="PDB" id="2FSM">
    <property type="method" value="X-ray"/>
    <property type="resolution" value="1.86 A"/>
    <property type="chains" value="X=2-360"/>
</dbReference>
<dbReference type="PDB" id="2FSO">
    <property type="method" value="X-ray"/>
    <property type="resolution" value="1.83 A"/>
    <property type="chains" value="X=2-360"/>
</dbReference>
<dbReference type="PDB" id="2FST">
    <property type="method" value="X-ray"/>
    <property type="resolution" value="1.45 A"/>
    <property type="chains" value="X=2-360"/>
</dbReference>
<dbReference type="PDB" id="2GFS">
    <property type="method" value="X-ray"/>
    <property type="resolution" value="1.75 A"/>
    <property type="chains" value="A=2-360"/>
</dbReference>
<dbReference type="PDB" id="2I0H">
    <property type="method" value="X-ray"/>
    <property type="resolution" value="2.00 A"/>
    <property type="chains" value="A=1-360"/>
</dbReference>
<dbReference type="PDB" id="2LGC">
    <property type="method" value="NMR"/>
    <property type="chains" value="A=2-354"/>
</dbReference>
<dbReference type="PDB" id="2NPQ">
    <property type="method" value="X-ray"/>
    <property type="resolution" value="1.80 A"/>
    <property type="chains" value="A=2-360"/>
</dbReference>
<dbReference type="PDB" id="2OKR">
    <property type="method" value="X-ray"/>
    <property type="resolution" value="2.00 A"/>
    <property type="chains" value="A/D=2-360"/>
</dbReference>
<dbReference type="PDB" id="2ONL">
    <property type="method" value="X-ray"/>
    <property type="resolution" value="4.00 A"/>
    <property type="chains" value="A/B=2-360"/>
</dbReference>
<dbReference type="PDB" id="2QD9">
    <property type="method" value="X-ray"/>
    <property type="resolution" value="1.70 A"/>
    <property type="chains" value="A=2-360"/>
</dbReference>
<dbReference type="PDB" id="2RG5">
    <property type="method" value="X-ray"/>
    <property type="resolution" value="2.40 A"/>
    <property type="chains" value="A=2-360"/>
</dbReference>
<dbReference type="PDB" id="2RG6">
    <property type="method" value="X-ray"/>
    <property type="resolution" value="1.72 A"/>
    <property type="chains" value="A=2-360"/>
</dbReference>
<dbReference type="PDB" id="2Y8O">
    <property type="method" value="X-ray"/>
    <property type="resolution" value="1.95 A"/>
    <property type="chains" value="A=1-360"/>
</dbReference>
<dbReference type="PDB" id="2YIS">
    <property type="method" value="X-ray"/>
    <property type="resolution" value="2.00 A"/>
    <property type="chains" value="A=2-360"/>
</dbReference>
<dbReference type="PDB" id="2YIW">
    <property type="method" value="X-ray"/>
    <property type="resolution" value="2.00 A"/>
    <property type="chains" value="A=2-360"/>
</dbReference>
<dbReference type="PDB" id="2YIX">
    <property type="method" value="X-ray"/>
    <property type="resolution" value="2.30 A"/>
    <property type="chains" value="A=4-354"/>
</dbReference>
<dbReference type="PDB" id="2ZAZ">
    <property type="method" value="X-ray"/>
    <property type="resolution" value="1.80 A"/>
    <property type="chains" value="A=1-360"/>
</dbReference>
<dbReference type="PDB" id="2ZB0">
    <property type="method" value="X-ray"/>
    <property type="resolution" value="2.10 A"/>
    <property type="chains" value="A=1-360"/>
</dbReference>
<dbReference type="PDB" id="2ZB1">
    <property type="method" value="X-ray"/>
    <property type="resolution" value="2.50 A"/>
    <property type="chains" value="A=1-360"/>
</dbReference>
<dbReference type="PDB" id="3BV2">
    <property type="method" value="X-ray"/>
    <property type="resolution" value="2.40 A"/>
    <property type="chains" value="A=2-360"/>
</dbReference>
<dbReference type="PDB" id="3BV3">
    <property type="method" value="X-ray"/>
    <property type="resolution" value="2.59 A"/>
    <property type="chains" value="A=2-360"/>
</dbReference>
<dbReference type="PDB" id="3BX5">
    <property type="method" value="X-ray"/>
    <property type="resolution" value="2.40 A"/>
    <property type="chains" value="A=2-360"/>
</dbReference>
<dbReference type="PDB" id="3C5U">
    <property type="method" value="X-ray"/>
    <property type="resolution" value="2.80 A"/>
    <property type="chains" value="A=2-360"/>
</dbReference>
<dbReference type="PDB" id="3CTQ">
    <property type="method" value="X-ray"/>
    <property type="resolution" value="1.95 A"/>
    <property type="chains" value="A=5-352"/>
</dbReference>
<dbReference type="PDB" id="3D7Z">
    <property type="method" value="X-ray"/>
    <property type="resolution" value="2.10 A"/>
    <property type="chains" value="A=1-360"/>
</dbReference>
<dbReference type="PDB" id="3D83">
    <property type="method" value="X-ray"/>
    <property type="resolution" value="1.90 A"/>
    <property type="chains" value="A=1-360"/>
</dbReference>
<dbReference type="PDB" id="3DS6">
    <property type="method" value="X-ray"/>
    <property type="resolution" value="2.90 A"/>
    <property type="chains" value="A/B/C/D=1-360"/>
</dbReference>
<dbReference type="PDB" id="3DT1">
    <property type="method" value="X-ray"/>
    <property type="resolution" value="2.80 A"/>
    <property type="chains" value="A=1-360"/>
</dbReference>
<dbReference type="PDB" id="3E92">
    <property type="method" value="X-ray"/>
    <property type="resolution" value="2.00 A"/>
    <property type="chains" value="A=1-360"/>
</dbReference>
<dbReference type="PDB" id="3E93">
    <property type="method" value="X-ray"/>
    <property type="resolution" value="2.00 A"/>
    <property type="chains" value="A=1-360"/>
</dbReference>
<dbReference type="PDB" id="3FC1">
    <property type="method" value="X-ray"/>
    <property type="resolution" value="2.40 A"/>
    <property type="chains" value="X=1-360"/>
</dbReference>
<dbReference type="PDB" id="3FI4">
    <property type="method" value="X-ray"/>
    <property type="resolution" value="2.20 A"/>
    <property type="chains" value="A=1-360"/>
</dbReference>
<dbReference type="PDB" id="3FKL">
    <property type="method" value="X-ray"/>
    <property type="resolution" value="2.00 A"/>
    <property type="chains" value="A=1-360"/>
</dbReference>
<dbReference type="PDB" id="3FKN">
    <property type="method" value="X-ray"/>
    <property type="resolution" value="2.00 A"/>
    <property type="chains" value="A=1-360"/>
</dbReference>
<dbReference type="PDB" id="3FKO">
    <property type="method" value="X-ray"/>
    <property type="resolution" value="2.00 A"/>
    <property type="chains" value="A=1-360"/>
</dbReference>
<dbReference type="PDB" id="3FL4">
    <property type="method" value="X-ray"/>
    <property type="resolution" value="1.80 A"/>
    <property type="chains" value="A=1-360"/>
</dbReference>
<dbReference type="PDB" id="3FLN">
    <property type="method" value="X-ray"/>
    <property type="resolution" value="1.90 A"/>
    <property type="chains" value="C=1-360"/>
</dbReference>
<dbReference type="PDB" id="3FLQ">
    <property type="method" value="X-ray"/>
    <property type="resolution" value="1.90 A"/>
    <property type="chains" value="A=1-360"/>
</dbReference>
<dbReference type="PDB" id="3FLS">
    <property type="method" value="X-ray"/>
    <property type="resolution" value="2.30 A"/>
    <property type="chains" value="A=1-360"/>
</dbReference>
<dbReference type="PDB" id="3FLW">
    <property type="method" value="X-ray"/>
    <property type="resolution" value="2.10 A"/>
    <property type="chains" value="A=1-360"/>
</dbReference>
<dbReference type="PDB" id="3FLY">
    <property type="method" value="X-ray"/>
    <property type="resolution" value="1.80 A"/>
    <property type="chains" value="A=1-360"/>
</dbReference>
<dbReference type="PDB" id="3FLZ">
    <property type="method" value="X-ray"/>
    <property type="resolution" value="2.23 A"/>
    <property type="chains" value="A=1-360"/>
</dbReference>
<dbReference type="PDB" id="3FMH">
    <property type="method" value="X-ray"/>
    <property type="resolution" value="1.90 A"/>
    <property type="chains" value="A=1-360"/>
</dbReference>
<dbReference type="PDB" id="3FMJ">
    <property type="method" value="X-ray"/>
    <property type="resolution" value="2.00 A"/>
    <property type="chains" value="A=1-360"/>
</dbReference>
<dbReference type="PDB" id="3FMK">
    <property type="method" value="X-ray"/>
    <property type="resolution" value="1.70 A"/>
    <property type="chains" value="A=1-360"/>
</dbReference>
<dbReference type="PDB" id="3FML">
    <property type="method" value="X-ray"/>
    <property type="resolution" value="2.10 A"/>
    <property type="chains" value="A=1-360"/>
</dbReference>
<dbReference type="PDB" id="3FMM">
    <property type="method" value="X-ray"/>
    <property type="resolution" value="2.00 A"/>
    <property type="chains" value="A=1-360"/>
</dbReference>
<dbReference type="PDB" id="3FMN">
    <property type="method" value="X-ray"/>
    <property type="resolution" value="1.90 A"/>
    <property type="chains" value="A=1-360"/>
</dbReference>
<dbReference type="PDB" id="3FSF">
    <property type="method" value="X-ray"/>
    <property type="resolution" value="2.10 A"/>
    <property type="chains" value="A=1-360"/>
</dbReference>
<dbReference type="PDB" id="3FSK">
    <property type="method" value="X-ray"/>
    <property type="resolution" value="2.00 A"/>
    <property type="chains" value="A=1-360"/>
</dbReference>
<dbReference type="PDB" id="3GC7">
    <property type="method" value="X-ray"/>
    <property type="resolution" value="1.80 A"/>
    <property type="chains" value="A=1-360"/>
</dbReference>
<dbReference type="PDB" id="3GCP">
    <property type="method" value="X-ray"/>
    <property type="resolution" value="2.25 A"/>
    <property type="chains" value="A=2-360"/>
</dbReference>
<dbReference type="PDB" id="3GCQ">
    <property type="method" value="X-ray"/>
    <property type="resolution" value="2.00 A"/>
    <property type="chains" value="A=2-360"/>
</dbReference>
<dbReference type="PDB" id="3GCS">
    <property type="method" value="X-ray"/>
    <property type="resolution" value="2.10 A"/>
    <property type="chains" value="A=2-360"/>
</dbReference>
<dbReference type="PDB" id="3GCU">
    <property type="method" value="X-ray"/>
    <property type="resolution" value="2.10 A"/>
    <property type="chains" value="A/B=2-360"/>
</dbReference>
<dbReference type="PDB" id="3GCV">
    <property type="method" value="X-ray"/>
    <property type="resolution" value="2.30 A"/>
    <property type="chains" value="A=2-360"/>
</dbReference>
<dbReference type="PDB" id="3GFE">
    <property type="method" value="X-ray"/>
    <property type="resolution" value="2.10 A"/>
    <property type="chains" value="A=1-360"/>
</dbReference>
<dbReference type="PDB" id="3GI3">
    <property type="method" value="X-ray"/>
    <property type="resolution" value="2.40 A"/>
    <property type="chains" value="A=1-360"/>
</dbReference>
<dbReference type="PDB" id="3HA8">
    <property type="method" value="X-ray"/>
    <property type="resolution" value="2.48 A"/>
    <property type="chains" value="A=1-360"/>
</dbReference>
<dbReference type="PDB" id="3HEC">
    <property type="method" value="X-ray"/>
    <property type="resolution" value="2.50 A"/>
    <property type="chains" value="A=5-352"/>
</dbReference>
<dbReference type="PDB" id="3HEG">
    <property type="method" value="X-ray"/>
    <property type="resolution" value="2.20 A"/>
    <property type="chains" value="A=5-352"/>
</dbReference>
<dbReference type="PDB" id="3HL7">
    <property type="method" value="X-ray"/>
    <property type="resolution" value="1.88 A"/>
    <property type="chains" value="A=1-360"/>
</dbReference>
<dbReference type="PDB" id="3HLL">
    <property type="method" value="X-ray"/>
    <property type="resolution" value="1.95 A"/>
    <property type="chains" value="A=1-360"/>
</dbReference>
<dbReference type="PDB" id="3HP2">
    <property type="method" value="X-ray"/>
    <property type="resolution" value="2.15 A"/>
    <property type="chains" value="A=1-360"/>
</dbReference>
<dbReference type="PDB" id="3HP5">
    <property type="method" value="X-ray"/>
    <property type="resolution" value="2.30 A"/>
    <property type="chains" value="A=1-360"/>
</dbReference>
<dbReference type="PDB" id="3HRB">
    <property type="method" value="X-ray"/>
    <property type="resolution" value="2.20 A"/>
    <property type="chains" value="A=2-360"/>
</dbReference>
<dbReference type="PDB" id="3HUB">
    <property type="method" value="X-ray"/>
    <property type="resolution" value="2.25 A"/>
    <property type="chains" value="A=2-360"/>
</dbReference>
<dbReference type="PDB" id="3HUC">
    <property type="method" value="X-ray"/>
    <property type="resolution" value="1.80 A"/>
    <property type="chains" value="A=2-360"/>
</dbReference>
<dbReference type="PDB" id="3HV3">
    <property type="method" value="X-ray"/>
    <property type="resolution" value="2.00 A"/>
    <property type="chains" value="A=2-360"/>
</dbReference>
<dbReference type="PDB" id="3HV4">
    <property type="method" value="X-ray"/>
    <property type="resolution" value="2.60 A"/>
    <property type="chains" value="A/B=2-360"/>
</dbReference>
<dbReference type="PDB" id="3HV5">
    <property type="method" value="X-ray"/>
    <property type="resolution" value="2.25 A"/>
    <property type="chains" value="A/B=2-360"/>
</dbReference>
<dbReference type="PDB" id="3HV6">
    <property type="method" value="X-ray"/>
    <property type="resolution" value="1.95 A"/>
    <property type="chains" value="A=2-360"/>
</dbReference>
<dbReference type="PDB" id="3HV7">
    <property type="method" value="X-ray"/>
    <property type="resolution" value="2.40 A"/>
    <property type="chains" value="A=2-360"/>
</dbReference>
<dbReference type="PDB" id="3HVC">
    <property type="method" value="X-ray"/>
    <property type="resolution" value="2.10 A"/>
    <property type="chains" value="A=1-360"/>
</dbReference>
<dbReference type="PDB" id="3IPH">
    <property type="method" value="X-ray"/>
    <property type="resolution" value="2.10 A"/>
    <property type="chains" value="A=1-360"/>
</dbReference>
<dbReference type="PDB" id="3ITZ">
    <property type="method" value="X-ray"/>
    <property type="resolution" value="2.25 A"/>
    <property type="chains" value="A=1-360"/>
</dbReference>
<dbReference type="PDB" id="3IW5">
    <property type="method" value="X-ray"/>
    <property type="resolution" value="2.50 A"/>
    <property type="chains" value="A=2-360"/>
</dbReference>
<dbReference type="PDB" id="3IW6">
    <property type="method" value="X-ray"/>
    <property type="resolution" value="2.10 A"/>
    <property type="chains" value="A=2-360"/>
</dbReference>
<dbReference type="PDB" id="3IW7">
    <property type="method" value="X-ray"/>
    <property type="resolution" value="2.40 A"/>
    <property type="chains" value="A=2-360"/>
</dbReference>
<dbReference type="PDB" id="3IW8">
    <property type="method" value="X-ray"/>
    <property type="resolution" value="2.00 A"/>
    <property type="chains" value="A=2-360"/>
</dbReference>
<dbReference type="PDB" id="3K3I">
    <property type="method" value="X-ray"/>
    <property type="resolution" value="1.70 A"/>
    <property type="chains" value="A=5-352"/>
</dbReference>
<dbReference type="PDB" id="3K3J">
    <property type="method" value="X-ray"/>
    <property type="resolution" value="2.00 A"/>
    <property type="chains" value="A=1-360"/>
</dbReference>
<dbReference type="PDB" id="3KF7">
    <property type="method" value="X-ray"/>
    <property type="resolution" value="2.00 A"/>
    <property type="chains" value="A=1-360"/>
</dbReference>
<dbReference type="PDB" id="3KQ7">
    <property type="method" value="X-ray"/>
    <property type="resolution" value="1.80 A"/>
    <property type="chains" value="A=1-360"/>
</dbReference>
<dbReference type="PDB" id="3L8S">
    <property type="method" value="X-ray"/>
    <property type="resolution" value="2.35 A"/>
    <property type="chains" value="A=2-360"/>
</dbReference>
<dbReference type="PDB" id="3L8X">
    <property type="method" value="X-ray"/>
    <property type="resolution" value="2.15 A"/>
    <property type="chains" value="A=2-360"/>
</dbReference>
<dbReference type="PDB" id="3LFA">
    <property type="method" value="X-ray"/>
    <property type="resolution" value="2.10 A"/>
    <property type="chains" value="A=2-360"/>
</dbReference>
<dbReference type="PDB" id="3LFB">
    <property type="method" value="X-ray"/>
    <property type="resolution" value="2.60 A"/>
    <property type="chains" value="A=2-360"/>
</dbReference>
<dbReference type="PDB" id="3LFC">
    <property type="method" value="X-ray"/>
    <property type="resolution" value="2.80 A"/>
    <property type="chains" value="A=2-360"/>
</dbReference>
<dbReference type="PDB" id="3LFD">
    <property type="method" value="X-ray"/>
    <property type="resolution" value="3.40 A"/>
    <property type="chains" value="A=2-360"/>
</dbReference>
<dbReference type="PDB" id="3LFE">
    <property type="method" value="X-ray"/>
    <property type="resolution" value="2.30 A"/>
    <property type="chains" value="A=2-360"/>
</dbReference>
<dbReference type="PDB" id="3LFF">
    <property type="method" value="X-ray"/>
    <property type="resolution" value="1.50 A"/>
    <property type="chains" value="A=2-360"/>
</dbReference>
<dbReference type="PDB" id="3LHJ">
    <property type="method" value="X-ray"/>
    <property type="resolution" value="3.31 A"/>
    <property type="chains" value="A=1-360"/>
</dbReference>
<dbReference type="PDB" id="3MGY">
    <property type="method" value="X-ray"/>
    <property type="resolution" value="2.10 A"/>
    <property type="chains" value="A=1-360"/>
</dbReference>
<dbReference type="PDB" id="3MH0">
    <property type="method" value="X-ray"/>
    <property type="resolution" value="2.00 A"/>
    <property type="chains" value="A=1-360"/>
</dbReference>
<dbReference type="PDB" id="3MH1">
    <property type="method" value="X-ray"/>
    <property type="resolution" value="2.20 A"/>
    <property type="chains" value="A=1-360"/>
</dbReference>
<dbReference type="PDB" id="3MH2">
    <property type="method" value="X-ray"/>
    <property type="resolution" value="2.30 A"/>
    <property type="chains" value="A=1-360"/>
</dbReference>
<dbReference type="PDB" id="3MH3">
    <property type="method" value="X-ray"/>
    <property type="resolution" value="2.20 A"/>
    <property type="chains" value="A=1-360"/>
</dbReference>
<dbReference type="PDB" id="3MPA">
    <property type="method" value="X-ray"/>
    <property type="resolution" value="2.10 A"/>
    <property type="chains" value="A=1-360"/>
</dbReference>
<dbReference type="PDB" id="3MPT">
    <property type="method" value="X-ray"/>
    <property type="resolution" value="1.89 A"/>
    <property type="chains" value="A=1-360"/>
</dbReference>
<dbReference type="PDB" id="3MVL">
    <property type="method" value="X-ray"/>
    <property type="resolution" value="2.80 A"/>
    <property type="chains" value="A/B=2-360"/>
</dbReference>
<dbReference type="PDB" id="3MVM">
    <property type="method" value="X-ray"/>
    <property type="resolution" value="2.00 A"/>
    <property type="chains" value="A/B=2-360"/>
</dbReference>
<dbReference type="PDB" id="3MW1">
    <property type="method" value="X-ray"/>
    <property type="resolution" value="2.80 A"/>
    <property type="chains" value="A=2-360"/>
</dbReference>
<dbReference type="PDB" id="3NEW">
    <property type="method" value="X-ray"/>
    <property type="resolution" value="2.51 A"/>
    <property type="chains" value="A=1-360"/>
</dbReference>
<dbReference type="PDB" id="3NNU">
    <property type="method" value="X-ray"/>
    <property type="resolution" value="2.40 A"/>
    <property type="chains" value="A=1-354"/>
</dbReference>
<dbReference type="PDB" id="3NNV">
    <property type="method" value="X-ray"/>
    <property type="resolution" value="2.10 A"/>
    <property type="chains" value="A=1-354"/>
</dbReference>
<dbReference type="PDB" id="3NNW">
    <property type="method" value="X-ray"/>
    <property type="resolution" value="1.89 A"/>
    <property type="chains" value="A=1-354"/>
</dbReference>
<dbReference type="PDB" id="3NNX">
    <property type="method" value="X-ray"/>
    <property type="resolution" value="2.28 A"/>
    <property type="chains" value="A=1-354"/>
</dbReference>
<dbReference type="PDB" id="3NWW">
    <property type="method" value="X-ray"/>
    <property type="resolution" value="2.09 A"/>
    <property type="chains" value="A=2-360"/>
</dbReference>
<dbReference type="PDB" id="3O8P">
    <property type="method" value="X-ray"/>
    <property type="resolution" value="2.10 A"/>
    <property type="chains" value="A=1-360"/>
</dbReference>
<dbReference type="PDB" id="3O8T">
    <property type="method" value="X-ray"/>
    <property type="resolution" value="2.00 A"/>
    <property type="chains" value="A=1-360"/>
</dbReference>
<dbReference type="PDB" id="3O8U">
    <property type="method" value="X-ray"/>
    <property type="resolution" value="2.10 A"/>
    <property type="chains" value="A=1-360"/>
</dbReference>
<dbReference type="PDB" id="3OBG">
    <property type="method" value="X-ray"/>
    <property type="resolution" value="2.80 A"/>
    <property type="chains" value="A=1-360"/>
</dbReference>
<dbReference type="PDB" id="3OBJ">
    <property type="method" value="X-ray"/>
    <property type="resolution" value="2.40 A"/>
    <property type="chains" value="A=1-360"/>
</dbReference>
<dbReference type="PDB" id="3OC1">
    <property type="method" value="X-ray"/>
    <property type="resolution" value="2.59 A"/>
    <property type="chains" value="A=1-360"/>
</dbReference>
<dbReference type="PDB" id="3OCG">
    <property type="method" value="X-ray"/>
    <property type="resolution" value="2.21 A"/>
    <property type="chains" value="A=2-360"/>
</dbReference>
<dbReference type="PDB" id="3OD6">
    <property type="method" value="X-ray"/>
    <property type="resolution" value="2.68 A"/>
    <property type="chains" value="X=1-360"/>
</dbReference>
<dbReference type="PDB" id="3ODY">
    <property type="method" value="X-ray"/>
    <property type="resolution" value="2.20 A"/>
    <property type="chains" value="X=1-360"/>
</dbReference>
<dbReference type="PDB" id="3ODZ">
    <property type="method" value="X-ray"/>
    <property type="resolution" value="2.30 A"/>
    <property type="chains" value="X=1-360"/>
</dbReference>
<dbReference type="PDB" id="3OEF">
    <property type="method" value="X-ray"/>
    <property type="resolution" value="1.60 A"/>
    <property type="chains" value="X=1-360"/>
</dbReference>
<dbReference type="PDB" id="3PG3">
    <property type="method" value="X-ray"/>
    <property type="resolution" value="2.00 A"/>
    <property type="chains" value="A=2-360"/>
</dbReference>
<dbReference type="PDB" id="3QUD">
    <property type="method" value="X-ray"/>
    <property type="resolution" value="2.00 A"/>
    <property type="chains" value="A=2-360"/>
</dbReference>
<dbReference type="PDB" id="3QUE">
    <property type="method" value="X-ray"/>
    <property type="resolution" value="2.70 A"/>
    <property type="chains" value="A=2-360"/>
</dbReference>
<dbReference type="PDB" id="3RIN">
    <property type="method" value="X-ray"/>
    <property type="resolution" value="2.20 A"/>
    <property type="chains" value="A=1-360"/>
</dbReference>
<dbReference type="PDB" id="3ROC">
    <property type="method" value="X-ray"/>
    <property type="resolution" value="1.70 A"/>
    <property type="chains" value="A=1-360"/>
</dbReference>
<dbReference type="PDB" id="3S3I">
    <property type="method" value="X-ray"/>
    <property type="resolution" value="1.80 A"/>
    <property type="chains" value="A=4-352"/>
</dbReference>
<dbReference type="PDB" id="3S4Q">
    <property type="method" value="X-ray"/>
    <property type="resolution" value="2.27 A"/>
    <property type="chains" value="A=2-360"/>
</dbReference>
<dbReference type="PDB" id="3U8W">
    <property type="method" value="X-ray"/>
    <property type="resolution" value="2.15 A"/>
    <property type="chains" value="A=1-360"/>
</dbReference>
<dbReference type="PDB" id="3UVP">
    <property type="method" value="X-ray"/>
    <property type="resolution" value="2.40 A"/>
    <property type="chains" value="A=2-360"/>
</dbReference>
<dbReference type="PDB" id="3UVQ">
    <property type="method" value="X-ray"/>
    <property type="resolution" value="2.20 A"/>
    <property type="chains" value="A=2-360"/>
</dbReference>
<dbReference type="PDB" id="3UVR">
    <property type="method" value="X-ray"/>
    <property type="resolution" value="2.10 A"/>
    <property type="chains" value="A=2-360"/>
</dbReference>
<dbReference type="PDB" id="3ZS5">
    <property type="method" value="X-ray"/>
    <property type="resolution" value="1.60 A"/>
    <property type="chains" value="A=2-360"/>
</dbReference>
<dbReference type="PDB" id="3ZSG">
    <property type="method" value="X-ray"/>
    <property type="resolution" value="1.89 A"/>
    <property type="chains" value="A=2-360"/>
</dbReference>
<dbReference type="PDB" id="3ZSH">
    <property type="method" value="X-ray"/>
    <property type="resolution" value="2.05 A"/>
    <property type="chains" value="A=2-360"/>
</dbReference>
<dbReference type="PDB" id="3ZSI">
    <property type="method" value="X-ray"/>
    <property type="resolution" value="2.40 A"/>
    <property type="chains" value="A=2-360"/>
</dbReference>
<dbReference type="PDB" id="3ZYA">
    <property type="method" value="X-ray"/>
    <property type="resolution" value="1.90 A"/>
    <property type="chains" value="A=1-360"/>
</dbReference>
<dbReference type="PDB" id="4A9Y">
    <property type="method" value="X-ray"/>
    <property type="resolution" value="2.20 A"/>
    <property type="chains" value="A=2-360"/>
</dbReference>
<dbReference type="PDB" id="4AA0">
    <property type="method" value="X-ray"/>
    <property type="resolution" value="1.80 A"/>
    <property type="chains" value="A=2-360"/>
</dbReference>
<dbReference type="PDB" id="4AA4">
    <property type="method" value="X-ray"/>
    <property type="resolution" value="2.30 A"/>
    <property type="chains" value="A=2-360"/>
</dbReference>
<dbReference type="PDB" id="4AA5">
    <property type="method" value="X-ray"/>
    <property type="resolution" value="2.38 A"/>
    <property type="chains" value="A=2-360"/>
</dbReference>
<dbReference type="PDB" id="4AAC">
    <property type="method" value="X-ray"/>
    <property type="resolution" value="2.50 A"/>
    <property type="chains" value="A=2-360"/>
</dbReference>
<dbReference type="PDB" id="4DLI">
    <property type="method" value="X-ray"/>
    <property type="resolution" value="1.91 A"/>
    <property type="chains" value="A=2-360"/>
</dbReference>
<dbReference type="PDB" id="4DLJ">
    <property type="method" value="X-ray"/>
    <property type="resolution" value="2.60 A"/>
    <property type="chains" value="A=2-360"/>
</dbReference>
<dbReference type="PDB" id="4E5A">
    <property type="method" value="X-ray"/>
    <property type="resolution" value="1.87 A"/>
    <property type="chains" value="X=1-360"/>
</dbReference>
<dbReference type="PDB" id="4E5B">
    <property type="method" value="X-ray"/>
    <property type="resolution" value="2.00 A"/>
    <property type="chains" value="A=1-360"/>
</dbReference>
<dbReference type="PDB" id="4E6A">
    <property type="method" value="X-ray"/>
    <property type="resolution" value="2.09 A"/>
    <property type="chains" value="A=1-360"/>
</dbReference>
<dbReference type="PDB" id="4E6C">
    <property type="method" value="X-ray"/>
    <property type="resolution" value="2.39 A"/>
    <property type="chains" value="A=1-360"/>
</dbReference>
<dbReference type="PDB" id="4E8A">
    <property type="method" value="X-ray"/>
    <property type="resolution" value="2.70 A"/>
    <property type="chains" value="A=1-360"/>
</dbReference>
<dbReference type="PDB" id="4EH2">
    <property type="method" value="X-ray"/>
    <property type="resolution" value="2.00 A"/>
    <property type="chains" value="A=2-360"/>
</dbReference>
<dbReference type="PDB" id="4EH3">
    <property type="method" value="X-ray"/>
    <property type="resolution" value="2.40 A"/>
    <property type="chains" value="A=2-360"/>
</dbReference>
<dbReference type="PDB" id="4EH4">
    <property type="method" value="X-ray"/>
    <property type="resolution" value="2.50 A"/>
    <property type="chains" value="A=2-360"/>
</dbReference>
<dbReference type="PDB" id="4EH5">
    <property type="method" value="X-ray"/>
    <property type="resolution" value="2.00 A"/>
    <property type="chains" value="A=2-360"/>
</dbReference>
<dbReference type="PDB" id="4EH6">
    <property type="method" value="X-ray"/>
    <property type="resolution" value="2.10 A"/>
    <property type="chains" value="A=2-360"/>
</dbReference>
<dbReference type="PDB" id="4EH7">
    <property type="method" value="X-ray"/>
    <property type="resolution" value="2.10 A"/>
    <property type="chains" value="A=2-360"/>
</dbReference>
<dbReference type="PDB" id="4EH8">
    <property type="method" value="X-ray"/>
    <property type="resolution" value="2.20 A"/>
    <property type="chains" value="A=2-360"/>
</dbReference>
<dbReference type="PDB" id="4EH9">
    <property type="method" value="X-ray"/>
    <property type="resolution" value="2.10 A"/>
    <property type="chains" value="A=2-360"/>
</dbReference>
<dbReference type="PDB" id="4EHV">
    <property type="method" value="X-ray"/>
    <property type="resolution" value="1.60 A"/>
    <property type="chains" value="A=2-360"/>
</dbReference>
<dbReference type="PDB" id="4EWQ">
    <property type="method" value="X-ray"/>
    <property type="resolution" value="2.10 A"/>
    <property type="chains" value="A=2-360"/>
</dbReference>
<dbReference type="PDB" id="4F9W">
    <property type="method" value="X-ray"/>
    <property type="resolution" value="2.00 A"/>
    <property type="chains" value="A=2-360"/>
</dbReference>
<dbReference type="PDB" id="4F9Y">
    <property type="method" value="X-ray"/>
    <property type="resolution" value="1.85 A"/>
    <property type="chains" value="A=2-360"/>
</dbReference>
<dbReference type="PDB" id="4FA2">
    <property type="method" value="X-ray"/>
    <property type="resolution" value="2.00 A"/>
    <property type="chains" value="A=2-360"/>
</dbReference>
<dbReference type="PDB" id="4GEO">
    <property type="method" value="X-ray"/>
    <property type="resolution" value="1.66 A"/>
    <property type="chains" value="A=2-360"/>
</dbReference>
<dbReference type="PDB" id="4KIN">
    <property type="method" value="X-ray"/>
    <property type="resolution" value="1.97 A"/>
    <property type="chains" value="A/B/C/D=2-360"/>
</dbReference>
<dbReference type="PDB" id="4KIP">
    <property type="method" value="X-ray"/>
    <property type="resolution" value="2.27 A"/>
    <property type="chains" value="A/B=2-360"/>
</dbReference>
<dbReference type="PDB" id="4KIQ">
    <property type="method" value="X-ray"/>
    <property type="resolution" value="2.50 A"/>
    <property type="chains" value="A/B/C/D=2-360"/>
</dbReference>
<dbReference type="PDB" id="4L8M">
    <property type="method" value="X-ray"/>
    <property type="resolution" value="2.10 A"/>
    <property type="chains" value="A=2-360"/>
</dbReference>
<dbReference type="PDB" id="4R3C">
    <property type="method" value="X-ray"/>
    <property type="resolution" value="2.06 A"/>
    <property type="chains" value="A=2-360"/>
</dbReference>
<dbReference type="PDB" id="4ZTH">
    <property type="method" value="X-ray"/>
    <property type="resolution" value="2.15 A"/>
    <property type="chains" value="A=2-360"/>
</dbReference>
<dbReference type="PDB" id="5ETA">
    <property type="method" value="X-ray"/>
    <property type="resolution" value="2.80 A"/>
    <property type="chains" value="A/B=1-360"/>
</dbReference>
<dbReference type="PDB" id="5ETC">
    <property type="method" value="X-ray"/>
    <property type="resolution" value="2.42 A"/>
    <property type="chains" value="A=1-360"/>
</dbReference>
<dbReference type="PDB" id="5ETF">
    <property type="method" value="X-ray"/>
    <property type="resolution" value="2.40 A"/>
    <property type="chains" value="A=1-360"/>
</dbReference>
<dbReference type="PDB" id="5ETI">
    <property type="method" value="X-ray"/>
    <property type="resolution" value="2.80 A"/>
    <property type="chains" value="A=1-360"/>
</dbReference>
<dbReference type="PDB" id="5ML5">
    <property type="method" value="X-ray"/>
    <property type="resolution" value="1.90 A"/>
    <property type="chains" value="A=1-360"/>
</dbReference>
<dbReference type="PDB" id="5MTX">
    <property type="method" value="X-ray"/>
    <property type="resolution" value="1.80 A"/>
    <property type="chains" value="A=1-360"/>
</dbReference>
<dbReference type="PDB" id="5MTY">
    <property type="method" value="X-ray"/>
    <property type="resolution" value="2.31 A"/>
    <property type="chains" value="A=1-360"/>
</dbReference>
<dbReference type="PDB" id="5MZ3">
    <property type="method" value="X-ray"/>
    <property type="resolution" value="2.15 A"/>
    <property type="chains" value="A=1-360"/>
</dbReference>
<dbReference type="PDB" id="5N63">
    <property type="method" value="X-ray"/>
    <property type="resolution" value="2.40 A"/>
    <property type="chains" value="A=1-360"/>
</dbReference>
<dbReference type="PDB" id="5N64">
    <property type="method" value="X-ray"/>
    <property type="resolution" value="2.40 A"/>
    <property type="chains" value="A=1-360"/>
</dbReference>
<dbReference type="PDB" id="5N65">
    <property type="method" value="X-ray"/>
    <property type="resolution" value="2.00 A"/>
    <property type="chains" value="A=1-360"/>
</dbReference>
<dbReference type="PDB" id="5N66">
    <property type="method" value="X-ray"/>
    <property type="resolution" value="2.40 A"/>
    <property type="chains" value="A=1-360"/>
</dbReference>
<dbReference type="PDB" id="5N67">
    <property type="method" value="X-ray"/>
    <property type="resolution" value="1.90 A"/>
    <property type="chains" value="A=1-360"/>
</dbReference>
<dbReference type="PDB" id="5N68">
    <property type="method" value="X-ray"/>
    <property type="resolution" value="1.85 A"/>
    <property type="chains" value="A=1-360"/>
</dbReference>
<dbReference type="PDB" id="5O8U">
    <property type="method" value="X-ray"/>
    <property type="resolution" value="2.00 A"/>
    <property type="chains" value="A=1-360"/>
</dbReference>
<dbReference type="PDB" id="5O8V">
    <property type="method" value="X-ray"/>
    <property type="resolution" value="2.00 A"/>
    <property type="chains" value="A=1-360"/>
</dbReference>
<dbReference type="PDB" id="5OMG">
    <property type="method" value="X-ray"/>
    <property type="resolution" value="2.00 A"/>
    <property type="chains" value="A=1-360"/>
</dbReference>
<dbReference type="PDB" id="5OMH">
    <property type="method" value="X-ray"/>
    <property type="resolution" value="2.50 A"/>
    <property type="chains" value="A=1-360"/>
</dbReference>
<dbReference type="PDB" id="5TBE">
    <property type="method" value="X-ray"/>
    <property type="resolution" value="2.44 A"/>
    <property type="chains" value="A=1-360"/>
</dbReference>
<dbReference type="PDB" id="5TCO">
    <property type="method" value="X-ray"/>
    <property type="resolution" value="2.10 A"/>
    <property type="chains" value="A=2-360"/>
</dbReference>
<dbReference type="PDB" id="5WJJ">
    <property type="method" value="X-ray"/>
    <property type="resolution" value="1.60 A"/>
    <property type="chains" value="A=1-360"/>
</dbReference>
<dbReference type="PDB" id="5XYX">
    <property type="method" value="X-ray"/>
    <property type="resolution" value="2.61 A"/>
    <property type="chains" value="A=1-360"/>
</dbReference>
<dbReference type="PDB" id="5XYY">
    <property type="method" value="X-ray"/>
    <property type="resolution" value="1.70 A"/>
    <property type="chains" value="A=1-360"/>
</dbReference>
<dbReference type="PDB" id="6ANL">
    <property type="method" value="X-ray"/>
    <property type="resolution" value="2.00 A"/>
    <property type="chains" value="A=1-360"/>
</dbReference>
<dbReference type="PDB" id="6HWT">
    <property type="method" value="X-ray"/>
    <property type="resolution" value="1.70 A"/>
    <property type="chains" value="A=2-360"/>
</dbReference>
<dbReference type="PDB" id="6HWU">
    <property type="method" value="X-ray"/>
    <property type="resolution" value="2.30 A"/>
    <property type="chains" value="A=2-360"/>
</dbReference>
<dbReference type="PDB" id="6HWV">
    <property type="method" value="X-ray"/>
    <property type="resolution" value="1.70 A"/>
    <property type="chains" value="A=2-360"/>
</dbReference>
<dbReference type="PDB" id="6M95">
    <property type="method" value="X-ray"/>
    <property type="resolution" value="1.80 A"/>
    <property type="chains" value="A=1-360"/>
</dbReference>
<dbReference type="PDB" id="6M9L">
    <property type="method" value="X-ray"/>
    <property type="resolution" value="2.45 A"/>
    <property type="chains" value="A=1-360"/>
</dbReference>
<dbReference type="PDB" id="6OHD">
    <property type="method" value="X-ray"/>
    <property type="resolution" value="2.50 A"/>
    <property type="chains" value="A=1-360"/>
</dbReference>
<dbReference type="PDB" id="6QDZ">
    <property type="method" value="X-ray"/>
    <property type="resolution" value="1.73 A"/>
    <property type="chains" value="A=1-360"/>
</dbReference>
<dbReference type="PDB" id="6QE1">
    <property type="method" value="X-ray"/>
    <property type="resolution" value="1.85 A"/>
    <property type="chains" value="A=1-360"/>
</dbReference>
<dbReference type="PDB" id="6QYX">
    <property type="method" value="X-ray"/>
    <property type="resolution" value="1.66 A"/>
    <property type="chains" value="A=1-166, A=197-360"/>
</dbReference>
<dbReference type="PDB" id="6RFO">
    <property type="method" value="X-ray"/>
    <property type="resolution" value="1.70 A"/>
    <property type="chains" value="A=167-196"/>
</dbReference>
<dbReference type="PDB" id="6SFI">
    <property type="method" value="X-ray"/>
    <property type="resolution" value="1.60 A"/>
    <property type="chains" value="A=1-360"/>
</dbReference>
<dbReference type="PDB" id="6SFJ">
    <property type="method" value="X-ray"/>
    <property type="resolution" value="1.95 A"/>
    <property type="chains" value="A=1-360"/>
</dbReference>
<dbReference type="PDB" id="6SFK">
    <property type="method" value="X-ray"/>
    <property type="resolution" value="1.80 A"/>
    <property type="chains" value="A=1-360"/>
</dbReference>
<dbReference type="PDB" id="6SFO">
    <property type="method" value="X-ray"/>
    <property type="resolution" value="1.75 A"/>
    <property type="chains" value="A=1-360"/>
</dbReference>
<dbReference type="PDB" id="6TCA">
    <property type="method" value="X-ray"/>
    <property type="resolution" value="3.70 A"/>
    <property type="chains" value="B/D/F/H=1-360"/>
</dbReference>
<dbReference type="PDB" id="6ZQS">
    <property type="method" value="X-ray"/>
    <property type="resolution" value="1.95 A"/>
    <property type="chains" value="A=1-360"/>
</dbReference>
<dbReference type="PDB" id="6ZWP">
    <property type="method" value="X-ray"/>
    <property type="resolution" value="1.90 A"/>
    <property type="chains" value="A=1-360"/>
</dbReference>
<dbReference type="PDB" id="8A8M">
    <property type="method" value="EM"/>
    <property type="resolution" value="4.00 A"/>
    <property type="chains" value="A=1-360"/>
</dbReference>
<dbReference type="PDB" id="8VXE">
    <property type="method" value="X-ray"/>
    <property type="resolution" value="1.85 A"/>
    <property type="chains" value="A=2-360"/>
</dbReference>
<dbReference type="PDB" id="8X3M">
    <property type="method" value="X-ray"/>
    <property type="resolution" value="1.85 A"/>
    <property type="chains" value="A=1-360"/>
</dbReference>
<dbReference type="PDB" id="8YD9">
    <property type="method" value="X-ray"/>
    <property type="resolution" value="1.66 A"/>
    <property type="chains" value="A=1-360"/>
</dbReference>
<dbReference type="PDB" id="9CJ1">
    <property type="method" value="X-ray"/>
    <property type="resolution" value="1.80 A"/>
    <property type="chains" value="A=1-360"/>
</dbReference>
<dbReference type="PDB" id="9CJ2">
    <property type="method" value="X-ray"/>
    <property type="resolution" value="2.83 A"/>
    <property type="chains" value="A/B=1-360"/>
</dbReference>
<dbReference type="PDB" id="9CJ3">
    <property type="method" value="X-ray"/>
    <property type="resolution" value="1.95 A"/>
    <property type="chains" value="A=1-360"/>
</dbReference>
<dbReference type="PDB" id="9CJ4">
    <property type="method" value="X-ray"/>
    <property type="resolution" value="1.80 A"/>
    <property type="chains" value="A=1-360"/>
</dbReference>
<dbReference type="PDB" id="9CJ5">
    <property type="method" value="X-ray"/>
    <property type="resolution" value="3.30 A"/>
    <property type="chains" value="A=1-360"/>
</dbReference>
<dbReference type="PDB" id="9MHB">
    <property type="method" value="X-ray"/>
    <property type="resolution" value="1.65 A"/>
    <property type="chains" value="A=2-360"/>
</dbReference>
<dbReference type="PDBsum" id="1A9U"/>
<dbReference type="PDBsum" id="1BL6"/>
<dbReference type="PDBsum" id="1BL7"/>
<dbReference type="PDBsum" id="1BMK"/>
<dbReference type="PDBsum" id="1DI9"/>
<dbReference type="PDBsum" id="1IAN"/>
<dbReference type="PDBsum" id="1KV1"/>
<dbReference type="PDBsum" id="1KV2"/>
<dbReference type="PDBsum" id="1M7Q"/>
<dbReference type="PDBsum" id="1OUK"/>
<dbReference type="PDBsum" id="1OUY"/>
<dbReference type="PDBsum" id="1OVE"/>
<dbReference type="PDBsum" id="1OZ1"/>
<dbReference type="PDBsum" id="1R39"/>
<dbReference type="PDBsum" id="1R3C"/>
<dbReference type="PDBsum" id="1W7H"/>
<dbReference type="PDBsum" id="1W82"/>
<dbReference type="PDBsum" id="1W83"/>
<dbReference type="PDBsum" id="1W84"/>
<dbReference type="PDBsum" id="1WBN"/>
<dbReference type="PDBsum" id="1WBO"/>
<dbReference type="PDBsum" id="1WBS"/>
<dbReference type="PDBsum" id="1WBT"/>
<dbReference type="PDBsum" id="1WBV"/>
<dbReference type="PDBsum" id="1WBW"/>
<dbReference type="PDBsum" id="1WFC"/>
<dbReference type="PDBsum" id="1YQJ"/>
<dbReference type="PDBsum" id="1ZYJ"/>
<dbReference type="PDBsum" id="1ZZ2"/>
<dbReference type="PDBsum" id="1ZZL"/>
<dbReference type="PDBsum" id="2BAJ"/>
<dbReference type="PDBsum" id="2BAK"/>
<dbReference type="PDBsum" id="2BAL"/>
<dbReference type="PDBsum" id="2BAQ"/>
<dbReference type="PDBsum" id="2FSL"/>
<dbReference type="PDBsum" id="2FSM"/>
<dbReference type="PDBsum" id="2FSO"/>
<dbReference type="PDBsum" id="2FST"/>
<dbReference type="PDBsum" id="2GFS"/>
<dbReference type="PDBsum" id="2I0H"/>
<dbReference type="PDBsum" id="2LGC"/>
<dbReference type="PDBsum" id="2NPQ"/>
<dbReference type="PDBsum" id="2OKR"/>
<dbReference type="PDBsum" id="2ONL"/>
<dbReference type="PDBsum" id="2QD9"/>
<dbReference type="PDBsum" id="2RG5"/>
<dbReference type="PDBsum" id="2RG6"/>
<dbReference type="PDBsum" id="2Y8O"/>
<dbReference type="PDBsum" id="2YIS"/>
<dbReference type="PDBsum" id="2YIW"/>
<dbReference type="PDBsum" id="2YIX"/>
<dbReference type="PDBsum" id="2ZAZ"/>
<dbReference type="PDBsum" id="2ZB0"/>
<dbReference type="PDBsum" id="2ZB1"/>
<dbReference type="PDBsum" id="3BV2"/>
<dbReference type="PDBsum" id="3BV3"/>
<dbReference type="PDBsum" id="3BX5"/>
<dbReference type="PDBsum" id="3C5U"/>
<dbReference type="PDBsum" id="3CTQ"/>
<dbReference type="PDBsum" id="3D7Z"/>
<dbReference type="PDBsum" id="3D83"/>
<dbReference type="PDBsum" id="3DS6"/>
<dbReference type="PDBsum" id="3DT1"/>
<dbReference type="PDBsum" id="3E92"/>
<dbReference type="PDBsum" id="3E93"/>
<dbReference type="PDBsum" id="3FC1"/>
<dbReference type="PDBsum" id="3FI4"/>
<dbReference type="PDBsum" id="3FKL"/>
<dbReference type="PDBsum" id="3FKN"/>
<dbReference type="PDBsum" id="3FKO"/>
<dbReference type="PDBsum" id="3FL4"/>
<dbReference type="PDBsum" id="3FLN"/>
<dbReference type="PDBsum" id="3FLQ"/>
<dbReference type="PDBsum" id="3FLS"/>
<dbReference type="PDBsum" id="3FLW"/>
<dbReference type="PDBsum" id="3FLY"/>
<dbReference type="PDBsum" id="3FLZ"/>
<dbReference type="PDBsum" id="3FMH"/>
<dbReference type="PDBsum" id="3FMJ"/>
<dbReference type="PDBsum" id="3FMK"/>
<dbReference type="PDBsum" id="3FML"/>
<dbReference type="PDBsum" id="3FMM"/>
<dbReference type="PDBsum" id="3FMN"/>
<dbReference type="PDBsum" id="3FSF"/>
<dbReference type="PDBsum" id="3FSK"/>
<dbReference type="PDBsum" id="3GC7"/>
<dbReference type="PDBsum" id="3GCP"/>
<dbReference type="PDBsum" id="3GCQ"/>
<dbReference type="PDBsum" id="3GCS"/>
<dbReference type="PDBsum" id="3GCU"/>
<dbReference type="PDBsum" id="3GCV"/>
<dbReference type="PDBsum" id="3GFE"/>
<dbReference type="PDBsum" id="3GI3"/>
<dbReference type="PDBsum" id="3HA8"/>
<dbReference type="PDBsum" id="3HEC"/>
<dbReference type="PDBsum" id="3HEG"/>
<dbReference type="PDBsum" id="3HL7"/>
<dbReference type="PDBsum" id="3HLL"/>
<dbReference type="PDBsum" id="3HP2"/>
<dbReference type="PDBsum" id="3HP5"/>
<dbReference type="PDBsum" id="3HRB"/>
<dbReference type="PDBsum" id="3HUB"/>
<dbReference type="PDBsum" id="3HUC"/>
<dbReference type="PDBsum" id="3HV3"/>
<dbReference type="PDBsum" id="3HV4"/>
<dbReference type="PDBsum" id="3HV5"/>
<dbReference type="PDBsum" id="3HV6"/>
<dbReference type="PDBsum" id="3HV7"/>
<dbReference type="PDBsum" id="3HVC"/>
<dbReference type="PDBsum" id="3IPH"/>
<dbReference type="PDBsum" id="3ITZ"/>
<dbReference type="PDBsum" id="3IW5"/>
<dbReference type="PDBsum" id="3IW6"/>
<dbReference type="PDBsum" id="3IW7"/>
<dbReference type="PDBsum" id="3IW8"/>
<dbReference type="PDBsum" id="3K3I"/>
<dbReference type="PDBsum" id="3K3J"/>
<dbReference type="PDBsum" id="3KF7"/>
<dbReference type="PDBsum" id="3KQ7"/>
<dbReference type="PDBsum" id="3L8S"/>
<dbReference type="PDBsum" id="3L8X"/>
<dbReference type="PDBsum" id="3LFA"/>
<dbReference type="PDBsum" id="3LFB"/>
<dbReference type="PDBsum" id="3LFC"/>
<dbReference type="PDBsum" id="3LFD"/>
<dbReference type="PDBsum" id="3LFE"/>
<dbReference type="PDBsum" id="3LFF"/>
<dbReference type="PDBsum" id="3LHJ"/>
<dbReference type="PDBsum" id="3MGY"/>
<dbReference type="PDBsum" id="3MH0"/>
<dbReference type="PDBsum" id="3MH1"/>
<dbReference type="PDBsum" id="3MH2"/>
<dbReference type="PDBsum" id="3MH3"/>
<dbReference type="PDBsum" id="3MPA"/>
<dbReference type="PDBsum" id="3MPT"/>
<dbReference type="PDBsum" id="3MVL"/>
<dbReference type="PDBsum" id="3MVM"/>
<dbReference type="PDBsum" id="3MW1"/>
<dbReference type="PDBsum" id="3NEW"/>
<dbReference type="PDBsum" id="3NNU"/>
<dbReference type="PDBsum" id="3NNV"/>
<dbReference type="PDBsum" id="3NNW"/>
<dbReference type="PDBsum" id="3NNX"/>
<dbReference type="PDBsum" id="3NWW"/>
<dbReference type="PDBsum" id="3O8P"/>
<dbReference type="PDBsum" id="3O8T"/>
<dbReference type="PDBsum" id="3O8U"/>
<dbReference type="PDBsum" id="3OBG"/>
<dbReference type="PDBsum" id="3OBJ"/>
<dbReference type="PDBsum" id="3OC1"/>
<dbReference type="PDBsum" id="3OCG"/>
<dbReference type="PDBsum" id="3OD6"/>
<dbReference type="PDBsum" id="3ODY"/>
<dbReference type="PDBsum" id="3ODZ"/>
<dbReference type="PDBsum" id="3OEF"/>
<dbReference type="PDBsum" id="3PG3"/>
<dbReference type="PDBsum" id="3QUD"/>
<dbReference type="PDBsum" id="3QUE"/>
<dbReference type="PDBsum" id="3RIN"/>
<dbReference type="PDBsum" id="3ROC"/>
<dbReference type="PDBsum" id="3S3I"/>
<dbReference type="PDBsum" id="3S4Q"/>
<dbReference type="PDBsum" id="3U8W"/>
<dbReference type="PDBsum" id="3UVP"/>
<dbReference type="PDBsum" id="3UVQ"/>
<dbReference type="PDBsum" id="3UVR"/>
<dbReference type="PDBsum" id="3ZS5"/>
<dbReference type="PDBsum" id="3ZSG"/>
<dbReference type="PDBsum" id="3ZSH"/>
<dbReference type="PDBsum" id="3ZSI"/>
<dbReference type="PDBsum" id="3ZYA"/>
<dbReference type="PDBsum" id="4A9Y"/>
<dbReference type="PDBsum" id="4AA0"/>
<dbReference type="PDBsum" id="4AA4"/>
<dbReference type="PDBsum" id="4AA5"/>
<dbReference type="PDBsum" id="4AAC"/>
<dbReference type="PDBsum" id="4DLI"/>
<dbReference type="PDBsum" id="4DLJ"/>
<dbReference type="PDBsum" id="4E5A"/>
<dbReference type="PDBsum" id="4E5B"/>
<dbReference type="PDBsum" id="4E6A"/>
<dbReference type="PDBsum" id="4E6C"/>
<dbReference type="PDBsum" id="4E8A"/>
<dbReference type="PDBsum" id="4EH2"/>
<dbReference type="PDBsum" id="4EH3"/>
<dbReference type="PDBsum" id="4EH4"/>
<dbReference type="PDBsum" id="4EH5"/>
<dbReference type="PDBsum" id="4EH6"/>
<dbReference type="PDBsum" id="4EH7"/>
<dbReference type="PDBsum" id="4EH8"/>
<dbReference type="PDBsum" id="4EH9"/>
<dbReference type="PDBsum" id="4EHV"/>
<dbReference type="PDBsum" id="4EWQ"/>
<dbReference type="PDBsum" id="4F9W"/>
<dbReference type="PDBsum" id="4F9Y"/>
<dbReference type="PDBsum" id="4FA2"/>
<dbReference type="PDBsum" id="4GEO"/>
<dbReference type="PDBsum" id="4KIN"/>
<dbReference type="PDBsum" id="4KIP"/>
<dbReference type="PDBsum" id="4KIQ"/>
<dbReference type="PDBsum" id="4L8M"/>
<dbReference type="PDBsum" id="4R3C"/>
<dbReference type="PDBsum" id="4ZTH"/>
<dbReference type="PDBsum" id="5ETA"/>
<dbReference type="PDBsum" id="5ETC"/>
<dbReference type="PDBsum" id="5ETF"/>
<dbReference type="PDBsum" id="5ETI"/>
<dbReference type="PDBsum" id="5ML5"/>
<dbReference type="PDBsum" id="5MTX"/>
<dbReference type="PDBsum" id="5MTY"/>
<dbReference type="PDBsum" id="5MZ3"/>
<dbReference type="PDBsum" id="5N63"/>
<dbReference type="PDBsum" id="5N64"/>
<dbReference type="PDBsum" id="5N65"/>
<dbReference type="PDBsum" id="5N66"/>
<dbReference type="PDBsum" id="5N67"/>
<dbReference type="PDBsum" id="5N68"/>
<dbReference type="PDBsum" id="5O8U"/>
<dbReference type="PDBsum" id="5O8V"/>
<dbReference type="PDBsum" id="5OMG"/>
<dbReference type="PDBsum" id="5OMH"/>
<dbReference type="PDBsum" id="5TBE"/>
<dbReference type="PDBsum" id="5TCO"/>
<dbReference type="PDBsum" id="5WJJ"/>
<dbReference type="PDBsum" id="5XYX"/>
<dbReference type="PDBsum" id="5XYY"/>
<dbReference type="PDBsum" id="6ANL"/>
<dbReference type="PDBsum" id="6HWT"/>
<dbReference type="PDBsum" id="6HWU"/>
<dbReference type="PDBsum" id="6HWV"/>
<dbReference type="PDBsum" id="6M95"/>
<dbReference type="PDBsum" id="6M9L"/>
<dbReference type="PDBsum" id="6OHD"/>
<dbReference type="PDBsum" id="6QDZ"/>
<dbReference type="PDBsum" id="6QE1"/>
<dbReference type="PDBsum" id="6QYX"/>
<dbReference type="PDBsum" id="6RFO"/>
<dbReference type="PDBsum" id="6SFI"/>
<dbReference type="PDBsum" id="6SFJ"/>
<dbReference type="PDBsum" id="6SFK"/>
<dbReference type="PDBsum" id="6SFO"/>
<dbReference type="PDBsum" id="6TCA"/>
<dbReference type="PDBsum" id="6ZQS"/>
<dbReference type="PDBsum" id="6ZWP"/>
<dbReference type="PDBsum" id="8A8M"/>
<dbReference type="PDBsum" id="8VXE"/>
<dbReference type="PDBsum" id="8X3M"/>
<dbReference type="PDBsum" id="8YD9"/>
<dbReference type="PDBsum" id="9CJ1"/>
<dbReference type="PDBsum" id="9CJ2"/>
<dbReference type="PDBsum" id="9CJ3"/>
<dbReference type="PDBsum" id="9CJ4"/>
<dbReference type="PDBsum" id="9CJ5"/>
<dbReference type="PDBsum" id="9MHB"/>
<dbReference type="BMRB" id="Q16539"/>
<dbReference type="EMDB" id="EMD-15233"/>
<dbReference type="SASBDB" id="Q16539"/>
<dbReference type="SMR" id="Q16539"/>
<dbReference type="BioGRID" id="107819">
    <property type="interactions" value="319"/>
</dbReference>
<dbReference type="CORUM" id="Q16539"/>
<dbReference type="DIP" id="DIP-30987N"/>
<dbReference type="ELM" id="Q16539"/>
<dbReference type="FunCoup" id="Q16539">
    <property type="interactions" value="4149"/>
</dbReference>
<dbReference type="IntAct" id="Q16539">
    <property type="interactions" value="173"/>
</dbReference>
<dbReference type="MINT" id="Q16539"/>
<dbReference type="STRING" id="9606.ENSP00000229795"/>
<dbReference type="BindingDB" id="Q16539"/>
<dbReference type="ChEMBL" id="CHEMBL260"/>
<dbReference type="DrugBank" id="DB02873">
    <property type="generic name" value="1-(2,6-Dichlorophenyl)-5-(2,4-Difluorophenyl)-7-Piperazin-1-Yl-3,4-Dihydroquinazolin-2(1h)-One"/>
</dbReference>
<dbReference type="DrugBank" id="DB01948">
    <property type="generic name" value="1-(2,6-Dichlorophenyl)-5-(2,4-Difluorophenyl)-7-Piperidin-4-Yl-3,4-Dihydroquinolin-2(1h)-One"/>
</dbReference>
<dbReference type="DrugBank" id="DB02277">
    <property type="generic name" value="1-(5-Tert-Butyl-2-Methyl-2h-Pyrazol-3-Yl)-3-(4-Chloro-Phenyl)-Urea"/>
</dbReference>
<dbReference type="DrugBank" id="DB06882">
    <property type="generic name" value="1-[1-(3-aminophenyl)-3-tert-butyl-1H-pyrazol-5-yl]-3-naphthalen-1-ylurea"/>
</dbReference>
<dbReference type="DrugBank" id="DB08097">
    <property type="generic name" value="2-(2,6-DIFLUOROPHENOXY)-N-(2-FLUOROPHENYL)-9-ISOPROPYL-9H-PURIN-8-AMINE"/>
</dbReference>
<dbReference type="DrugBank" id="DB08395">
    <property type="generic name" value="2-(ETHOXYMETHYL)-4-(4-FLUOROPHENYL)-3-[2-(2-HYDROXYPHENOXY)PYRIMIDIN-4-YL]ISOXAZOL-5(2H)-ONE"/>
</dbReference>
<dbReference type="DrugBank" id="DB03110">
    <property type="generic name" value="2-Chlorophenol"/>
</dbReference>
<dbReference type="DrugBank" id="DB07942">
    <property type="generic name" value="2-fluoro-4-[4-(4-fluorophenyl)-1H-pyrazol-3-yl]pyridine"/>
</dbReference>
<dbReference type="DrugBank" id="DB08093">
    <property type="generic name" value="3-(1-NAPHTHYLMETHOXY)PYRIDIN-2-AMINE"/>
</dbReference>
<dbReference type="DrugBank" id="DB08095">
    <property type="generic name" value="3-(2-CHLOROPHENYL)-1-(2-{[(1S)-2-HYDROXY-1,2-DIMETHYLPROPYL]AMINO}PYRIMIDIN-4-YL)-1-(4-METHOXYPHENYL)UREA"/>
</dbReference>
<dbReference type="DrugBank" id="DB02195">
    <property type="generic name" value="3-(4-Fluorophenyl)-1-Hydroxy-2-(Pyridin-4-Yl)-1h-Pyrrolo[3,2-B]Pyridine"/>
</dbReference>
<dbReference type="DrugBank" id="DB02352">
    <property type="generic name" value="3-(Benzyloxy)Pyridin-2-Amine"/>
</dbReference>
<dbReference type="DrugBank" id="DB08730">
    <property type="generic name" value="3-FLUORO-5-MORPHOLIN-4-YL-N-[1-(2-PYRIDIN-4-YLETHYL)-1H-INDOL-6-YL]BENZAMIDE"/>
</dbReference>
<dbReference type="DrugBank" id="DB08091">
    <property type="generic name" value="3-FLUORO-5-MORPHOLIN-4-YL-N-[3-(2-PYRIDIN-4-YLETHYL)-1H-INDOL-5-YL]BENZAMIDE"/>
</dbReference>
<dbReference type="DrugBank" id="DB08092">
    <property type="generic name" value="3-fluoro-N-1H-indol-5-yl-5-morpholin-4-ylbenzamide"/>
</dbReference>
<dbReference type="DrugBank" id="DB04632">
    <property type="generic name" value="4-(2-HYDROXYBENZYLAMINO)-N-(3-(4-FLUOROPHENOXY)PHENYL)PIPERIDINE-1-SULFONAMIDE"/>
</dbReference>
<dbReference type="DrugBank" id="DB08522">
    <property type="generic name" value="4-(4-FLUOROPHENYL)-1-CYCLOROPROPYLMETHYL-5-(4-PYRIDYL)-IMIDAZOLE"/>
</dbReference>
<dbReference type="DrugBank" id="DB03980">
    <property type="generic name" value="4-(Fluorophenyl)-1-Cyclopropylmethyl-5-(2-Amino-4-Pyrimidinyl)Imidazole"/>
</dbReference>
<dbReference type="DrugBank" id="DB07829">
    <property type="generic name" value="4-[3-(4-FLUOROPHENYL)-1H-PYRAZOL-4-YL]PYRIDINE"/>
</dbReference>
<dbReference type="DrugBank" id="DB02984">
    <property type="generic name" value="4-[3-Methylsulfanylanilino]-6,7-Dimethoxyquinazoline"/>
</dbReference>
<dbReference type="DrugBank" id="DB08521">
    <property type="generic name" value="4-[4-(4-Fluorophenyl)-2-[4-[(R)-methylsulfinyl]phenyl]-1H-imidazol-5-yl]pyridine"/>
</dbReference>
<dbReference type="DrugBank" id="DB07607">
    <property type="generic name" value="4-[5-(3-IODO-PHENYL)-2-(4-METHANESULFINYL-PHENYL)-1H-IMIDAZOL-4-YL]-PYRIDINE"/>
</dbReference>
<dbReference type="DrugBank" id="DB01761">
    <property type="generic name" value="4-[5-[2-(1-phenyl-ethylamino)-pyrimidin-4-yl]-1-methyl-4-(3-trifluoromethylphenyl)-1H-imidazol-2-yl]-piperidine"/>
</dbReference>
<dbReference type="DrugBank" id="DB07459">
    <property type="generic name" value="4-PHENOXY-N-(PYRIDIN-2-YLMETHYL)BENZAMIDE"/>
</dbReference>
<dbReference type="DrugBank" id="DB07832">
    <property type="generic name" value="4-{4-[(5-hydroxy-2-methylphenyl)amino]quinolin-7-yl}-1,3-thiazole-2-carbaldehyde"/>
</dbReference>
<dbReference type="DrugBank" id="DB01988">
    <property type="generic name" value="6((S)-3-Benzylpiperazin-1-Yl)-3-(Naphthalen-2-Yl)-4-(Pyridin-4-Yl)Pyrazine"/>
</dbReference>
<dbReference type="DrugBank" id="DB08352">
    <property type="generic name" value="6-[4-(2-fluorophenyl)-1,3-oxazol-5-yl]-N-(1-methylethyl)-1,3-benzothiazol-2-amine"/>
</dbReference>
<dbReference type="DrugBank" id="DB08096">
    <property type="generic name" value="8-(2-CHLOROPHENYLAMINO)-2-(2,6-DIFLUOROPHENYLAMINO)-9-ETHYL-9H-PURINE-1,7-DIIUM"/>
</dbReference>
<dbReference type="DrugBank" id="DB08424">
    <property type="generic name" value="[5-AMINO-1-(4-FLUOROPHENYL)-1H-PYRAZOL-4-YL](3-{[(2R)-2,3-DIHYDROXYPROPYL]OXY}PHENYL)METHANONE"/>
</dbReference>
<dbReference type="DrugBank" id="DB08423">
    <property type="generic name" value="[5-AMINO-1-(4-FLUOROPHENYL)-1H-PYRAZOL-4-YL][3-(PIPERIDIN-4-YLOXY)PHENYL]METHANONE"/>
</dbReference>
<dbReference type="DrugBank" id="DB03777">
    <property type="generic name" value="Bisindolylmaleimide I"/>
</dbReference>
<dbReference type="DrugBank" id="DB12429">
    <property type="generic name" value="CI-1040"/>
</dbReference>
<dbReference type="DrugBank" id="DB01254">
    <property type="generic name" value="Dasatinib"/>
</dbReference>
<dbReference type="DrugBank" id="DB12140">
    <property type="generic name" value="Dilmapimod"/>
</dbReference>
<dbReference type="DrugBank" id="DB03044">
    <property type="generic name" value="Doramapimod"/>
</dbReference>
<dbReference type="DrugBank" id="DB12010">
    <property type="generic name" value="Fostamatinib"/>
</dbReference>
<dbReference type="DrugBank" id="DB01953">
    <property type="generic name" value="Inhibitor of P38 Kinase"/>
</dbReference>
<dbReference type="DrugBank" id="DB05157">
    <property type="generic name" value="KC706"/>
</dbReference>
<dbReference type="DrugBank" id="DB12270">
    <property type="generic name" value="Losmapimod"/>
</dbReference>
<dbReference type="DrugBank" id="DB01017">
    <property type="generic name" value="Minocycline"/>
</dbReference>
<dbReference type="DrugBank" id="DB08242">
    <property type="generic name" value="N,4-dimethyl-3-[(1-phenyl-1H-pyrazolo[3,4-d]pyrimidin-4-yl)amino]benzamide"/>
</dbReference>
<dbReference type="DrugBank" id="DB07833">
    <property type="generic name" value="N-(3-cyanophenyl)-2'-methyl-5'-(5-methyl-1,3,4-oxadiazol-2-yl)-4-biphenylcarboxamide"/>
</dbReference>
<dbReference type="DrugBank" id="DB08064">
    <property type="generic name" value="N-(3-TERT-BUTYL-1H-PYRAZOL-5-YL)-N'-{4-CHLORO-3-[(PYRIDIN-3-YLOXY)METHYL]PHENYL}UREA"/>
</dbReference>
<dbReference type="DrugBank" id="DB07834">
    <property type="generic name" value="N-(cyclopropylmethyl)-2'-methyl-5'-(5-methyl-1,3,4-oxadiazol-2-yl)biphenyl-4-carboxamide"/>
</dbReference>
<dbReference type="DrugBank" id="DB01807">
    <property type="generic name" value="N-[(3Z)-5-Tert-butyl-2-phenyl-1,2-dihydro-3H-pyrazol-3-ylidene]-N'-(4-chlorophenyl)urea"/>
</dbReference>
<dbReference type="DrugBank" id="DB06991">
    <property type="generic name" value="N-[2-methyl-5-(methylcarbamoyl)phenyl]-2-{[(1R)-1-methylpropyl]amino}-1,3-thiazole-5-carboxamide"/>
</dbReference>
<dbReference type="DrugBank" id="DB08068">
    <property type="generic name" value="N-[4-CHLORO-3-(PYRIDIN-3-YLOXYMETHYL)-PHENYL]-3-FLUORO"/>
</dbReference>
<dbReference type="DrugBank" id="DB07811">
    <property type="generic name" value="N-cyclopropyl-2',6-dimethyl-4'-(5-methyl-1,3,4-oxadiazol-2-yl)biphenyl-3-carboxamide"/>
</dbReference>
<dbReference type="DrugBank" id="DB08349">
    <property type="generic name" value="N-cyclopropyl-3-{[1-(2,4-difluorophenyl)-7-methyl-6-oxo-6,7-dihydro-1H-pyrazolo[3,4-b]pyridin-4-yl]amino}-4-methylbenzamide"/>
</dbReference>
<dbReference type="DrugBank" id="DB07307">
    <property type="generic name" value="N-cyclopropyl-4-methyl-3-[1-(2-methylphenyl)phthalazin-6-yl]benzamide"/>
</dbReference>
<dbReference type="DrugBank" id="DB08351">
    <property type="generic name" value="N-cyclopropyl-4-methyl-3-{2-[(2-morpholin-4-ylethyl)amino]quinazolin-6-yl}benzamide"/>
</dbReference>
<dbReference type="DrugBank" id="DB06940">
    <property type="generic name" value="N-ethyl-4-{[5-(methoxycarbamoyl)-2-methylphenyl]amino}-5-methylpyrrolo[2,1-f][1,2,4]triazine-6-carboxamide"/>
</dbReference>
<dbReference type="DrugBank" id="DB07138">
    <property type="generic name" value="Neflamapimod"/>
</dbReference>
<dbReference type="DrugBank" id="DB07835">
    <property type="generic name" value="N~3~-cyclopropyl-N~4~'-(cyclopropylmethyl)-6-methylbiphenyl-3,4'-dicarboxamide"/>
</dbReference>
<dbReference type="DrugBank" id="DB12017">
    <property type="generic name" value="Ozagrel"/>
</dbReference>
<dbReference type="DrugBank" id="DB19169">
    <property type="generic name" value="Pamapimod"/>
</dbReference>
<dbReference type="DrugBank" id="DB08339">
    <property type="generic name" value="PD-166326"/>
</dbReference>
<dbReference type="DrugBank" id="DB07941">
    <property type="generic name" value="PH-797804"/>
</dbReference>
<dbReference type="DrugBank" id="DB06518">
    <property type="generic name" value="R-1487"/>
</dbReference>
<dbReference type="DrugBank" id="DB04338">
    <property type="generic name" value="SB220025"/>
</dbReference>
<dbReference type="DrugBank" id="DB07943">
    <property type="generic name" value="SD-0006"/>
</dbReference>
<dbReference type="DrugBank" id="DB05412">
    <property type="generic name" value="Talmapimod"/>
</dbReference>
<dbReference type="DrugBank" id="DB04462">
    <property type="generic name" value="Tetrabromo-2-Benzotriazole"/>
</dbReference>
<dbReference type="DrugBank" id="DB04797">
    <property type="generic name" value="Triazolopyridine"/>
</dbReference>
<dbReference type="DrugBank" id="DB05470">
    <property type="generic name" value="VX-702"/>
</dbReference>
<dbReference type="DrugCentral" id="Q16539"/>
<dbReference type="GuidetoPHARMACOLOGY" id="1499"/>
<dbReference type="GlyGen" id="Q16539">
    <property type="glycosylation" value="1 site, 1 O-linked glycan (1 site)"/>
</dbReference>
<dbReference type="iPTMnet" id="Q16539"/>
<dbReference type="MetOSite" id="Q16539"/>
<dbReference type="PhosphoSitePlus" id="Q16539"/>
<dbReference type="BioMuta" id="MAPK14"/>
<dbReference type="OGP" id="Q16539"/>
<dbReference type="CPTAC" id="CPTAC-1325"/>
<dbReference type="CPTAC" id="CPTAC-1355"/>
<dbReference type="CPTAC" id="CPTAC-1356"/>
<dbReference type="CPTAC" id="CPTAC-3005"/>
<dbReference type="CPTAC" id="CPTAC-3006"/>
<dbReference type="CPTAC" id="CPTAC-878"/>
<dbReference type="CPTAC" id="CPTAC-879"/>
<dbReference type="CPTAC" id="non-CPTAC-5408"/>
<dbReference type="CPTAC" id="non-CPTAC-5699"/>
<dbReference type="CPTAC" id="non-CPTAC-5700"/>
<dbReference type="CPTAC" id="non-CPTAC-5701"/>
<dbReference type="jPOST" id="Q16539"/>
<dbReference type="MassIVE" id="Q16539"/>
<dbReference type="PaxDb" id="9606-ENSP00000229795"/>
<dbReference type="PeptideAtlas" id="Q16539"/>
<dbReference type="PRIDE" id="Q16539"/>
<dbReference type="ProteomicsDB" id="60901">
    <molecule id="Q16539-1"/>
</dbReference>
<dbReference type="ProteomicsDB" id="60902">
    <molecule id="Q16539-2"/>
</dbReference>
<dbReference type="ProteomicsDB" id="60903">
    <molecule id="Q16539-3"/>
</dbReference>
<dbReference type="ProteomicsDB" id="60904">
    <molecule id="Q16539-4"/>
</dbReference>
<dbReference type="Pumba" id="Q16539"/>
<dbReference type="ABCD" id="Q16539">
    <property type="antibodies" value="4 sequenced antibodies"/>
</dbReference>
<dbReference type="Antibodypedia" id="4142">
    <property type="antibodies" value="2320 antibodies from 54 providers"/>
</dbReference>
<dbReference type="CPTC" id="Q16539">
    <property type="antibodies" value="3 antibodies"/>
</dbReference>
<dbReference type="DNASU" id="1432"/>
<dbReference type="Ensembl" id="ENST00000229794.9">
    <molecule id="Q16539-1"/>
    <property type="protein sequence ID" value="ENSP00000229794.4"/>
    <property type="gene ID" value="ENSG00000112062.13"/>
</dbReference>
<dbReference type="Ensembl" id="ENST00000229795.8">
    <molecule id="Q16539-2"/>
    <property type="protein sequence ID" value="ENSP00000229795.3"/>
    <property type="gene ID" value="ENSG00000112062.13"/>
</dbReference>
<dbReference type="Ensembl" id="ENST00000310795.8">
    <molecule id="Q16539-4"/>
    <property type="protein sequence ID" value="ENSP00000308669.4"/>
    <property type="gene ID" value="ENSG00000112062.13"/>
</dbReference>
<dbReference type="GeneID" id="1432"/>
<dbReference type="KEGG" id="hsa:1432"/>
<dbReference type="MANE-Select" id="ENST00000229794.9">
    <property type="protein sequence ID" value="ENSP00000229794.4"/>
    <property type="RefSeq nucleotide sequence ID" value="NM_139012.3"/>
    <property type="RefSeq protein sequence ID" value="NP_620581.1"/>
</dbReference>
<dbReference type="UCSC" id="uc003olp.4">
    <molecule id="Q16539-1"/>
    <property type="organism name" value="human"/>
</dbReference>
<dbReference type="AGR" id="HGNC:6876"/>
<dbReference type="CTD" id="1432"/>
<dbReference type="DisGeNET" id="1432"/>
<dbReference type="GeneCards" id="MAPK14"/>
<dbReference type="HGNC" id="HGNC:6876">
    <property type="gene designation" value="MAPK14"/>
</dbReference>
<dbReference type="HPA" id="ENSG00000112062">
    <property type="expression patterns" value="Low tissue specificity"/>
</dbReference>
<dbReference type="MIM" id="600289">
    <property type="type" value="gene"/>
</dbReference>
<dbReference type="neXtProt" id="NX_Q16539"/>
<dbReference type="OpenTargets" id="ENSG00000112062"/>
<dbReference type="PharmGKB" id="PA30621"/>
<dbReference type="VEuPathDB" id="HostDB:ENSG00000112062"/>
<dbReference type="eggNOG" id="KOG0660">
    <property type="taxonomic scope" value="Eukaryota"/>
</dbReference>
<dbReference type="GeneTree" id="ENSGT00940000155325"/>
<dbReference type="InParanoid" id="Q16539"/>
<dbReference type="OMA" id="NRYTDLN"/>
<dbReference type="OrthoDB" id="9474812at2759"/>
<dbReference type="PAN-GO" id="Q16539">
    <property type="GO annotations" value="4 GO annotations based on evolutionary models"/>
</dbReference>
<dbReference type="PhylomeDB" id="Q16539"/>
<dbReference type="TreeFam" id="TF105100"/>
<dbReference type="BioCyc" id="MetaCyc:HS03507-MONOMER"/>
<dbReference type="BRENDA" id="2.7.11.24">
    <property type="organism ID" value="2681"/>
</dbReference>
<dbReference type="PathwayCommons" id="Q16539"/>
<dbReference type="Reactome" id="R-HSA-168638">
    <property type="pathway name" value="NOD1/2 Signaling Pathway"/>
</dbReference>
<dbReference type="Reactome" id="R-HSA-171007">
    <property type="pathway name" value="p38MAPK events"/>
</dbReference>
<dbReference type="Reactome" id="R-HSA-198753">
    <property type="pathway name" value="ERK/MAPK targets"/>
</dbReference>
<dbReference type="Reactome" id="R-HSA-2151209">
    <property type="pathway name" value="Activation of PPARGC1A (PGC-1alpha) by phosphorylation"/>
</dbReference>
<dbReference type="Reactome" id="R-HSA-2559580">
    <property type="pathway name" value="Oxidative Stress Induced Senescence"/>
</dbReference>
<dbReference type="Reactome" id="R-HSA-418592">
    <property type="pathway name" value="ADP signalling through P2Y purinoceptor 1"/>
</dbReference>
<dbReference type="Reactome" id="R-HSA-432142">
    <property type="pathway name" value="Platelet sensitization by LDL"/>
</dbReference>
<dbReference type="Reactome" id="R-HSA-4420097">
    <property type="pathway name" value="VEGFA-VEGFR2 Pathway"/>
</dbReference>
<dbReference type="Reactome" id="R-HSA-450302">
    <property type="pathway name" value="activated TAK1 mediates p38 MAPK activation"/>
</dbReference>
<dbReference type="Reactome" id="R-HSA-450341">
    <property type="pathway name" value="Activation of the AP-1 family of transcription factors"/>
</dbReference>
<dbReference type="Reactome" id="R-HSA-450604">
    <property type="pathway name" value="KSRP (KHSRP) binds and destabilizes mRNA"/>
</dbReference>
<dbReference type="Reactome" id="R-HSA-525793">
    <property type="pathway name" value="Myogenesis"/>
</dbReference>
<dbReference type="Reactome" id="R-HSA-5668599">
    <property type="pathway name" value="RHO GTPases Activate NADPH Oxidases"/>
</dbReference>
<dbReference type="Reactome" id="R-HSA-6798695">
    <property type="pathway name" value="Neutrophil degranulation"/>
</dbReference>
<dbReference type="Reactome" id="R-HSA-6804756">
    <property type="pathway name" value="Regulation of TP53 Activity through Phosphorylation"/>
</dbReference>
<dbReference type="Reactome" id="R-HSA-9662834">
    <property type="pathway name" value="CD163 mediating an anti-inflammatory response"/>
</dbReference>
<dbReference type="Reactome" id="R-HSA-9824585">
    <property type="pathway name" value="Regulation of MITF-M-dependent genes involved in pigmentation"/>
</dbReference>
<dbReference type="SignaLink" id="Q16539"/>
<dbReference type="SIGNOR" id="Q16539"/>
<dbReference type="BioGRID-ORCS" id="1432">
    <property type="hits" value="83 hits in 1217 CRISPR screens"/>
</dbReference>
<dbReference type="ChiTaRS" id="MAPK14">
    <property type="organism name" value="human"/>
</dbReference>
<dbReference type="EvolutionaryTrace" id="Q16539"/>
<dbReference type="GeneWiki" id="MAPK14"/>
<dbReference type="GenomeRNAi" id="1432"/>
<dbReference type="Pharos" id="Q16539">
    <property type="development level" value="Tchem"/>
</dbReference>
<dbReference type="PRO" id="PR:Q16539"/>
<dbReference type="Proteomes" id="UP000005640">
    <property type="component" value="Chromosome 6"/>
</dbReference>
<dbReference type="RNAct" id="Q16539">
    <property type="molecule type" value="protein"/>
</dbReference>
<dbReference type="Bgee" id="ENSG00000112062">
    <property type="expression patterns" value="Expressed in buccal mucosa cell and 205 other cell types or tissues"/>
</dbReference>
<dbReference type="ExpressionAtlas" id="Q16539">
    <property type="expression patterns" value="baseline and differential"/>
</dbReference>
<dbReference type="GO" id="GO:0005737">
    <property type="term" value="C:cytoplasm"/>
    <property type="evidence" value="ECO:0000250"/>
    <property type="project" value="UniProtKB"/>
</dbReference>
<dbReference type="GO" id="GO:0005829">
    <property type="term" value="C:cytosol"/>
    <property type="evidence" value="ECO:0000314"/>
    <property type="project" value="HPA"/>
</dbReference>
<dbReference type="GO" id="GO:0005576">
    <property type="term" value="C:extracellular region"/>
    <property type="evidence" value="ECO:0000304"/>
    <property type="project" value="Reactome"/>
</dbReference>
<dbReference type="GO" id="GO:1904813">
    <property type="term" value="C:ficolin-1-rich granule lumen"/>
    <property type="evidence" value="ECO:0000304"/>
    <property type="project" value="Reactome"/>
</dbReference>
<dbReference type="GO" id="GO:0098978">
    <property type="term" value="C:glutamatergic synapse"/>
    <property type="evidence" value="ECO:0007669"/>
    <property type="project" value="Ensembl"/>
</dbReference>
<dbReference type="GO" id="GO:0005739">
    <property type="term" value="C:mitochondrion"/>
    <property type="evidence" value="ECO:0007669"/>
    <property type="project" value="Ensembl"/>
</dbReference>
<dbReference type="GO" id="GO:0016607">
    <property type="term" value="C:nuclear speck"/>
    <property type="evidence" value="ECO:0000314"/>
    <property type="project" value="HPA"/>
</dbReference>
<dbReference type="GO" id="GO:0005654">
    <property type="term" value="C:nucleoplasm"/>
    <property type="evidence" value="ECO:0000304"/>
    <property type="project" value="Reactome"/>
</dbReference>
<dbReference type="GO" id="GO:0005634">
    <property type="term" value="C:nucleus"/>
    <property type="evidence" value="ECO:0000314"/>
    <property type="project" value="UniProtKB"/>
</dbReference>
<dbReference type="GO" id="GO:0034774">
    <property type="term" value="C:secretory granule lumen"/>
    <property type="evidence" value="ECO:0000304"/>
    <property type="project" value="Reactome"/>
</dbReference>
<dbReference type="GO" id="GO:0000922">
    <property type="term" value="C:spindle pole"/>
    <property type="evidence" value="ECO:0007669"/>
    <property type="project" value="Ensembl"/>
</dbReference>
<dbReference type="GO" id="GO:0005524">
    <property type="term" value="F:ATP binding"/>
    <property type="evidence" value="ECO:0007669"/>
    <property type="project" value="UniProtKB-KW"/>
</dbReference>
<dbReference type="GO" id="GO:0019899">
    <property type="term" value="F:enzyme binding"/>
    <property type="evidence" value="ECO:0000353"/>
    <property type="project" value="BHF-UCL"/>
</dbReference>
<dbReference type="GO" id="GO:0004707">
    <property type="term" value="F:MAP kinase activity"/>
    <property type="evidence" value="ECO:0000314"/>
    <property type="project" value="UniProtKB"/>
</dbReference>
<dbReference type="GO" id="GO:0004708">
    <property type="term" value="F:MAP kinase kinase activity"/>
    <property type="evidence" value="ECO:0000304"/>
    <property type="project" value="ProtInc"/>
</dbReference>
<dbReference type="GO" id="GO:0048273">
    <property type="term" value="F:mitogen-activated protein kinase p38 binding"/>
    <property type="evidence" value="ECO:0000353"/>
    <property type="project" value="UniProtKB"/>
</dbReference>
<dbReference type="GO" id="GO:0051525">
    <property type="term" value="F:NFAT protein binding"/>
    <property type="evidence" value="ECO:0000250"/>
    <property type="project" value="BHF-UCL"/>
</dbReference>
<dbReference type="GO" id="GO:0019903">
    <property type="term" value="F:protein phosphatase binding"/>
    <property type="evidence" value="ECO:0000353"/>
    <property type="project" value="UniProtKB"/>
</dbReference>
<dbReference type="GO" id="GO:0106310">
    <property type="term" value="F:protein serine kinase activity"/>
    <property type="evidence" value="ECO:0007669"/>
    <property type="project" value="RHEA"/>
</dbReference>
<dbReference type="GO" id="GO:0004674">
    <property type="term" value="F:protein serine/threonine kinase activity"/>
    <property type="evidence" value="ECO:0000314"/>
    <property type="project" value="UniProtKB"/>
</dbReference>
<dbReference type="GO" id="GO:0070935">
    <property type="term" value="P:3'-UTR-mediated mRNA stabilization"/>
    <property type="evidence" value="ECO:0000304"/>
    <property type="project" value="UniProtKB"/>
</dbReference>
<dbReference type="GO" id="GO:0001525">
    <property type="term" value="P:angiogenesis"/>
    <property type="evidence" value="ECO:0007669"/>
    <property type="project" value="Ensembl"/>
</dbReference>
<dbReference type="GO" id="GO:0006915">
    <property type="term" value="P:apoptotic process"/>
    <property type="evidence" value="ECO:0007669"/>
    <property type="project" value="UniProtKB-KW"/>
</dbReference>
<dbReference type="GO" id="GO:0060348">
    <property type="term" value="P:bone development"/>
    <property type="evidence" value="ECO:0007669"/>
    <property type="project" value="Ensembl"/>
</dbReference>
<dbReference type="GO" id="GO:0001502">
    <property type="term" value="P:cartilage condensation"/>
    <property type="evidence" value="ECO:0007669"/>
    <property type="project" value="Ensembl"/>
</dbReference>
<dbReference type="GO" id="GO:0000902">
    <property type="term" value="P:cell morphogenesis"/>
    <property type="evidence" value="ECO:0007669"/>
    <property type="project" value="Ensembl"/>
</dbReference>
<dbReference type="GO" id="GO:0007178">
    <property type="term" value="P:cell surface receptor protein serine/threonine kinase signaling pathway"/>
    <property type="evidence" value="ECO:0007669"/>
    <property type="project" value="Ensembl"/>
</dbReference>
<dbReference type="GO" id="GO:0007166">
    <property type="term" value="P:cell surface receptor signaling pathway"/>
    <property type="evidence" value="ECO:0000304"/>
    <property type="project" value="ProtInc"/>
</dbReference>
<dbReference type="GO" id="GO:0071479">
    <property type="term" value="P:cellular response to ionizing radiation"/>
    <property type="evidence" value="ECO:0000315"/>
    <property type="project" value="BHF-UCL"/>
</dbReference>
<dbReference type="GO" id="GO:0071222">
    <property type="term" value="P:cellular response to lipopolysaccharide"/>
    <property type="evidence" value="ECO:0000314"/>
    <property type="project" value="MGI"/>
</dbReference>
<dbReference type="GO" id="GO:0071223">
    <property type="term" value="P:cellular response to lipoteichoic acid"/>
    <property type="evidence" value="ECO:0000315"/>
    <property type="project" value="UniProtKB"/>
</dbReference>
<dbReference type="GO" id="GO:0071493">
    <property type="term" value="P:cellular response to UV-B"/>
    <property type="evidence" value="ECO:0000314"/>
    <property type="project" value="UniProtKB"/>
</dbReference>
<dbReference type="GO" id="GO:0035924">
    <property type="term" value="P:cellular response to vascular endothelial growth factor stimulus"/>
    <property type="evidence" value="ECO:0000315"/>
    <property type="project" value="BHF-UCL"/>
</dbReference>
<dbReference type="GO" id="GO:0098586">
    <property type="term" value="P:cellular response to virus"/>
    <property type="evidence" value="ECO:0000315"/>
    <property type="project" value="UniProtKB"/>
</dbReference>
<dbReference type="GO" id="GO:0090398">
    <property type="term" value="P:cellular senescence"/>
    <property type="evidence" value="ECO:0000304"/>
    <property type="project" value="Reactome"/>
</dbReference>
<dbReference type="GO" id="GO:0006935">
    <property type="term" value="P:chemotaxis"/>
    <property type="evidence" value="ECO:0000304"/>
    <property type="project" value="ProtInc"/>
</dbReference>
<dbReference type="GO" id="GO:0002062">
    <property type="term" value="P:chondrocyte differentiation"/>
    <property type="evidence" value="ECO:0007669"/>
    <property type="project" value="Ensembl"/>
</dbReference>
<dbReference type="GO" id="GO:0046323">
    <property type="term" value="P:D-glucose import"/>
    <property type="evidence" value="ECO:0007669"/>
    <property type="project" value="Ensembl"/>
</dbReference>
<dbReference type="GO" id="GO:0000077">
    <property type="term" value="P:DNA damage checkpoint signaling"/>
    <property type="evidence" value="ECO:0007669"/>
    <property type="project" value="Ensembl"/>
</dbReference>
<dbReference type="GO" id="GO:0019395">
    <property type="term" value="P:fatty acid oxidation"/>
    <property type="evidence" value="ECO:0007669"/>
    <property type="project" value="Ensembl"/>
</dbReference>
<dbReference type="GO" id="GO:0006006">
    <property type="term" value="P:glucose metabolic process"/>
    <property type="evidence" value="ECO:0007669"/>
    <property type="project" value="Ensembl"/>
</dbReference>
<dbReference type="GO" id="GO:0035556">
    <property type="term" value="P:intracellular signal transduction"/>
    <property type="evidence" value="ECO:0000314"/>
    <property type="project" value="UniProtKB"/>
</dbReference>
<dbReference type="GO" id="GO:0031663">
    <property type="term" value="P:lipopolysaccharide-mediated signaling pathway"/>
    <property type="evidence" value="ECO:0007669"/>
    <property type="project" value="Ensembl"/>
</dbReference>
<dbReference type="GO" id="GO:0000165">
    <property type="term" value="P:MAPK cascade"/>
    <property type="evidence" value="ECO:0000250"/>
    <property type="project" value="BHF-UCL"/>
</dbReference>
<dbReference type="GO" id="GO:0090090">
    <property type="term" value="P:negative regulation of canonical Wnt signaling pathway"/>
    <property type="evidence" value="ECO:0007669"/>
    <property type="project" value="Ensembl"/>
</dbReference>
<dbReference type="GO" id="GO:0035331">
    <property type="term" value="P:negative regulation of hippo signaling"/>
    <property type="evidence" value="ECO:0000315"/>
    <property type="project" value="FlyBase"/>
</dbReference>
<dbReference type="GO" id="GO:0002862">
    <property type="term" value="P:negative regulation of inflammatory response to antigenic stimulus"/>
    <property type="evidence" value="ECO:0000304"/>
    <property type="project" value="Reactome"/>
</dbReference>
<dbReference type="GO" id="GO:0001649">
    <property type="term" value="P:osteoblast differentiation"/>
    <property type="evidence" value="ECO:0007669"/>
    <property type="project" value="Ensembl"/>
</dbReference>
<dbReference type="GO" id="GO:0030316">
    <property type="term" value="P:osteoclast differentiation"/>
    <property type="evidence" value="ECO:0000250"/>
    <property type="project" value="BHF-UCL"/>
</dbReference>
<dbReference type="GO" id="GO:0038066">
    <property type="term" value="P:p38MAPK cascade"/>
    <property type="evidence" value="ECO:0000314"/>
    <property type="project" value="UniProt"/>
</dbReference>
<dbReference type="GO" id="GO:0001890">
    <property type="term" value="P:placenta development"/>
    <property type="evidence" value="ECO:0007669"/>
    <property type="project" value="Ensembl"/>
</dbReference>
<dbReference type="GO" id="GO:0030168">
    <property type="term" value="P:platelet activation"/>
    <property type="evidence" value="ECO:0000304"/>
    <property type="project" value="Reactome"/>
</dbReference>
<dbReference type="GO" id="GO:0090336">
    <property type="term" value="P:positive regulation of brown fat cell differentiation"/>
    <property type="evidence" value="ECO:0007669"/>
    <property type="project" value="Ensembl"/>
</dbReference>
<dbReference type="GO" id="GO:0060045">
    <property type="term" value="P:positive regulation of cardiac muscle cell proliferation"/>
    <property type="evidence" value="ECO:0007669"/>
    <property type="project" value="Ensembl"/>
</dbReference>
<dbReference type="GO" id="GO:0031281">
    <property type="term" value="P:positive regulation of cyclase activity"/>
    <property type="evidence" value="ECO:0000315"/>
    <property type="project" value="CACAO"/>
</dbReference>
<dbReference type="GO" id="GO:0046326">
    <property type="term" value="P:positive regulation of D-glucose import"/>
    <property type="evidence" value="ECO:0007669"/>
    <property type="project" value="Ensembl"/>
</dbReference>
<dbReference type="GO" id="GO:0045648">
    <property type="term" value="P:positive regulation of erythrocyte differentiation"/>
    <property type="evidence" value="ECO:0000315"/>
    <property type="project" value="BHF-UCL"/>
</dbReference>
<dbReference type="GO" id="GO:0010628">
    <property type="term" value="P:positive regulation of gene expression"/>
    <property type="evidence" value="ECO:0000315"/>
    <property type="project" value="UniProtKB"/>
</dbReference>
<dbReference type="GO" id="GO:0032735">
    <property type="term" value="P:positive regulation of interleukin-12 production"/>
    <property type="evidence" value="ECO:0000315"/>
    <property type="project" value="UniProtKB"/>
</dbReference>
<dbReference type="GO" id="GO:0051149">
    <property type="term" value="P:positive regulation of muscle cell differentiation"/>
    <property type="evidence" value="ECO:0000304"/>
    <property type="project" value="Reactome"/>
</dbReference>
<dbReference type="GO" id="GO:0045663">
    <property type="term" value="P:positive regulation of myoblast differentiation"/>
    <property type="evidence" value="ECO:0000250"/>
    <property type="project" value="UniProtKB"/>
</dbReference>
<dbReference type="GO" id="GO:1901741">
    <property type="term" value="P:positive regulation of myoblast fusion"/>
    <property type="evidence" value="ECO:0000250"/>
    <property type="project" value="UniProtKB"/>
</dbReference>
<dbReference type="GO" id="GO:0010831">
    <property type="term" value="P:positive regulation of myotube differentiation"/>
    <property type="evidence" value="ECO:0000250"/>
    <property type="project" value="UniProtKB"/>
</dbReference>
<dbReference type="GO" id="GO:0042307">
    <property type="term" value="P:positive regulation of protein import into nucleus"/>
    <property type="evidence" value="ECO:0007669"/>
    <property type="project" value="Ensembl"/>
</dbReference>
<dbReference type="GO" id="GO:2000379">
    <property type="term" value="P:positive regulation of reactive oxygen species metabolic process"/>
    <property type="evidence" value="ECO:0000315"/>
    <property type="project" value="BHF-UCL"/>
</dbReference>
<dbReference type="GO" id="GO:0045944">
    <property type="term" value="P:positive regulation of transcription by RNA polymerase II"/>
    <property type="evidence" value="ECO:0007669"/>
    <property type="project" value="Ensembl"/>
</dbReference>
<dbReference type="GO" id="GO:1900015">
    <property type="term" value="P:regulation of cytokine production involved in inflammatory response"/>
    <property type="evidence" value="ECO:0000314"/>
    <property type="project" value="CACAO"/>
</dbReference>
<dbReference type="GO" id="GO:0030278">
    <property type="term" value="P:regulation of ossification"/>
    <property type="evidence" value="ECO:0007669"/>
    <property type="project" value="Ensembl"/>
</dbReference>
<dbReference type="GO" id="GO:0099179">
    <property type="term" value="P:regulation of synaptic membrane adhesion"/>
    <property type="evidence" value="ECO:0007669"/>
    <property type="project" value="Ensembl"/>
</dbReference>
<dbReference type="GO" id="GO:0006357">
    <property type="term" value="P:regulation of transcription by RNA polymerase II"/>
    <property type="evidence" value="ECO:0000250"/>
    <property type="project" value="UniProtKB"/>
</dbReference>
<dbReference type="GO" id="GO:0002021">
    <property type="term" value="P:response to dietary excess"/>
    <property type="evidence" value="ECO:0007669"/>
    <property type="project" value="Ensembl"/>
</dbReference>
<dbReference type="GO" id="GO:0032868">
    <property type="term" value="P:response to insulin"/>
    <property type="evidence" value="ECO:0007669"/>
    <property type="project" value="Ensembl"/>
</dbReference>
<dbReference type="GO" id="GO:0032495">
    <property type="term" value="P:response to muramyl dipeptide"/>
    <property type="evidence" value="ECO:0007669"/>
    <property type="project" value="Ensembl"/>
</dbReference>
<dbReference type="GO" id="GO:0035994">
    <property type="term" value="P:response to muscle stretch"/>
    <property type="evidence" value="ECO:0007669"/>
    <property type="project" value="Ensembl"/>
</dbReference>
<dbReference type="GO" id="GO:0007165">
    <property type="term" value="P:signal transduction"/>
    <property type="evidence" value="ECO:0000304"/>
    <property type="project" value="ProtInc"/>
</dbReference>
<dbReference type="GO" id="GO:0042770">
    <property type="term" value="P:signal transduction in response to DNA damage"/>
    <property type="evidence" value="ECO:0000315"/>
    <property type="project" value="BHF-UCL"/>
</dbReference>
<dbReference type="GO" id="GO:0007519">
    <property type="term" value="P:skeletal muscle tissue development"/>
    <property type="evidence" value="ECO:0007669"/>
    <property type="project" value="Ensembl"/>
</dbReference>
<dbReference type="GO" id="GO:0048863">
    <property type="term" value="P:stem cell differentiation"/>
    <property type="evidence" value="ECO:0007669"/>
    <property type="project" value="Ensembl"/>
</dbReference>
<dbReference type="GO" id="GO:0051403">
    <property type="term" value="P:stress-activated MAPK cascade"/>
    <property type="evidence" value="ECO:0000314"/>
    <property type="project" value="UniProtKB"/>
</dbReference>
<dbReference type="GO" id="GO:0031098">
    <property type="term" value="P:stress-activated protein kinase signaling cascade"/>
    <property type="evidence" value="ECO:0000314"/>
    <property type="project" value="UniProt"/>
</dbReference>
<dbReference type="GO" id="GO:0090400">
    <property type="term" value="P:stress-induced premature senescence"/>
    <property type="evidence" value="ECO:0000315"/>
    <property type="project" value="BHF-UCL"/>
</dbReference>
<dbReference type="GO" id="GO:0051146">
    <property type="term" value="P:striated muscle cell differentiation"/>
    <property type="evidence" value="ECO:0007669"/>
    <property type="project" value="Ensembl"/>
</dbReference>
<dbReference type="GO" id="GO:0006366">
    <property type="term" value="P:transcription by RNA polymerase II"/>
    <property type="evidence" value="ECO:0007669"/>
    <property type="project" value="Ensembl"/>
</dbReference>
<dbReference type="GO" id="GO:0033209">
    <property type="term" value="P:tumor necrosis factor-mediated signaling pathway"/>
    <property type="evidence" value="ECO:0007669"/>
    <property type="project" value="Ensembl"/>
</dbReference>
<dbReference type="GO" id="GO:0048010">
    <property type="term" value="P:vascular endothelial growth factor receptor signaling pathway"/>
    <property type="evidence" value="ECO:0000315"/>
    <property type="project" value="BHF-UCL"/>
</dbReference>
<dbReference type="CDD" id="cd07877">
    <property type="entry name" value="STKc_p38alpha"/>
    <property type="match status" value="1"/>
</dbReference>
<dbReference type="FunFam" id="1.10.510.10:FF:000063">
    <property type="entry name" value="Mitogen-activated protein kinase 14"/>
    <property type="match status" value="1"/>
</dbReference>
<dbReference type="FunFam" id="3.30.200.20:FF:000769">
    <property type="entry name" value="Mitogen-activated protein kinase 14"/>
    <property type="match status" value="1"/>
</dbReference>
<dbReference type="Gene3D" id="3.30.200.20">
    <property type="entry name" value="Phosphorylase Kinase, domain 1"/>
    <property type="match status" value="1"/>
</dbReference>
<dbReference type="Gene3D" id="1.10.510.10">
    <property type="entry name" value="Transferase(Phosphotransferase) domain 1"/>
    <property type="match status" value="1"/>
</dbReference>
<dbReference type="IDEAL" id="IID00280"/>
<dbReference type="InterPro" id="IPR011009">
    <property type="entry name" value="Kinase-like_dom_sf"/>
</dbReference>
<dbReference type="InterPro" id="IPR050117">
    <property type="entry name" value="MAP_kinase"/>
</dbReference>
<dbReference type="InterPro" id="IPR003527">
    <property type="entry name" value="MAP_kinase_CS"/>
</dbReference>
<dbReference type="InterPro" id="IPR038784">
    <property type="entry name" value="MAPK14"/>
</dbReference>
<dbReference type="InterPro" id="IPR008352">
    <property type="entry name" value="MAPK_p38-like"/>
</dbReference>
<dbReference type="InterPro" id="IPR000719">
    <property type="entry name" value="Prot_kinase_dom"/>
</dbReference>
<dbReference type="InterPro" id="IPR017441">
    <property type="entry name" value="Protein_kinase_ATP_BS"/>
</dbReference>
<dbReference type="PANTHER" id="PTHR24055">
    <property type="entry name" value="MITOGEN-ACTIVATED PROTEIN KINASE"/>
    <property type="match status" value="1"/>
</dbReference>
<dbReference type="Pfam" id="PF00069">
    <property type="entry name" value="Pkinase"/>
    <property type="match status" value="1"/>
</dbReference>
<dbReference type="PRINTS" id="PR01773">
    <property type="entry name" value="P38MAPKINASE"/>
</dbReference>
<dbReference type="SMART" id="SM00220">
    <property type="entry name" value="S_TKc"/>
    <property type="match status" value="1"/>
</dbReference>
<dbReference type="SUPFAM" id="SSF56112">
    <property type="entry name" value="Protein kinase-like (PK-like)"/>
    <property type="match status" value="1"/>
</dbReference>
<dbReference type="PROSITE" id="PS01351">
    <property type="entry name" value="MAPK"/>
    <property type="match status" value="1"/>
</dbReference>
<dbReference type="PROSITE" id="PS00107">
    <property type="entry name" value="PROTEIN_KINASE_ATP"/>
    <property type="match status" value="1"/>
</dbReference>
<dbReference type="PROSITE" id="PS50011">
    <property type="entry name" value="PROTEIN_KINASE_DOM"/>
    <property type="match status" value="1"/>
</dbReference>
<keyword id="KW-0002">3D-structure</keyword>
<keyword id="KW-0007">Acetylation</keyword>
<keyword id="KW-0025">Alternative splicing</keyword>
<keyword id="KW-0053">Apoptosis</keyword>
<keyword id="KW-0067">ATP-binding</keyword>
<keyword id="KW-0963">Cytoplasm</keyword>
<keyword id="KW-0903">Direct protein sequencing</keyword>
<keyword id="KW-0418">Kinase</keyword>
<keyword id="KW-0547">Nucleotide-binding</keyword>
<keyword id="KW-0539">Nucleus</keyword>
<keyword id="KW-0597">Phosphoprotein</keyword>
<keyword id="KW-1267">Proteomics identification</keyword>
<keyword id="KW-1185">Reference proteome</keyword>
<keyword id="KW-0723">Serine/threonine-protein kinase</keyword>
<keyword id="KW-0346">Stress response</keyword>
<keyword id="KW-0804">Transcription</keyword>
<keyword id="KW-0805">Transcription regulation</keyword>
<keyword id="KW-0808">Transferase</keyword>
<keyword id="KW-0832">Ubl conjugation</keyword>
<name>MK14_HUMAN</name>
<reference key="1">
    <citation type="journal article" date="1994" name="Nature">
        <title>A protein kinase involved in the regulation of inflammatory cytokine biosynthesis.</title>
        <authorList>
            <person name="Lee J.C."/>
            <person name="Laydon J.T."/>
            <person name="McDonnell P.C."/>
            <person name="Gallagher T.F."/>
            <person name="Kumar S."/>
            <person name="Green D."/>
            <person name="McNulty D."/>
            <person name="Blumenthal M.J."/>
            <person name="Heys R.J."/>
            <person name="Landvatter S.W."/>
            <person name="Strickler J.E."/>
            <person name="McLaughlin M.M."/>
            <person name="Siemens I.R."/>
            <person name="Fisher S.M."/>
            <person name="Livi G.P."/>
            <person name="White J.R."/>
            <person name="Adams J.L."/>
            <person name="Young P.R."/>
        </authorList>
    </citation>
    <scope>NUCLEOTIDE SEQUENCE [MRNA] (ISOFORMS CSBP1 AND CSBP2)</scope>
    <scope>PARTIAL PROTEIN SEQUENCE</scope>
    <source>
        <tissue>Peripheral blood</tissue>
    </source>
</reference>
<reference key="2">
    <citation type="journal article" date="1995" name="Biochim. Biophys. Acta">
        <title>Molecular cloning of human p38 MAP kinase.</title>
        <authorList>
            <person name="Han J."/>
            <person name="Richter B."/>
            <person name="Li Z."/>
            <person name="Kravchenko V.V."/>
            <person name="Ulevitch R.J."/>
        </authorList>
    </citation>
    <scope>NUCLEOTIDE SEQUENCE [MRNA] (ISOFORM CSBP2)</scope>
    <source>
        <tissue>Liver</tissue>
    </source>
</reference>
<reference key="3">
    <citation type="journal article" date="1995" name="Proc. Natl. Acad. Sci. U.S.A.">
        <title>Mxi2, a mitogen-activated protein kinase that recognizes and phosphorylates Max protein.</title>
        <authorList>
            <person name="Zervos A.S."/>
            <person name="Faccio L."/>
            <person name="Gatto J.P."/>
            <person name="Kyriakis J.M."/>
            <person name="Brent R."/>
        </authorList>
    </citation>
    <scope>NUCLEOTIDE SEQUENCE [MRNA] (ISOFORM MXI2)</scope>
</reference>
<reference key="4">
    <citation type="journal article" date="1999" name="DNA Seq.">
        <title>Structure and polymorphism of two stress-activated protein kinase genes centromeric of the MHC: SAPK2a and SAPK4.</title>
        <authorList>
            <person name="Herbison C.E."/>
            <person name="Sayer D.C."/>
            <person name="Bellgard M."/>
            <person name="Allcock R.J.N."/>
            <person name="Christiansen F.T."/>
            <person name="Price P."/>
        </authorList>
    </citation>
    <scope>NUCLEOTIDE SEQUENCE [MRNA] (ISOFORM CSBP2)</scope>
    <source>
        <tissue>B-cell</tissue>
    </source>
</reference>
<reference key="5">
    <citation type="journal article" date="2002" name="Biochem. Biophys. Res. Commun.">
        <title>Exip, a new alternative splicing variant of p38 alpha, can induce an earlier onset of apoptosis in HeLa cells.</title>
        <authorList>
            <person name="Sudo T."/>
            <person name="Yagasaki Y."/>
            <person name="Hama H."/>
            <person name="Watanabe N."/>
            <person name="Osada H."/>
        </authorList>
    </citation>
    <scope>NUCLEOTIDE SEQUENCE [MRNA] (ISOFORM EXIP)</scope>
    <scope>ACTIVITY REGULATION</scope>
    <source>
        <tissue>Renal cell carcinoma</tissue>
    </source>
</reference>
<reference key="6">
    <citation type="journal article" date="2009" name="BMC Genomics">
        <title>Discovery of novel human transcript variants by analysis of intronic single-block EST with polyadenylation site.</title>
        <authorList>
            <person name="Wang P."/>
            <person name="Yu P."/>
            <person name="Gao P."/>
            <person name="Shi T."/>
            <person name="Ma D."/>
        </authorList>
    </citation>
    <scope>NUCLEOTIDE SEQUENCE [MRNA] (ISOFORM 5)</scope>
</reference>
<reference key="7">
    <citation type="journal article" date="2004" name="Nat. Genet.">
        <title>Complete sequencing and characterization of 21,243 full-length human cDNAs.</title>
        <authorList>
            <person name="Ota T."/>
            <person name="Suzuki Y."/>
            <person name="Nishikawa T."/>
            <person name="Otsuki T."/>
            <person name="Sugiyama T."/>
            <person name="Irie R."/>
            <person name="Wakamatsu A."/>
            <person name="Hayashi K."/>
            <person name="Sato H."/>
            <person name="Nagai K."/>
            <person name="Kimura K."/>
            <person name="Makita H."/>
            <person name="Sekine M."/>
            <person name="Obayashi M."/>
            <person name="Nishi T."/>
            <person name="Shibahara T."/>
            <person name="Tanaka T."/>
            <person name="Ishii S."/>
            <person name="Yamamoto J."/>
            <person name="Saito K."/>
            <person name="Kawai Y."/>
            <person name="Isono Y."/>
            <person name="Nakamura Y."/>
            <person name="Nagahari K."/>
            <person name="Murakami K."/>
            <person name="Yasuda T."/>
            <person name="Iwayanagi T."/>
            <person name="Wagatsuma M."/>
            <person name="Shiratori A."/>
            <person name="Sudo H."/>
            <person name="Hosoiri T."/>
            <person name="Kaku Y."/>
            <person name="Kodaira H."/>
            <person name="Kondo H."/>
            <person name="Sugawara M."/>
            <person name="Takahashi M."/>
            <person name="Kanda K."/>
            <person name="Yokoi T."/>
            <person name="Furuya T."/>
            <person name="Kikkawa E."/>
            <person name="Omura Y."/>
            <person name="Abe K."/>
            <person name="Kamihara K."/>
            <person name="Katsuta N."/>
            <person name="Sato K."/>
            <person name="Tanikawa M."/>
            <person name="Yamazaki M."/>
            <person name="Ninomiya K."/>
            <person name="Ishibashi T."/>
            <person name="Yamashita H."/>
            <person name="Murakawa K."/>
            <person name="Fujimori K."/>
            <person name="Tanai H."/>
            <person name="Kimata M."/>
            <person name="Watanabe M."/>
            <person name="Hiraoka S."/>
            <person name="Chiba Y."/>
            <person name="Ishida S."/>
            <person name="Ono Y."/>
            <person name="Takiguchi S."/>
            <person name="Watanabe S."/>
            <person name="Yosida M."/>
            <person name="Hotuta T."/>
            <person name="Kusano J."/>
            <person name="Kanehori K."/>
            <person name="Takahashi-Fujii A."/>
            <person name="Hara H."/>
            <person name="Tanase T.-O."/>
            <person name="Nomura Y."/>
            <person name="Togiya S."/>
            <person name="Komai F."/>
            <person name="Hara R."/>
            <person name="Takeuchi K."/>
            <person name="Arita M."/>
            <person name="Imose N."/>
            <person name="Musashino K."/>
            <person name="Yuuki H."/>
            <person name="Oshima A."/>
            <person name="Sasaki N."/>
            <person name="Aotsuka S."/>
            <person name="Yoshikawa Y."/>
            <person name="Matsunawa H."/>
            <person name="Ichihara T."/>
            <person name="Shiohata N."/>
            <person name="Sano S."/>
            <person name="Moriya S."/>
            <person name="Momiyama H."/>
            <person name="Satoh N."/>
            <person name="Takami S."/>
            <person name="Terashima Y."/>
            <person name="Suzuki O."/>
            <person name="Nakagawa S."/>
            <person name="Senoh A."/>
            <person name="Mizoguchi H."/>
            <person name="Goto Y."/>
            <person name="Shimizu F."/>
            <person name="Wakebe H."/>
            <person name="Hishigaki H."/>
            <person name="Watanabe T."/>
            <person name="Sugiyama A."/>
            <person name="Takemoto M."/>
            <person name="Kawakami B."/>
            <person name="Yamazaki M."/>
            <person name="Watanabe K."/>
            <person name="Kumagai A."/>
            <person name="Itakura S."/>
            <person name="Fukuzumi Y."/>
            <person name="Fujimori Y."/>
            <person name="Komiyama M."/>
            <person name="Tashiro H."/>
            <person name="Tanigami A."/>
            <person name="Fujiwara T."/>
            <person name="Ono T."/>
            <person name="Yamada K."/>
            <person name="Fujii Y."/>
            <person name="Ozaki K."/>
            <person name="Hirao M."/>
            <person name="Ohmori Y."/>
            <person name="Kawabata A."/>
            <person name="Hikiji T."/>
            <person name="Kobatake N."/>
            <person name="Inagaki H."/>
            <person name="Ikema Y."/>
            <person name="Okamoto S."/>
            <person name="Okitani R."/>
            <person name="Kawakami T."/>
            <person name="Noguchi S."/>
            <person name="Itoh T."/>
            <person name="Shigeta K."/>
            <person name="Senba T."/>
            <person name="Matsumura K."/>
            <person name="Nakajima Y."/>
            <person name="Mizuno T."/>
            <person name="Morinaga M."/>
            <person name="Sasaki M."/>
            <person name="Togashi T."/>
            <person name="Oyama M."/>
            <person name="Hata H."/>
            <person name="Watanabe M."/>
            <person name="Komatsu T."/>
            <person name="Mizushima-Sugano J."/>
            <person name="Satoh T."/>
            <person name="Shirai Y."/>
            <person name="Takahashi Y."/>
            <person name="Nakagawa K."/>
            <person name="Okumura K."/>
            <person name="Nagase T."/>
            <person name="Nomura N."/>
            <person name="Kikuchi H."/>
            <person name="Masuho Y."/>
            <person name="Yamashita R."/>
            <person name="Nakai K."/>
            <person name="Yada T."/>
            <person name="Nakamura Y."/>
            <person name="Ohara O."/>
            <person name="Isogai T."/>
            <person name="Sugano S."/>
        </authorList>
    </citation>
    <scope>NUCLEOTIDE SEQUENCE [LARGE SCALE MRNA]</scope>
</reference>
<reference key="8">
    <citation type="submission" date="2003-05" db="EMBL/GenBank/DDBJ databases">
        <title>Cloning of human full-length CDSs in BD Creator(TM) system donor vector.</title>
        <authorList>
            <person name="Kalnine N."/>
            <person name="Chen X."/>
            <person name="Rolfs A."/>
            <person name="Halleck A."/>
            <person name="Hines L."/>
            <person name="Eisenstein S."/>
            <person name="Koundinya M."/>
            <person name="Raphael J."/>
            <person name="Moreira D."/>
            <person name="Kelley T."/>
            <person name="LaBaer J."/>
            <person name="Lin Y."/>
            <person name="Phelan M."/>
            <person name="Farmer A."/>
        </authorList>
    </citation>
    <scope>NUCLEOTIDE SEQUENCE [LARGE SCALE MRNA] (ISOFORM CSBP2)</scope>
</reference>
<reference key="9">
    <citation type="submission" date="2004-06" db="EMBL/GenBank/DDBJ databases">
        <title>Cloning of human full open reading frames in Gateway(TM) system entry vector (pDONR201).</title>
        <authorList>
            <person name="Halleck A."/>
            <person name="Ebert L."/>
            <person name="Mkoundinya M."/>
            <person name="Schick M."/>
            <person name="Eisenstein S."/>
            <person name="Neubert P."/>
            <person name="Kstrang K."/>
            <person name="Schatten R."/>
            <person name="Shen B."/>
            <person name="Henze S."/>
            <person name="Mar W."/>
            <person name="Korn B."/>
            <person name="Zuo D."/>
            <person name="Hu Y."/>
            <person name="LaBaer J."/>
        </authorList>
    </citation>
    <scope>NUCLEOTIDE SEQUENCE [LARGE SCALE MRNA] (ISOFORM CSBP2)</scope>
</reference>
<reference key="10">
    <citation type="submission" date="2007-12" db="EMBL/GenBank/DDBJ databases">
        <authorList>
            <consortium name="NHLBI resequencing and genotyping service (RS&amp;G)"/>
        </authorList>
    </citation>
    <scope>NUCLEOTIDE SEQUENCE [GENOMIC DNA]</scope>
</reference>
<reference key="11">
    <citation type="journal article" date="2003" name="Nature">
        <title>The DNA sequence and analysis of human chromosome 6.</title>
        <authorList>
            <person name="Mungall A.J."/>
            <person name="Palmer S.A."/>
            <person name="Sims S.K."/>
            <person name="Edwards C.A."/>
            <person name="Ashurst J.L."/>
            <person name="Wilming L."/>
            <person name="Jones M.C."/>
            <person name="Horton R."/>
            <person name="Hunt S.E."/>
            <person name="Scott C.E."/>
            <person name="Gilbert J.G.R."/>
            <person name="Clamp M.E."/>
            <person name="Bethel G."/>
            <person name="Milne S."/>
            <person name="Ainscough R."/>
            <person name="Almeida J.P."/>
            <person name="Ambrose K.D."/>
            <person name="Andrews T.D."/>
            <person name="Ashwell R.I.S."/>
            <person name="Babbage A.K."/>
            <person name="Bagguley C.L."/>
            <person name="Bailey J."/>
            <person name="Banerjee R."/>
            <person name="Barker D.J."/>
            <person name="Barlow K.F."/>
            <person name="Bates K."/>
            <person name="Beare D.M."/>
            <person name="Beasley H."/>
            <person name="Beasley O."/>
            <person name="Bird C.P."/>
            <person name="Blakey S.E."/>
            <person name="Bray-Allen S."/>
            <person name="Brook J."/>
            <person name="Brown A.J."/>
            <person name="Brown J.Y."/>
            <person name="Burford D.C."/>
            <person name="Burrill W."/>
            <person name="Burton J."/>
            <person name="Carder C."/>
            <person name="Carter N.P."/>
            <person name="Chapman J.C."/>
            <person name="Clark S.Y."/>
            <person name="Clark G."/>
            <person name="Clee C.M."/>
            <person name="Clegg S."/>
            <person name="Cobley V."/>
            <person name="Collier R.E."/>
            <person name="Collins J.E."/>
            <person name="Colman L.K."/>
            <person name="Corby N.R."/>
            <person name="Coville G.J."/>
            <person name="Culley K.M."/>
            <person name="Dhami P."/>
            <person name="Davies J."/>
            <person name="Dunn M."/>
            <person name="Earthrowl M.E."/>
            <person name="Ellington A.E."/>
            <person name="Evans K.A."/>
            <person name="Faulkner L."/>
            <person name="Francis M.D."/>
            <person name="Frankish A."/>
            <person name="Frankland J."/>
            <person name="French L."/>
            <person name="Garner P."/>
            <person name="Garnett J."/>
            <person name="Ghori M.J."/>
            <person name="Gilby L.M."/>
            <person name="Gillson C.J."/>
            <person name="Glithero R.J."/>
            <person name="Grafham D.V."/>
            <person name="Grant M."/>
            <person name="Gribble S."/>
            <person name="Griffiths C."/>
            <person name="Griffiths M.N.D."/>
            <person name="Hall R."/>
            <person name="Halls K.S."/>
            <person name="Hammond S."/>
            <person name="Harley J.L."/>
            <person name="Hart E.A."/>
            <person name="Heath P.D."/>
            <person name="Heathcott R."/>
            <person name="Holmes S.J."/>
            <person name="Howden P.J."/>
            <person name="Howe K.L."/>
            <person name="Howell G.R."/>
            <person name="Huckle E."/>
            <person name="Humphray S.J."/>
            <person name="Humphries M.D."/>
            <person name="Hunt A.R."/>
            <person name="Johnson C.M."/>
            <person name="Joy A.A."/>
            <person name="Kay M."/>
            <person name="Keenan S.J."/>
            <person name="Kimberley A.M."/>
            <person name="King A."/>
            <person name="Laird G.K."/>
            <person name="Langford C."/>
            <person name="Lawlor S."/>
            <person name="Leongamornlert D.A."/>
            <person name="Leversha M."/>
            <person name="Lloyd C.R."/>
            <person name="Lloyd D.M."/>
            <person name="Loveland J.E."/>
            <person name="Lovell J."/>
            <person name="Martin S."/>
            <person name="Mashreghi-Mohammadi M."/>
            <person name="Maslen G.L."/>
            <person name="Matthews L."/>
            <person name="McCann O.T."/>
            <person name="McLaren S.J."/>
            <person name="McLay K."/>
            <person name="McMurray A."/>
            <person name="Moore M.J.F."/>
            <person name="Mullikin J.C."/>
            <person name="Niblett D."/>
            <person name="Nickerson T."/>
            <person name="Novik K.L."/>
            <person name="Oliver K."/>
            <person name="Overton-Larty E.K."/>
            <person name="Parker A."/>
            <person name="Patel R."/>
            <person name="Pearce A.V."/>
            <person name="Peck A.I."/>
            <person name="Phillimore B.J.C.T."/>
            <person name="Phillips S."/>
            <person name="Plumb R.W."/>
            <person name="Porter K.M."/>
            <person name="Ramsey Y."/>
            <person name="Ranby S.A."/>
            <person name="Rice C.M."/>
            <person name="Ross M.T."/>
            <person name="Searle S.M."/>
            <person name="Sehra H.K."/>
            <person name="Sheridan E."/>
            <person name="Skuce C.D."/>
            <person name="Smith S."/>
            <person name="Smith M."/>
            <person name="Spraggon L."/>
            <person name="Squares S.L."/>
            <person name="Steward C.A."/>
            <person name="Sycamore N."/>
            <person name="Tamlyn-Hall G."/>
            <person name="Tester J."/>
            <person name="Theaker A.J."/>
            <person name="Thomas D.W."/>
            <person name="Thorpe A."/>
            <person name="Tracey A."/>
            <person name="Tromans A."/>
            <person name="Tubby B."/>
            <person name="Wall M."/>
            <person name="Wallis J.M."/>
            <person name="West A.P."/>
            <person name="White S.S."/>
            <person name="Whitehead S.L."/>
            <person name="Whittaker H."/>
            <person name="Wild A."/>
            <person name="Willey D.J."/>
            <person name="Wilmer T.E."/>
            <person name="Wood J.M."/>
            <person name="Wray P.W."/>
            <person name="Wyatt J.C."/>
            <person name="Young L."/>
            <person name="Younger R.M."/>
            <person name="Bentley D.R."/>
            <person name="Coulson A."/>
            <person name="Durbin R.M."/>
            <person name="Hubbard T."/>
            <person name="Sulston J.E."/>
            <person name="Dunham I."/>
            <person name="Rogers J."/>
            <person name="Beck S."/>
        </authorList>
    </citation>
    <scope>NUCLEOTIDE SEQUENCE [LARGE SCALE GENOMIC DNA]</scope>
</reference>
<reference key="12">
    <citation type="submission" date="2005-07" db="EMBL/GenBank/DDBJ databases">
        <authorList>
            <person name="Mural R.J."/>
            <person name="Istrail S."/>
            <person name="Sutton G.G."/>
            <person name="Florea L."/>
            <person name="Halpern A.L."/>
            <person name="Mobarry C.M."/>
            <person name="Lippert R."/>
            <person name="Walenz B."/>
            <person name="Shatkay H."/>
            <person name="Dew I."/>
            <person name="Miller J.R."/>
            <person name="Flanigan M.J."/>
            <person name="Edwards N.J."/>
            <person name="Bolanos R."/>
            <person name="Fasulo D."/>
            <person name="Halldorsson B.V."/>
            <person name="Hannenhalli S."/>
            <person name="Turner R."/>
            <person name="Yooseph S."/>
            <person name="Lu F."/>
            <person name="Nusskern D.R."/>
            <person name="Shue B.C."/>
            <person name="Zheng X.H."/>
            <person name="Zhong F."/>
            <person name="Delcher A.L."/>
            <person name="Huson D.H."/>
            <person name="Kravitz S.A."/>
            <person name="Mouchard L."/>
            <person name="Reinert K."/>
            <person name="Remington K.A."/>
            <person name="Clark A.G."/>
            <person name="Waterman M.S."/>
            <person name="Eichler E.E."/>
            <person name="Adams M.D."/>
            <person name="Hunkapiller M.W."/>
            <person name="Myers E.W."/>
            <person name="Venter J.C."/>
        </authorList>
    </citation>
    <scope>NUCLEOTIDE SEQUENCE [LARGE SCALE GENOMIC DNA]</scope>
</reference>
<reference key="13">
    <citation type="journal article" date="2004" name="Genome Res.">
        <title>The status, quality, and expansion of the NIH full-length cDNA project: the Mammalian Gene Collection (MGC).</title>
        <authorList>
            <consortium name="The MGC Project Team"/>
        </authorList>
    </citation>
    <scope>NUCLEOTIDE SEQUENCE [LARGE SCALE MRNA] (ISOFORM CSBP2)</scope>
    <source>
        <tissue>Placenta</tissue>
    </source>
</reference>
<reference key="14">
    <citation type="journal article" date="2003" name="Nat. Biotechnol.">
        <title>Exploring proteomes and analyzing protein processing by mass spectrometric identification of sorted N-terminal peptides.</title>
        <authorList>
            <person name="Gevaert K."/>
            <person name="Goethals M."/>
            <person name="Martens L."/>
            <person name="Van Damme J."/>
            <person name="Staes A."/>
            <person name="Thomas G.R."/>
            <person name="Vandekerckhove J."/>
        </authorList>
    </citation>
    <scope>PROTEIN SEQUENCE OF 2-10</scope>
    <source>
        <tissue>Platelet</tissue>
    </source>
</reference>
<reference key="15">
    <citation type="journal article" date="1994" name="Cell">
        <title>Interleukin-1 activates a novel protein kinase cascade that results in the phosphorylation of Hsp27.</title>
        <authorList>
            <person name="Freshney N.W."/>
            <person name="Rawlinson L."/>
            <person name="Guesdon F."/>
            <person name="Jones E."/>
            <person name="Cowley S."/>
            <person name="Hsuan J."/>
            <person name="Saklatvala J."/>
        </authorList>
    </citation>
    <scope>PROTEIN SEQUENCE OF 174-186</scope>
</reference>
<reference key="16">
    <citation type="journal article" date="1995" name="J. Biol. Chem.">
        <title>Pro-inflammatory cytokines and environmental stress cause p38 mitogen-activated protein kinase activation by dual phosphorylation on tyrosine and threonine.</title>
        <authorList>
            <person name="Raingeaud J."/>
            <person name="Gupta S."/>
            <person name="Rogers J.S."/>
            <person name="Dickens M."/>
            <person name="Han J."/>
            <person name="Ulevitch R.J."/>
            <person name="Davis R.J."/>
        </authorList>
    </citation>
    <scope>PHOSPHORYLATION AT THR-180 AND TYR-182</scope>
    <scope>ACTIVITY REGULATION</scope>
    <scope>SUBCELLULAR LOCATION</scope>
</reference>
<reference key="17">
    <citation type="journal article" date="1995" name="J. Biol. Chem.">
        <title>Human mitogen-activated protein kinase CSBP1, but not CSBP2, complements a hog1 deletion in yeast.</title>
        <authorList>
            <person name="Kumar S."/>
            <person name="McLaughlin M.M."/>
            <person name="McDonnell P.C."/>
            <person name="Lee J.C."/>
            <person name="Livi G.P."/>
            <person name="Young P.R."/>
        </authorList>
    </citation>
    <scope>MUTAGENESIS OF ALA-34; LYS-53; ASP-168; THR-175; THR-180 AND TYR-182</scope>
    <scope>CATALYTIC ACTIVITY</scope>
</reference>
<reference key="18">
    <citation type="journal article" date="1996" name="Mol. Cell. Biol.">
        <title>MKK3- and MKK6-regulated gene expression is mediated by the p38 mitogen-activated protein kinase signal transduction pathway.</title>
        <authorList>
            <person name="Raingeaud J."/>
            <person name="Whitmarsh A.J."/>
            <person name="Barrett T."/>
            <person name="Derijard B."/>
            <person name="Davis R.J."/>
        </authorList>
    </citation>
    <scope>PHOSPHORYLATION BY MAP2K3/MKK3 AND MAP2K6/MKK6</scope>
    <scope>ACTIVITY REGULATION</scope>
</reference>
<reference key="19">
    <citation type="journal article" date="1998" name="EMBO J.">
        <title>Mitogen- and stress-activated protein kinase-1 (MSK1) is directly activated by MAPK and SAPK2/p38, and may mediate activation of CREB.</title>
        <authorList>
            <person name="Deak M."/>
            <person name="Clifton A.D."/>
            <person name="Lucocq J.M."/>
            <person name="Alessi D.R."/>
        </authorList>
    </citation>
    <scope>FUNCTION IN ACTIVATION OF RPS6KA5/MSK1</scope>
</reference>
<reference key="20">
    <citation type="journal article" date="1998" name="J. Biol. Chem.">
        <title>Selective activation of p38 mitogen-activated protein (MAP) kinase isoforms by the MAP kinase kinases MKK3 and MKK6.</title>
        <authorList>
            <person name="Enslen H."/>
            <person name="Raingeaud J."/>
            <person name="Davis R.J."/>
        </authorList>
    </citation>
    <scope>FUNCTION IN PHOSPHORYLATION OF ATF2; ELK1 AND MBP</scope>
    <scope>ACTIVITY REGULATION</scope>
</reference>
<reference key="21">
    <citation type="journal article" date="1998" name="J. Biol. Chem.">
        <title>RSK-B, a novel ribosomal S6 kinase family member, is a CREB kinase under dominant control of p38alpha mitogen-activated protein kinase (p38alphaMAPK).</title>
        <authorList>
            <person name="Pierrat B."/>
            <person name="Correia J.D.S."/>
            <person name="Mary J.L."/>
            <person name="Tomas-Zuber M."/>
            <person name="Lesslauer W."/>
        </authorList>
    </citation>
    <scope>INTERACTION WITH RPS6KA4</scope>
    <scope>FUNCTION IN PHOSPHORYLATION OF RPS6KA4</scope>
    <scope>SUBCELLULAR LOCATION</scope>
</reference>
<reference key="22">
    <citation type="journal article" date="1999" name="J. Biol. Chem.">
        <title>Molecular cloning and characterization of a novel dual specificity phosphatase, MKP-5.</title>
        <authorList>
            <person name="Tanoue T."/>
            <person name="Moriguchi T."/>
            <person name="Nishida E."/>
        </authorList>
    </citation>
    <scope>INTERACTION WITH DUSP10</scope>
    <scope>ACTIVITY REGULATION</scope>
</reference>
<reference key="23">
    <citation type="journal article" date="1999" name="Mol. Cell. Biol.">
        <title>Regulation of the MEF2 family of transcription factors by p38.</title>
        <authorList>
            <person name="Zhao M."/>
            <person name="New L."/>
            <person name="Kravchenko V.V."/>
            <person name="Kato Y."/>
            <person name="Gram H."/>
            <person name="di Padova F."/>
            <person name="Olson E.N."/>
            <person name="Ulevitch R.J."/>
            <person name="Han J.-D."/>
        </authorList>
    </citation>
    <scope>FUNCTION IN PHOSPHORYLATION OF MEF2A</scope>
</reference>
<reference key="24">
    <citation type="journal article" date="1999" name="Mol. Cell. Biol.">
        <title>Targeting of p38 mitogen-activated protein kinases to MEF2 transcription factors.</title>
        <authorList>
            <person name="Yang S.-H."/>
            <person name="Galanis A."/>
            <person name="Sharrocks A.D."/>
        </authorList>
    </citation>
    <scope>FUNCTION IN PHOSPHORYLATION OF MEF2A AND MEF2C</scope>
</reference>
<reference key="25">
    <citation type="journal article" date="2000" name="Cell">
        <title>Requirement for p38alpha in erythropoietin expression: a role for stress kinases in erythropoiesis.</title>
        <authorList>
            <person name="Tamura K."/>
            <person name="Sudo T."/>
            <person name="Senftleben U."/>
            <person name="Dadak A.M."/>
            <person name="Johnson R."/>
            <person name="Karin M."/>
        </authorList>
    </citation>
    <scope>FUNCTION</scope>
    <source>
        <tissue>Hepatoma</tissue>
    </source>
</reference>
<reference key="26">
    <citation type="journal article" date="2000" name="FEBS Lett.">
        <title>Distinct carboxy-termini confer divergent characteristics to the mitogen-activated protein kinase p38alpha and its splice isoform Mxi2.</title>
        <authorList>
            <person name="Sanz V."/>
            <person name="Arozarena I."/>
            <person name="Crespo P."/>
        </authorList>
    </citation>
    <scope>FUNCTION (ISOFORM MXI2)</scope>
    <scope>COFACTOR</scope>
    <scope>ACTIVITY REGULATION</scope>
</reference>
<reference key="27">
    <citation type="journal article" date="2000" name="J. Biol. Chem.">
        <title>Stress-induced activation of protein kinase CK2 by direct interaction with p38 mitogen-activated protein kinase.</title>
        <authorList>
            <person name="Sayed M."/>
            <person name="Kim S.O."/>
            <person name="Salh B.S."/>
            <person name="Issinger O.G."/>
            <person name="Pelech S.L."/>
        </authorList>
    </citation>
    <scope>INTERACTION WITH CSNK2A1 AND CSNK2B</scope>
    <scope>FUNCTION IN ACTIVATION OF CASEIN KINASE II</scope>
</reference>
<reference key="28">
    <citation type="journal article" date="2000" name="J. Biol. Chem.">
        <title>Differential activation of p38 mitogen-activated protein kinase isoforms depending on signal strength.</title>
        <authorList>
            <person name="Alonso G."/>
            <person name="Ambrosino C."/>
            <person name="Jones M."/>
            <person name="Nebreda A.R."/>
        </authorList>
    </citation>
    <scope>INTERACTION WITH MA2PK6/MKK6</scope>
    <scope>PHOSPHORYLATION BY MAP2K6/MKK6</scope>
    <scope>AUTOPHOSPHORYLATION</scope>
    <scope>MUTAGENESIS OF LYS-54</scope>
    <scope>CATALYTIC ACTIVITY</scope>
</reference>
<reference key="29">
    <citation type="journal article" date="2001" name="J. Biol. Chem.">
        <title>Distinct binding determinants for ERK2/p38alpha and JNK map kinases mediate catalytic activation and substrate selectivity of map kinase phosphatase-1.</title>
        <authorList>
            <person name="Slack D.N."/>
            <person name="Seternes O.M."/>
            <person name="Gabrielsen M."/>
            <person name="Keyse S.M."/>
        </authorList>
    </citation>
    <scope>INTERACTION WITH DUSP1</scope>
    <scope>ACTIVITY REGULATION</scope>
</reference>
<reference key="30">
    <citation type="journal article" date="2001" name="J. Biol. Chem.">
        <title>A Novel MAPK phosphatase MKP-7 acts preferentially on JNK/SAPK and p38 alpha and beta MAPKs.</title>
        <authorList>
            <person name="Tanoue T."/>
            <person name="Yamamoto T."/>
            <person name="Maeda R."/>
            <person name="Nishida E."/>
        </authorList>
    </citation>
    <scope>INTERACTION WITH DUSP16</scope>
    <scope>ACTIVITY REGULATION</scope>
</reference>
<reference key="31">
    <citation type="journal article" date="2001" name="Mol. Cell. Biol.">
        <title>The mitogen-activated protein kinase signal-integrating kinase Mnk2 is a eukaryotic initiation factor 4E kinase with high levels of basal activity in mammalian cells.</title>
        <authorList>
            <person name="Scheper G.C."/>
            <person name="Morrice N.A."/>
            <person name="Kleijn M."/>
            <person name="Proud C.G."/>
        </authorList>
    </citation>
    <scope>FUNCTION AS MKNK2 KINASE</scope>
</reference>
<reference key="32">
    <citation type="journal article" date="2001" name="Nature">
        <title>Initiation of a G2/M checkpoint after ultraviolet radiation requires p38 kinase.</title>
        <authorList>
            <person name="Bulavin D.V."/>
            <person name="Higashimoto Y."/>
            <person name="Popoff I.J."/>
            <person name="Gaarde W.A."/>
            <person name="Basrur V."/>
            <person name="Potapova O."/>
            <person name="Appella E."/>
            <person name="Fornace A.J. Jr."/>
        </authorList>
    </citation>
    <scope>INTERACTION WITH CDC25B AND CDC25C</scope>
    <scope>FUNCTION IN PHOSPHORYLATION OF CDC25B AND CDC25C</scope>
</reference>
<reference key="33">
    <citation type="journal article" date="2002" name="Science">
        <title>MAPKK-independent activation of p38alpha mediated by TAB1-dependent autophosphorylation of p38alpha.</title>
        <authorList>
            <person name="Ge B."/>
            <person name="Gram H."/>
            <person name="Di Padova F."/>
            <person name="Huang B."/>
            <person name="New L."/>
            <person name="Ulevitch R.J."/>
            <person name="Luo Y."/>
            <person name="Han J."/>
        </authorList>
    </citation>
    <scope>INTERACTION WITH TAB1</scope>
    <scope>AUTOPHOSPHORYLATION</scope>
    <scope>ACTIVITY REGULATION</scope>
    <scope>CATALYTIC ACTIVITY</scope>
</reference>
<reference key="34">
    <citation type="journal article" date="2004" name="J. Biol. Chem.">
        <title>Active mutants of the human p38alpha mitogen-activated protein kinase.</title>
        <authorList>
            <person name="Diskin R."/>
            <person name="Askari N."/>
            <person name="Capone R."/>
            <person name="Engelberg D."/>
            <person name="Livnah O."/>
        </authorList>
    </citation>
    <scope>MUTAGENESIS OF TYR-69; ASP-176; ASP-177; ALA-320; PHE-327 AND TRP-337</scope>
</reference>
<reference key="35">
    <citation type="journal article" date="2005" name="J. Immunol.">
        <title>Myeloid-related protein-14 is a p38 MAPK substrate in human neutrophils.</title>
        <authorList>
            <person name="Lominadze G."/>
            <person name="Rane M.J."/>
            <person name="Merchant M."/>
            <person name="Cai J."/>
            <person name="Ward R.A."/>
            <person name="McLeish K.R."/>
        </authorList>
    </citation>
    <scope>FUNCTION IN PHOSPHORYLATION OF S100A9</scope>
</reference>
<reference key="36">
    <citation type="journal article" date="2005" name="Nat. Biotechnol.">
        <title>Immunoaffinity profiling of tyrosine phosphorylation in cancer cells.</title>
        <authorList>
            <person name="Rush J."/>
            <person name="Moritz A."/>
            <person name="Lee K.A."/>
            <person name="Guo A."/>
            <person name="Goss V.L."/>
            <person name="Spek E.J."/>
            <person name="Zhang H."/>
            <person name="Zha X.-M."/>
            <person name="Polakiewicz R.D."/>
            <person name="Comb M.J."/>
        </authorList>
    </citation>
    <scope>IDENTIFICATION BY MASS SPECTROMETRY [LARGE SCALE ANALYSIS]</scope>
</reference>
<reference key="37">
    <citation type="journal article" date="2005" name="Nat. Immunol.">
        <title>Alternative p38 activation pathway mediated by T cell receptor-proximal tyrosine kinases.</title>
        <authorList>
            <person name="Salvador J.M."/>
            <person name="Mittelstadt P.R."/>
            <person name="Guszczynski T."/>
            <person name="Copeland T.D."/>
            <person name="Yamaguchi H."/>
            <person name="Appella E."/>
            <person name="Fornace A.J. Jr."/>
            <person name="Ashwell J.D."/>
        </authorList>
    </citation>
    <scope>PHOSPHORYLATION AT TYR-323</scope>
    <scope>ACTIVITY REGULATION</scope>
</reference>
<reference key="38">
    <citation type="journal article" date="2005" name="Nat. Immunol.">
        <title>The autoimmune suppressor Gadd45alpha inhibits the T cell alternative p38 activation pathway.</title>
        <authorList>
            <person name="Salvador J.M."/>
            <person name="Mittelstadt P.R."/>
            <person name="Belova G.I."/>
            <person name="Fornace A.J. Jr."/>
            <person name="Ashwell J.D."/>
        </authorList>
    </citation>
    <scope>INTERACTION WITH TAB1</scope>
    <scope>AUTOPHOSPHORYLATION</scope>
    <scope>ACTIVITY REGULATION</scope>
</reference>
<reference key="39">
    <citation type="journal article" date="2006" name="Cell">
        <title>p38 and a p38-interacting protein are critical for downregulation of E-cadherin during mouse gastrulation.</title>
        <authorList>
            <person name="Zohn I.E."/>
            <person name="Li Y."/>
            <person name="Skolnik E.Y."/>
            <person name="Anderson K.V."/>
            <person name="Han J."/>
            <person name="Niswander L."/>
        </authorList>
    </citation>
    <scope>INTERACTION WITH SUPT20H</scope>
</reference>
<reference key="40">
    <citation type="journal article" date="2006" name="EMBO J.">
        <title>p38 MAP kinase mediates stress-induced internalization of EGFR: implications for cancer chemotherapy.</title>
        <authorList>
            <person name="Zwang Y."/>
            <person name="Yarden Y."/>
        </authorList>
    </citation>
    <scope>FUNCTION IN STRESS-INDUCED INTERNALIZATION OF EGFR</scope>
</reference>
<reference key="41">
    <citation type="journal article" date="2006" name="J. Biol. Chem.">
        <title>Regulation of the ring finger E3 ligase Siah2 by p38 MAPK.</title>
        <authorList>
            <person name="Khurana A."/>
            <person name="Nakayama K."/>
            <person name="Williams S."/>
            <person name="Davis R.J."/>
            <person name="Mustelin T."/>
            <person name="Ronai Z."/>
        </authorList>
    </citation>
    <scope>FUNCTION IN PHOSPHORYLATION OF SIAH2</scope>
    <scope>ACTIVITY REGULATION</scope>
</reference>
<reference key="42">
    <citation type="journal article" date="2006" name="J. Cell Sci.">
        <title>Nuclear protein NP60 regulates p38 MAPK activity.</title>
        <authorList>
            <person name="Fu J."/>
            <person name="Yang Z."/>
            <person name="Wei J."/>
            <person name="Han J."/>
            <person name="Gu J."/>
        </authorList>
    </citation>
    <scope>INTERACTION WITH NP60</scope>
</reference>
<reference key="43">
    <citation type="journal article" date="2007" name="J. Biol. Chem.">
        <title>p38alpha antagonizes p38gamma activity through c-Jun-dependent ubiquitin-proteasome pathways in regulating Ras transformation and stress response.</title>
        <authorList>
            <person name="Qi X."/>
            <person name="Pohl N.M."/>
            <person name="Loesch M."/>
            <person name="Hou S."/>
            <person name="Li R."/>
            <person name="Qin J.Z."/>
            <person name="Cuenda A."/>
            <person name="Chen G."/>
        </authorList>
    </citation>
    <scope>FUNCTION</scope>
    <scope>PHOSPHORYLATION</scope>
    <scope>SUBCELLULAR LOCATION</scope>
    <scope>UBIQUITINATION</scope>
</reference>
<reference key="44">
    <citation type="journal article" date="2007" name="Science">
        <title>ATM and ATR substrate analysis reveals extensive protein networks responsive to DNA damage.</title>
        <authorList>
            <person name="Matsuoka S."/>
            <person name="Ballif B.A."/>
            <person name="Smogorzewska A."/>
            <person name="McDonald E.R. III"/>
            <person name="Hurov K.E."/>
            <person name="Luo J."/>
            <person name="Bakalarski C.E."/>
            <person name="Zhao Z."/>
            <person name="Solimini N."/>
            <person name="Lerenthal Y."/>
            <person name="Shiloh Y."/>
            <person name="Gygi S.P."/>
            <person name="Elledge S.J."/>
        </authorList>
    </citation>
    <scope>PHOSPHORYLATION [LARGE SCALE ANALYSIS] AT THR-263</scope>
    <scope>IDENTIFICATION BY MASS SPECTROMETRY [LARGE SCALE ANALYSIS]</scope>
    <source>
        <tissue>Embryonic kidney</tissue>
    </source>
</reference>
<reference key="45">
    <citation type="journal article" date="2008" name="J. Proteome Res.">
        <title>Phosphoproteome of resting human platelets.</title>
        <authorList>
            <person name="Zahedi R.P."/>
            <person name="Lewandrowski U."/>
            <person name="Wiesner J."/>
            <person name="Wortelkamp S."/>
            <person name="Moebius J."/>
            <person name="Schuetz C."/>
            <person name="Walter U."/>
            <person name="Gambaryan S."/>
            <person name="Sickmann A."/>
        </authorList>
    </citation>
    <scope>IDENTIFICATION BY MASS SPECTROMETRY [LARGE SCALE ANALYSIS]</scope>
    <source>
        <tissue>Platelet</tissue>
    </source>
</reference>
<reference key="46">
    <citation type="journal article" date="2008" name="Mol. Cell">
        <title>Kinase-selective enrichment enables quantitative phosphoproteomics of the kinome across the cell cycle.</title>
        <authorList>
            <person name="Daub H."/>
            <person name="Olsen J.V."/>
            <person name="Bairlein M."/>
            <person name="Gnad F."/>
            <person name="Oppermann F.S."/>
            <person name="Korner R."/>
            <person name="Greff Z."/>
            <person name="Keri G."/>
            <person name="Stemmann O."/>
            <person name="Mann M."/>
        </authorList>
    </citation>
    <scope>PHOSPHORYLATION [LARGE SCALE ANALYSIS] AT THR-16</scope>
    <scope>IDENTIFICATION BY MASS SPECTROMETRY [LARGE SCALE ANALYSIS]</scope>
    <source>
        <tissue>Cervix carcinoma</tissue>
    </source>
</reference>
<reference key="47">
    <citation type="journal article" date="2008" name="Proc. Natl. Acad. Sci. U.S.A.">
        <title>A quantitative atlas of mitotic phosphorylation.</title>
        <authorList>
            <person name="Dephoure N."/>
            <person name="Zhou C."/>
            <person name="Villen J."/>
            <person name="Beausoleil S.A."/>
            <person name="Bakalarski C.E."/>
            <person name="Elledge S.J."/>
            <person name="Gygi S.P."/>
        </authorList>
    </citation>
    <scope>PHOSPHORYLATION [LARGE SCALE ANALYSIS] AT THR-180 AND TYR-182</scope>
    <scope>IDENTIFICATION BY MASS SPECTROMETRY [LARGE SCALE ANALYSIS]</scope>
    <source>
        <tissue>Cervix carcinoma</tissue>
    </source>
</reference>
<reference key="48">
    <citation type="journal article" date="2009" name="Mol. Cell. Proteomics">
        <title>Large-scale proteomics analysis of the human kinome.</title>
        <authorList>
            <person name="Oppermann F.S."/>
            <person name="Gnad F."/>
            <person name="Olsen J.V."/>
            <person name="Hornberger R."/>
            <person name="Greff Z."/>
            <person name="Keri G."/>
            <person name="Mann M."/>
            <person name="Daub H."/>
        </authorList>
    </citation>
    <scope>IDENTIFICATION BY MASS SPECTROMETRY [LARGE SCALE ANALYSIS]</scope>
</reference>
<reference key="49">
    <citation type="journal article" date="2009" name="Sci. Signal.">
        <title>Quantitative phosphoproteomic analysis of T cell receptor signaling reveals system-wide modulation of protein-protein interactions.</title>
        <authorList>
            <person name="Mayya V."/>
            <person name="Lundgren D.H."/>
            <person name="Hwang S.-I."/>
            <person name="Rezaul K."/>
            <person name="Wu L."/>
            <person name="Eng J.K."/>
            <person name="Rodionov V."/>
            <person name="Han D.K."/>
        </authorList>
    </citation>
    <scope>PHOSPHORYLATION [LARGE SCALE ANALYSIS] AT THR-180 AND TYR-182</scope>
    <scope>IDENTIFICATION BY MASS SPECTROMETRY [LARGE SCALE ANALYSIS]</scope>
    <source>
        <tissue>Leukemic T-cell</tissue>
    </source>
</reference>
<reference key="50">
    <citation type="journal article" date="2010" name="EMBO J.">
        <title>Coordinated regulation of autophagy by p38alpha MAPK through mAtg9 and p38IP.</title>
        <authorList>
            <person name="Webber J.L."/>
            <person name="Tooze S.A."/>
        </authorList>
    </citation>
    <scope>FUNCTION IN INHIBITION OF AUTOPHAGY</scope>
</reference>
<reference key="51">
    <citation type="journal article" date="2010" name="Mol. Cell">
        <title>DNA damage activates a spatially distinct late cytoplasmic cell-cycle checkpoint network controlled by MK2-mediated RNA stabilization.</title>
        <authorList>
            <person name="Reinhardt H.C."/>
            <person name="Hasskamp P."/>
            <person name="Schmedding I."/>
            <person name="Morandell S."/>
            <person name="van Vugt M.A."/>
            <person name="Wang X."/>
            <person name="Linding R."/>
            <person name="Ong S.E."/>
            <person name="Weaver D."/>
            <person name="Carr S.A."/>
            <person name="Yaffe M.B."/>
        </authorList>
    </citation>
    <scope>FUNCTION IN PHOSPHORYLATION OF TIAR</scope>
</reference>
<reference key="52">
    <citation type="journal article" date="2010" name="Mol. Cell">
        <title>Direct activation of TACE-mediated ectodomain shedding by p38 MAP kinase regulates EGF receptor-dependent cell proliferation.</title>
        <authorList>
            <person name="Xu P."/>
            <person name="Derynck R."/>
        </authorList>
    </citation>
    <scope>INTERACTION WITH ADAM17</scope>
    <scope>FUNCTION IN PHOSPHORYLATION OF ADAM17</scope>
</reference>
<reference key="53">
    <citation type="journal article" date="2010" name="Sci. Signal.">
        <title>Quantitative phosphoproteomics reveals widespread full phosphorylation site occupancy during mitosis.</title>
        <authorList>
            <person name="Olsen J.V."/>
            <person name="Vermeulen M."/>
            <person name="Santamaria A."/>
            <person name="Kumar C."/>
            <person name="Miller M.L."/>
            <person name="Jensen L.J."/>
            <person name="Gnad F."/>
            <person name="Cox J."/>
            <person name="Jensen T.S."/>
            <person name="Nigg E.A."/>
            <person name="Brunak S."/>
            <person name="Mann M."/>
        </authorList>
    </citation>
    <scope>ACETYLATION [LARGE SCALE ANALYSIS] AT SER-2</scope>
    <scope>PHOSPHORYLATION [LARGE SCALE ANALYSIS] AT SER-2; THR-180 AND TYR-182</scope>
    <scope>CLEAVAGE OF INITIATOR METHIONINE [LARGE SCALE ANALYSIS]</scope>
    <scope>IDENTIFICATION BY MASS SPECTROMETRY [LARGE SCALE ANALYSIS]</scope>
    <source>
        <tissue>Cervix carcinoma</tissue>
    </source>
</reference>
<reference key="54">
    <citation type="journal article" date="2011" name="BMC Syst. Biol.">
        <title>Initial characterization of the human central proteome.</title>
        <authorList>
            <person name="Burkard T.R."/>
            <person name="Planyavsky M."/>
            <person name="Kaupe I."/>
            <person name="Breitwieser F.P."/>
            <person name="Buerckstuemmer T."/>
            <person name="Bennett K.L."/>
            <person name="Superti-Furga G."/>
            <person name="Colinge J."/>
        </authorList>
    </citation>
    <scope>IDENTIFICATION BY MASS SPECTROMETRY [LARGE SCALE ANALYSIS]</scope>
</reference>
<reference key="55">
    <citation type="journal article" date="2011" name="J. Biol. Chem.">
        <title>A-kinase anchoring protein (AKAP)-Lbc anchors a PKN-based signaling complex involved in alpha1-adrenergic receptor-induced p38 activation.</title>
        <authorList>
            <person name="Cariolato L."/>
            <person name="Cavin S."/>
            <person name="Diviani D."/>
        </authorList>
    </citation>
    <scope>IDENTIFICATION IN A COMPLEX WITH AKAP13; PKN1; ZAK AND MAP2K3</scope>
</reference>
<reference key="56">
    <citation type="journal article" date="2011" name="J. Biol. Chem.">
        <title>The Mycobacterium tuberculosis early secreted antigenic target of 6 kDa inhibits T cell interferon-gamma production through the p38 mitogen-activated protein kinase pathway.</title>
        <authorList>
            <person name="Peng H."/>
            <person name="Wang X."/>
            <person name="Barnes P.F."/>
            <person name="Tang H."/>
            <person name="Townsend J.C."/>
            <person name="Samten B."/>
        </authorList>
    </citation>
    <scope>FUNCTION (MICROBIAL INFECTION)</scope>
    <source>
        <tissue>T-cell</tissue>
    </source>
</reference>
<reference key="57">
    <citation type="journal article" date="2011" name="Mol. Cell. Biol.">
        <title>Acetylation of a conserved lysine residue in the ATP binding pocket of p38 augments its kinase activity during hypertrophy of cardiomyocytes.</title>
        <authorList>
            <person name="Pillai V.B."/>
            <person name="Sundaresan N.R."/>
            <person name="Samant S.A."/>
            <person name="Wolfgeher D."/>
            <person name="Trivedi C.M."/>
            <person name="Gupta M.P."/>
        </authorList>
    </citation>
    <scope>ACETYLATION AT LYS-53 AND LYS-152 BY KAT2B/PCAF AND EP300</scope>
    <scope>DEACETYLATION BY HDAC3</scope>
</reference>
<reference key="58">
    <citation type="journal article" date="2011" name="PLoS ONE">
        <title>LZAP inhibits p38 MAPK (p38) phosphorylation and activity by facilitating p38 association with the wild-type p53 induced phosphatase 1 (WIP1).</title>
        <authorList>
            <person name="An H."/>
            <person name="Lu X."/>
            <person name="Liu D."/>
            <person name="Yarbrough W.G."/>
        </authorList>
    </citation>
    <scope>INTERACTION WITH CDK5RAP3 AND PPM1D</scope>
    <scope>DEPHOSPHORYLATION BY PPM1D</scope>
</reference>
<reference key="59">
    <citation type="journal article" date="2002" name="Biol. Chem.">
        <title>In the cellular garden of forking paths: how p38 MAPKs signal for downstream assistance.</title>
        <authorList>
            <person name="Shi Y."/>
            <person name="Gaestel M."/>
        </authorList>
    </citation>
    <scope>REVIEW ON FUNCTION</scope>
</reference>
<reference key="60">
    <citation type="journal article" date="2010" name="Biochem. J.">
        <title>Mechanisms and functions of p38 MAPK signalling.</title>
        <authorList>
            <person name="Cuadrado A."/>
            <person name="Nebreda A.R."/>
        </authorList>
    </citation>
    <scope>REVIEW ON ACTIVITY REGULATION</scope>
    <scope>REVIEW ON FUNCTION</scope>
</reference>
<reference key="61">
    <citation type="journal article" date="2013" name="J. Proteome Res.">
        <title>Toward a comprehensive characterization of a human cancer cell phosphoproteome.</title>
        <authorList>
            <person name="Zhou H."/>
            <person name="Di Palma S."/>
            <person name="Preisinger C."/>
            <person name="Peng M."/>
            <person name="Polat A.N."/>
            <person name="Heck A.J."/>
            <person name="Mohammed S."/>
        </authorList>
    </citation>
    <scope>PHOSPHORYLATION [LARGE SCALE ANALYSIS] AT SER-2; THR-180 AND TYR-182</scope>
    <scope>IDENTIFICATION BY MASS SPECTROMETRY [LARGE SCALE ANALYSIS]</scope>
    <source>
        <tissue>Cervix carcinoma</tissue>
        <tissue>Erythroleukemia</tissue>
    </source>
</reference>
<reference key="62">
    <citation type="journal article" date="2014" name="J. Proteomics">
        <title>An enzyme assisted RP-RPLC approach for in-depth analysis of human liver phosphoproteome.</title>
        <authorList>
            <person name="Bian Y."/>
            <person name="Song C."/>
            <person name="Cheng K."/>
            <person name="Dong M."/>
            <person name="Wang F."/>
            <person name="Huang J."/>
            <person name="Sun D."/>
            <person name="Wang L."/>
            <person name="Ye M."/>
            <person name="Zou H."/>
        </authorList>
    </citation>
    <scope>IDENTIFICATION BY MASS SPECTROMETRY [LARGE SCALE ANALYSIS]</scope>
    <source>
        <tissue>Liver</tissue>
    </source>
</reference>
<reference key="63">
    <citation type="journal article" date="2015" name="Proteomics">
        <title>N-terminome analysis of the human mitochondrial proteome.</title>
        <authorList>
            <person name="Vaca Jacome A.S."/>
            <person name="Rabilloud T."/>
            <person name="Schaeffer-Reiss C."/>
            <person name="Rompais M."/>
            <person name="Ayoub D."/>
            <person name="Lane L."/>
            <person name="Bairoch A."/>
            <person name="Van Dorsselaer A."/>
            <person name="Carapito C."/>
        </authorList>
    </citation>
    <scope>IDENTIFICATION BY MASS SPECTROMETRY [LARGE SCALE ANALYSIS]</scope>
</reference>
<reference key="64">
    <citation type="journal article" date="2019" name="J. Mol. Cell. Cardiol.">
        <title>MicroRNA-143-3p promotes human cardiac fibrosis via targeting sprouty3 after myocardial infarction.</title>
        <authorList>
            <person name="Li C."/>
            <person name="Li J."/>
            <person name="Xue K."/>
            <person name="Zhang J."/>
            <person name="Wang C."/>
            <person name="Zhang Q."/>
            <person name="Chen X."/>
            <person name="Gao C."/>
            <person name="Yu X."/>
            <person name="Sun L."/>
        </authorList>
    </citation>
    <scope>SUBCELLULAR LOCATION</scope>
</reference>
<reference key="65">
    <citation type="journal article" date="2022" name="Science">
        <title>ZAKalpha-driven ribotoxic stress response activates the human NLRP1 inflammasome.</title>
        <authorList>
            <person name="Robinson K.S."/>
            <person name="Toh G.A."/>
            <person name="Rozario P."/>
            <person name="Chua R."/>
            <person name="Bauernfried S."/>
            <person name="Sun Z."/>
            <person name="Firdaus M.J."/>
            <person name="Bayat S."/>
            <person name="Nadkarni R."/>
            <person name="Poh Z.S."/>
            <person name="Tham K.C."/>
            <person name="Harapas C.R."/>
            <person name="Lim C.K."/>
            <person name="Chu W."/>
            <person name="Tay C.W.S."/>
            <person name="Tan K.Y."/>
            <person name="Zhao T."/>
            <person name="Bonnard C."/>
            <person name="Sobota R."/>
            <person name="Connolly J.E."/>
            <person name="Common J."/>
            <person name="Masters S.L."/>
            <person name="Chen K.W."/>
            <person name="Ho L."/>
            <person name="Wu B."/>
            <person name="Hornung V."/>
            <person name="Zhong F.L."/>
        </authorList>
    </citation>
    <scope>FUNCTION</scope>
    <scope>CATALYTIC ACTIVITY</scope>
</reference>
<reference key="66">
    <citation type="journal article" date="1996" name="J. Biol. Chem.">
        <title>Crystal structure of p38 mitogen-activated protein kinase.</title>
        <authorList>
            <person name="Wilson K.P."/>
            <person name="Fitzgibbon M.J."/>
            <person name="Caron P.R."/>
            <person name="Griffith J.P."/>
            <person name="Chen W."/>
            <person name="McCaffrey P.G."/>
            <person name="Chambers S.P."/>
            <person name="Su M.S.-S."/>
        </authorList>
    </citation>
    <scope>X-RAY CRYSTALLOGRAPHY (2.3 ANGSTROMS)</scope>
</reference>
<reference key="67">
    <citation type="journal article" date="1997" name="Nat. Struct. Biol.">
        <title>A highly specific inhibitor of human p38 MAP kinase binds in the ATP pocket.</title>
        <authorList>
            <person name="Tong L."/>
            <person name="Pav S."/>
            <person name="White D.M."/>
            <person name="Rogers S."/>
            <person name="Crane K.M."/>
            <person name="Cywin C.L."/>
            <person name="Brown M.L."/>
            <person name="Pargellis C.A."/>
        </authorList>
    </citation>
    <scope>X-RAY CRYSTALLOGRAPHY (2.0 ANGSTROMS)</scope>
</reference>
<reference key="68">
    <citation type="journal article" date="1998" name="Structure">
        <title>Structural basis of inhibitor selectivity in MAP kinases.</title>
        <authorList>
            <person name="Wang Z."/>
            <person name="Canagarajah B.J."/>
            <person name="Boehm J.C."/>
            <person name="Kassisa S."/>
            <person name="Cobb M.H."/>
            <person name="Young P.R."/>
            <person name="Abdel-Meguid S."/>
            <person name="Adams J.L."/>
            <person name="Goldsmith E.J."/>
        </authorList>
    </citation>
    <scope>X-RAY CRYSTALLOGRAPHY (2.5 ANGSTROMS)</scope>
</reference>
<reference key="69">
    <citation type="journal article" date="2000" name="J. Med. Chem.">
        <title>Binding mode of the 4-anilinoquinazoline class of protein kinase inhibitor: X-ray crystallographic studies of 4-anilinoquinazolines bound to cyclin-dependent kinase 2 and p38 kinase.</title>
        <authorList>
            <person name="Shewchuk L."/>
            <person name="Hassell A."/>
            <person name="Wisely B."/>
            <person name="Rocque W."/>
            <person name="Holmes W."/>
            <person name="Veal J."/>
            <person name="Kuyper L.F."/>
        </authorList>
    </citation>
    <scope>X-RAY CRYSTALLOGRAPHY (2.60 ANGSTROMS)</scope>
</reference>
<reference key="70">
    <citation type="journal article" date="2002" name="Nat. Struct. Biol.">
        <title>Inhibition of p38 MAP kinase by utilizing a novel allosteric binding site.</title>
        <authorList>
            <person name="Pargellis C."/>
            <person name="Tong L."/>
            <person name="Churchill L."/>
            <person name="Cirillo P.F."/>
            <person name="Gilmore T."/>
            <person name="Graham A.G."/>
            <person name="Grob P.M."/>
            <person name="Hickey E.R."/>
            <person name="Moss N."/>
            <person name="Pav S."/>
            <person name="Regan J."/>
        </authorList>
    </citation>
    <scope>X-RAY CRYSTALLOGRAPHY (2.50 ANGSTROMS)</scope>
    <scope>ACTIVITY REGULATION</scope>
</reference>
<reference key="71">
    <citation type="journal article" date="2003" name="Bioorg. Med. Chem. Lett.">
        <title>Design and synthesis of potent, orally bioavailable dihydroquinazolinone inhibitors of p38 MAP kinase.</title>
        <authorList>
            <person name="Stelmach J.E."/>
            <person name="Liu L."/>
            <person name="Patel S.B."/>
            <person name="Pivnichny J.V."/>
            <person name="Scapin G."/>
            <person name="Singh S."/>
            <person name="Hop C.E."/>
            <person name="Wang Z."/>
            <person name="Strauss J.R."/>
            <person name="Cameron P.M."/>
            <person name="Nichols E.A."/>
            <person name="O'Keefe S.J."/>
            <person name="O'Neill E.A."/>
            <person name="Schmatz D.M."/>
            <person name="Schwartz C.D."/>
            <person name="Thompson C.M."/>
            <person name="Zaller D.M."/>
            <person name="Doherty J.B."/>
        </authorList>
    </citation>
    <scope>X-RAY CRYSTALLOGRAPHY (2.40 ANGSTROMS)</scope>
    <scope>ACTIVITY REGULATION</scope>
</reference>
<reference key="72">
    <citation type="journal article" date="2003" name="J. Med. Chem.">
        <title>Design and synthesis of 4-azaindoles as inhibitors of p38 MAP kinase.</title>
        <authorList>
            <person name="Trejo A."/>
            <person name="Arzeno H."/>
            <person name="Browner M."/>
            <person name="Chanda S."/>
            <person name="Cheng S."/>
            <person name="Comer D.D."/>
            <person name="Dalrymple S.A."/>
            <person name="Dunten P."/>
            <person name="Lafargue J."/>
            <person name="Lovejoy B."/>
            <person name="Freire-Moar J."/>
            <person name="Lim J."/>
            <person name="Mcintosh J."/>
            <person name="Miller J."/>
            <person name="Papp E."/>
            <person name="Reuter D."/>
            <person name="Roberts R."/>
            <person name="Sanpablo F."/>
            <person name="Saunders J."/>
            <person name="Song K."/>
            <person name="Villasenor A."/>
            <person name="Warren S.D."/>
            <person name="Welch M."/>
            <person name="Weller P."/>
            <person name="Whiteley P.E."/>
            <person name="Zeng L."/>
            <person name="Goldstein D.M."/>
        </authorList>
    </citation>
    <scope>X-RAY CRYSTALLOGRAPHY (2.10 ANGSTROMS)</scope>
    <scope>ACTIVITY REGULATION</scope>
</reference>
<reference evidence="58 59 60" key="73">
    <citation type="journal article" date="2003" name="Nat. Struct. Biol.">
        <title>Structural basis for p38alpha MAP kinase quinazolinone and pyridol-pyrimidine inhibitor specificity.</title>
        <authorList>
            <person name="Fitzgerald C.E."/>
            <person name="Patel S.B."/>
            <person name="Becker J.W."/>
            <person name="Cameron P.M."/>
            <person name="Zaller D."/>
            <person name="Pikounis V.B."/>
            <person name="O'Keefe S.J."/>
            <person name="Scapin G."/>
        </authorList>
    </citation>
    <scope>X-RAY CRYSTALLOGRAPHY (2.10 ANGSTROMS) IN COMPLEX WITH INHIBITOR</scope>
</reference>
<reference key="74">
    <citation type="journal article" date="2004" name="Biochim. Biophys. Acta">
        <title>Lattice stabilization and enhanced diffraction in human p38 alpha crystals by protein engineering.</title>
        <authorList>
            <person name="Patel S.B."/>
            <person name="Cameron P.M."/>
            <person name="Frantz-Wattley B."/>
            <person name="O'Neill E."/>
            <person name="Becker J.W."/>
            <person name="Scapin G."/>
        </authorList>
    </citation>
    <scope>X-RAY CRYSTALLOGRAPHY (2.00 ANGSTROMS)</scope>
    <scope>ACTIVITY REGULATION</scope>
</reference>
<reference evidence="63 64 65 66" key="75">
    <citation type="journal article" date="2005" name="Biochemistry">
        <title>Prevention of MKK6-dependent activation by binding to p38alpha MAP kinase.</title>
        <authorList>
            <person name="Sullivan J.E."/>
            <person name="Holdgate G.A."/>
            <person name="Campbell D."/>
            <person name="Timms D."/>
            <person name="Gerhardt S."/>
            <person name="Breed J."/>
            <person name="Breeze A.L."/>
            <person name="Bermingham A."/>
            <person name="Pauptit R.A."/>
            <person name="Norman R.A."/>
            <person name="Embrey K.J."/>
            <person name="Read J."/>
            <person name="VanScyoc W.S."/>
            <person name="Ward W.H."/>
        </authorList>
    </citation>
    <scope>X-RAY CRYSTALLOGRAPHY (2.10 ANGSTROMS) OF 2-359 IN COMPLEX WITH INHIBITOR</scope>
</reference>
<reference key="76">
    <citation type="journal article" date="2005" name="Bioorg. Med. Chem. Lett.">
        <title>Design and synthesis of potent pyridazine inhibitors of p38 MAP kinase.</title>
        <authorList>
            <person name="Tamayo N."/>
            <person name="Liao L."/>
            <person name="Goldberg M."/>
            <person name="Powers D."/>
            <person name="Tudor Y.Y."/>
            <person name="Yu V."/>
            <person name="Wong L.M."/>
            <person name="Henkle B."/>
            <person name="Middleton S."/>
            <person name="Syed R."/>
            <person name="Harvey T."/>
            <person name="Jang G."/>
            <person name="Hungate R."/>
            <person name="Dominguez C."/>
        </authorList>
    </citation>
    <scope>X-RAY CRYSTALLOGRAPHY (2.00 ANGSTROMS) OF 2-359</scope>
    <scope>ACTIVITY REGULATION</scope>
</reference>
<reference key="77">
    <citation type="journal article" date="2005" name="Bioorg. Med. Chem. Lett.">
        <title>Two classes of p38alpha MAP kinase inhibitors having a common diphenylether core but exhibiting divergent binding modes.</title>
        <authorList>
            <person name="Michelotti E.L."/>
            <person name="Moffett K.K."/>
            <person name="Nguyen D."/>
            <person name="Kelly M.J."/>
            <person name="Shetty R."/>
            <person name="Chai X."/>
            <person name="Northrop K."/>
            <person name="Namboodiri V."/>
            <person name="Campbell B."/>
            <person name="Flynn G.A."/>
            <person name="Fujimoto T."/>
            <person name="Hollinger F.P."/>
            <person name="Bukhtiyarova M."/>
            <person name="Springman E.B."/>
            <person name="Karpusas M."/>
        </authorList>
    </citation>
    <scope>X-RAY CRYSTALLOGRAPHY (2.00 ANGSTROMS)</scope>
    <scope>ACTIVITY REGULATION</scope>
</reference>
<reference evidence="61 62" key="78">
    <citation type="journal article" date="2005" name="J. Med. Chem.">
        <title>Fragment-based lead discovery using X-ray crystallography.</title>
        <authorList>
            <person name="Hartshorn M.J."/>
            <person name="Murray C.W."/>
            <person name="Cleasby A."/>
            <person name="Frederickson M."/>
            <person name="Tickle I.J."/>
            <person name="Jhoti H."/>
        </authorList>
    </citation>
    <scope>X-RAY CRYSTALLOGRAPHY (2.16 ANGSTROMS) OF 2-359 IN COMPLEX WITH INHIBITOR</scope>
</reference>
<reference key="79">
    <citation type="journal article" date="2007" name="J. Biol. Chem.">
        <title>Crystal structure of the p38 alpha-MAPKAP kinase 2 heterodimer.</title>
        <authorList>
            <person name="ter Haar E."/>
            <person name="Prabhakar P."/>
            <person name="Liu X."/>
            <person name="Lepre C."/>
        </authorList>
    </citation>
    <scope>X-RAY CRYSTALLOGRAPHY (4.0 ANGSTROMS) OF 2-359 IN COMPLEX WITH MAPKAPK2</scope>
</reference>
<reference key="80">
    <citation type="journal article" date="2007" name="J. Biol. Chem.">
        <authorList>
            <person name="ter Haar E."/>
            <person name="Prabhakar P."/>
            <person name="Liu X."/>
            <person name="Lepre C."/>
        </authorList>
    </citation>
    <scope>ERRATUM OF PUBMED:17255097</scope>
</reference>
<reference key="81">
    <citation type="journal article" date="2007" name="Nature">
        <title>Patterns of somatic mutation in human cancer genomes.</title>
        <authorList>
            <person name="Greenman C."/>
            <person name="Stephens P."/>
            <person name="Smith R."/>
            <person name="Dalgliesh G.L."/>
            <person name="Hunter C."/>
            <person name="Bignell G."/>
            <person name="Davies H."/>
            <person name="Teague J."/>
            <person name="Butler A."/>
            <person name="Stevens C."/>
            <person name="Edkins S."/>
            <person name="O'Meara S."/>
            <person name="Vastrik I."/>
            <person name="Schmidt E.E."/>
            <person name="Avis T."/>
            <person name="Barthorpe S."/>
            <person name="Bhamra G."/>
            <person name="Buck G."/>
            <person name="Choudhury B."/>
            <person name="Clements J."/>
            <person name="Cole J."/>
            <person name="Dicks E."/>
            <person name="Forbes S."/>
            <person name="Gray K."/>
            <person name="Halliday K."/>
            <person name="Harrison R."/>
            <person name="Hills K."/>
            <person name="Hinton J."/>
            <person name="Jenkinson A."/>
            <person name="Jones D."/>
            <person name="Menzies A."/>
            <person name="Mironenko T."/>
            <person name="Perry J."/>
            <person name="Raine K."/>
            <person name="Richardson D."/>
            <person name="Shepherd R."/>
            <person name="Small A."/>
            <person name="Tofts C."/>
            <person name="Varian J."/>
            <person name="Webb T."/>
            <person name="West S."/>
            <person name="Widaa S."/>
            <person name="Yates A."/>
            <person name="Cahill D.P."/>
            <person name="Louis D.N."/>
            <person name="Goldstraw P."/>
            <person name="Nicholson A.G."/>
            <person name="Brasseur F."/>
            <person name="Looijenga L."/>
            <person name="Weber B.L."/>
            <person name="Chiew Y.-E."/>
            <person name="DeFazio A."/>
            <person name="Greaves M.F."/>
            <person name="Green A.R."/>
            <person name="Campbell P."/>
            <person name="Birney E."/>
            <person name="Easton D.F."/>
            <person name="Chenevix-Trench G."/>
            <person name="Tan M.-H."/>
            <person name="Khoo S.K."/>
            <person name="Teh B.T."/>
            <person name="Yuen S.T."/>
            <person name="Leung S.Y."/>
            <person name="Wooster R."/>
            <person name="Futreal P.A."/>
            <person name="Stratton M.R."/>
        </authorList>
    </citation>
    <scope>VARIANTS [LARGE SCALE ANALYSIS] VAL-51; ARG-322 AND GLY-343</scope>
</reference>
<evidence type="ECO:0000250" key="1">
    <source>
        <dbReference type="UniProtKB" id="P47811"/>
    </source>
</evidence>
<evidence type="ECO:0000255" key="2">
    <source>
        <dbReference type="PROSITE-ProRule" id="PRU00159"/>
    </source>
</evidence>
<evidence type="ECO:0000269" key="3">
    <source>
    </source>
</evidence>
<evidence type="ECO:0000269" key="4">
    <source>
    </source>
</evidence>
<evidence type="ECO:0000269" key="5">
    <source>
    </source>
</evidence>
<evidence type="ECO:0000269" key="6">
    <source>
    </source>
</evidence>
<evidence type="ECO:0000269" key="7">
    <source>
    </source>
</evidence>
<evidence type="ECO:0000269" key="8">
    <source>
    </source>
</evidence>
<evidence type="ECO:0000269" key="9">
    <source>
    </source>
</evidence>
<evidence type="ECO:0000269" key="10">
    <source>
    </source>
</evidence>
<evidence type="ECO:0000269" key="11">
    <source>
    </source>
</evidence>
<evidence type="ECO:0000269" key="12">
    <source>
    </source>
</evidence>
<evidence type="ECO:0000269" key="13">
    <source>
    </source>
</evidence>
<evidence type="ECO:0000269" key="14">
    <source>
    </source>
</evidence>
<evidence type="ECO:0000269" key="15">
    <source>
    </source>
</evidence>
<evidence type="ECO:0000269" key="16">
    <source>
    </source>
</evidence>
<evidence type="ECO:0000269" key="17">
    <source>
    </source>
</evidence>
<evidence type="ECO:0000269" key="18">
    <source>
    </source>
</evidence>
<evidence type="ECO:0000269" key="19">
    <source>
    </source>
</evidence>
<evidence type="ECO:0000269" key="20">
    <source>
    </source>
</evidence>
<evidence type="ECO:0000269" key="21">
    <source>
    </source>
</evidence>
<evidence type="ECO:0000269" key="22">
    <source>
    </source>
</evidence>
<evidence type="ECO:0000269" key="23">
    <source>
    </source>
</evidence>
<evidence type="ECO:0000269" key="24">
    <source>
    </source>
</evidence>
<evidence type="ECO:0000269" key="25">
    <source>
    </source>
</evidence>
<evidence type="ECO:0000269" key="26">
    <source>
    </source>
</evidence>
<evidence type="ECO:0000269" key="27">
    <source>
    </source>
</evidence>
<evidence type="ECO:0000269" key="28">
    <source>
    </source>
</evidence>
<evidence type="ECO:0000269" key="29">
    <source>
    </source>
</evidence>
<evidence type="ECO:0000269" key="30">
    <source>
    </source>
</evidence>
<evidence type="ECO:0000269" key="31">
    <source>
    </source>
</evidence>
<evidence type="ECO:0000269" key="32">
    <source>
    </source>
</evidence>
<evidence type="ECO:0000269" key="33">
    <source>
    </source>
</evidence>
<evidence type="ECO:0000269" key="34">
    <source>
    </source>
</evidence>
<evidence type="ECO:0000269" key="35">
    <source>
    </source>
</evidence>
<evidence type="ECO:0000269" key="36">
    <source>
    </source>
</evidence>
<evidence type="ECO:0000269" key="37">
    <source>
    </source>
</evidence>
<evidence type="ECO:0000269" key="38">
    <source>
    </source>
</evidence>
<evidence type="ECO:0000269" key="39">
    <source>
    </source>
</evidence>
<evidence type="ECO:0000269" key="40">
    <source>
    </source>
</evidence>
<evidence type="ECO:0000269" key="41">
    <source>
    </source>
</evidence>
<evidence type="ECO:0000269" key="42">
    <source>
    </source>
</evidence>
<evidence type="ECO:0000269" key="43">
    <source>
    </source>
</evidence>
<evidence type="ECO:0000269" key="44">
    <source>
    </source>
</evidence>
<evidence type="ECO:0000269" key="45">
    <source>
    </source>
</evidence>
<evidence type="ECO:0000269" key="46">
    <source>
    </source>
</evidence>
<evidence type="ECO:0000269" key="47">
    <source>
    </source>
</evidence>
<evidence type="ECO:0000269" key="48">
    <source>
    </source>
</evidence>
<evidence type="ECO:0000269" key="49">
    <source>
    </source>
</evidence>
<evidence type="ECO:0000269" key="50">
    <source>
    </source>
</evidence>
<evidence type="ECO:0000269" key="51">
    <source>
    </source>
</evidence>
<evidence type="ECO:0000303" key="52">
    <source>
    </source>
</evidence>
<evidence type="ECO:0000303" key="53">
    <source>
    </source>
</evidence>
<evidence type="ECO:0000303" key="54">
    <source>
    </source>
</evidence>
<evidence type="ECO:0000303" key="55">
    <source>
    </source>
</evidence>
<evidence type="ECO:0000305" key="56"/>
<evidence type="ECO:0000312" key="57">
    <source>
        <dbReference type="HGNC" id="HGNC:6876"/>
    </source>
</evidence>
<evidence type="ECO:0007744" key="58">
    <source>
        <dbReference type="PDB" id="1OUK"/>
    </source>
</evidence>
<evidence type="ECO:0007744" key="59">
    <source>
        <dbReference type="PDB" id="1OUY"/>
    </source>
</evidence>
<evidence type="ECO:0007744" key="60">
    <source>
        <dbReference type="PDB" id="1OVE"/>
    </source>
</evidence>
<evidence type="ECO:0007744" key="61">
    <source>
        <dbReference type="PDB" id="1W7H"/>
    </source>
</evidence>
<evidence type="ECO:0007744" key="62">
    <source>
        <dbReference type="PDB" id="1WBO"/>
    </source>
</evidence>
<evidence type="ECO:0007744" key="63">
    <source>
        <dbReference type="PDB" id="2BAJ"/>
    </source>
</evidence>
<evidence type="ECO:0007744" key="64">
    <source>
        <dbReference type="PDB" id="2BAK"/>
    </source>
</evidence>
<evidence type="ECO:0007744" key="65">
    <source>
        <dbReference type="PDB" id="2BAL"/>
    </source>
</evidence>
<evidence type="ECO:0007744" key="66">
    <source>
        <dbReference type="PDB" id="2BAQ"/>
    </source>
</evidence>
<evidence type="ECO:0007744" key="67">
    <source>
    </source>
</evidence>
<evidence type="ECO:0007744" key="68">
    <source>
    </source>
</evidence>
<evidence type="ECO:0007744" key="69">
    <source>
    </source>
</evidence>
<evidence type="ECO:0007744" key="70">
    <source>
    </source>
</evidence>
<evidence type="ECO:0007744" key="71">
    <source>
    </source>
</evidence>
<evidence type="ECO:0007744" key="72">
    <source>
    </source>
</evidence>
<evidence type="ECO:0007829" key="73">
    <source>
        <dbReference type="PDB" id="1ZZL"/>
    </source>
</evidence>
<evidence type="ECO:0007829" key="74">
    <source>
        <dbReference type="PDB" id="2FST"/>
    </source>
</evidence>
<evidence type="ECO:0007829" key="75">
    <source>
        <dbReference type="PDB" id="2RG6"/>
    </source>
</evidence>
<evidence type="ECO:0007829" key="76">
    <source>
        <dbReference type="PDB" id="3BV2"/>
    </source>
</evidence>
<evidence type="ECO:0007829" key="77">
    <source>
        <dbReference type="PDB" id="3FMK"/>
    </source>
</evidence>
<evidence type="ECO:0007829" key="78">
    <source>
        <dbReference type="PDB" id="3LFF"/>
    </source>
</evidence>
<evidence type="ECO:0007829" key="79">
    <source>
        <dbReference type="PDB" id="4EHV"/>
    </source>
</evidence>
<evidence type="ECO:0007829" key="80">
    <source>
        <dbReference type="PDB" id="4GEO"/>
    </source>
</evidence>
<evidence type="ECO:0007829" key="81">
    <source>
        <dbReference type="PDB" id="5XYY"/>
    </source>
</evidence>
<evidence type="ECO:0007829" key="82">
    <source>
        <dbReference type="PDB" id="6SFI"/>
    </source>
</evidence>
<accession>Q16539</accession>
<accession>A6ZJ92</accession>
<accession>A8K6P4</accession>
<accession>B0LPH0</accession>
<accession>B5TY32</accession>
<accession>O60776</accession>
<accession>Q13083</accession>
<accession>Q14084</accession>
<accession>Q8TDX0</accession>
<sequence length="360" mass="41293">MSQERPTFYRQELNKTIWEVPERYQNLSPVGSGAYGSVCAAFDTKTGLRVAVKKLSRPFQSIIHAKRTYRELRLLKHMKHENVIGLLDVFTPARSLEEFNDVYLVTHLMGADLNNIVKCQKLTDDHVQFLIYQILRGLKYIHSADIIHRDLKPSNLAVNEDCELKILDFGLARHTDDEMTGYVATRWYRAPEIMLNWMHYNQTVDIWSVGCIMAELLTGRTLFPGTDHIDQLKLILRLVGTPGAELLKKISSESARNYIQSLTQMPKMNFANVFIGANPLAVDLLEKMLVLDSDKRITAAQALAHAYFAQYHDPDDEPVADPYDQSFESRDLLIDEWKSLTYDEVISFVPPPLDQEEMES</sequence>
<protein>
    <recommendedName>
        <fullName evidence="56">Mitogen-activated protein kinase 14</fullName>
        <shortName>MAP kinase 14</shortName>
        <shortName>MAPK 14</shortName>
        <ecNumber evidence="8 21 44 45">2.7.11.24</ecNumber>
    </recommendedName>
    <alternativeName>
        <fullName>Cytokine suppressive anti-inflammatory drug-binding protein</fullName>
        <shortName>CSAID-binding protein</shortName>
        <shortName>CSBP</shortName>
    </alternativeName>
    <alternativeName>
        <fullName>MAP kinase MXI2</fullName>
    </alternativeName>
    <alternativeName>
        <fullName>MAX-interacting protein 2</fullName>
    </alternativeName>
    <alternativeName>
        <fullName>Mitogen-activated protein kinase p38 alpha</fullName>
        <shortName>MAP kinase p38 alpha</shortName>
    </alternativeName>
    <alternativeName>
        <fullName>Stress-activated protein kinase 2a</fullName>
        <shortName>SAPK2a</shortName>
    </alternativeName>
</protein>
<organism>
    <name type="scientific">Homo sapiens</name>
    <name type="common">Human</name>
    <dbReference type="NCBI Taxonomy" id="9606"/>
    <lineage>
        <taxon>Eukaryota</taxon>
        <taxon>Metazoa</taxon>
        <taxon>Chordata</taxon>
        <taxon>Craniata</taxon>
        <taxon>Vertebrata</taxon>
        <taxon>Euteleostomi</taxon>
        <taxon>Mammalia</taxon>
        <taxon>Eutheria</taxon>
        <taxon>Euarchontoglires</taxon>
        <taxon>Primates</taxon>
        <taxon>Haplorrhini</taxon>
        <taxon>Catarrhini</taxon>
        <taxon>Hominidae</taxon>
        <taxon>Homo</taxon>
    </lineage>
</organism>
<gene>
    <name evidence="57" type="primary">MAPK14</name>
    <name type="synonym">CSBP</name>
    <name type="synonym">CSBP1</name>
    <name type="synonym">CSBP2</name>
    <name type="synonym">CSPB1</name>
    <name type="synonym">MXI2</name>
    <name type="synonym">SAPK2A</name>
</gene>